<gene>
    <name type="primary">PTPN1</name>
    <name type="synonym">PTP1B</name>
</gene>
<proteinExistence type="evidence at protein level"/>
<protein>
    <recommendedName>
        <fullName>Tyrosine-protein phosphatase non-receptor type 1</fullName>
        <ecNumber>3.1.3.48</ecNumber>
    </recommendedName>
    <alternativeName>
        <fullName>Protein-tyrosine phosphatase 1B</fullName>
        <shortName>PTP-1B</shortName>
    </alternativeName>
</protein>
<organism>
    <name type="scientific">Homo sapiens</name>
    <name type="common">Human</name>
    <dbReference type="NCBI Taxonomy" id="9606"/>
    <lineage>
        <taxon>Eukaryota</taxon>
        <taxon>Metazoa</taxon>
        <taxon>Chordata</taxon>
        <taxon>Craniata</taxon>
        <taxon>Vertebrata</taxon>
        <taxon>Euteleostomi</taxon>
        <taxon>Mammalia</taxon>
        <taxon>Eutheria</taxon>
        <taxon>Euarchontoglires</taxon>
        <taxon>Primates</taxon>
        <taxon>Haplorrhini</taxon>
        <taxon>Catarrhini</taxon>
        <taxon>Hominidae</taxon>
        <taxon>Homo</taxon>
    </lineage>
</organism>
<dbReference type="EC" id="3.1.3.48"/>
<dbReference type="EMBL" id="M31724">
    <property type="protein sequence ID" value="AAA60223.1"/>
    <property type="molecule type" value="mRNA"/>
</dbReference>
<dbReference type="EMBL" id="M33689">
    <property type="protein sequence ID" value="AAA60157.1"/>
    <property type="molecule type" value="mRNA"/>
</dbReference>
<dbReference type="EMBL" id="M33684">
    <property type="protein sequence ID" value="AAA60158.1"/>
    <property type="molecule type" value="Genomic_DNA"/>
</dbReference>
<dbReference type="EMBL" id="M33688">
    <property type="protein sequence ID" value="AAA60158.1"/>
    <property type="status" value="JOINED"/>
    <property type="molecule type" value="Genomic_DNA"/>
</dbReference>
<dbReference type="EMBL" id="M33687">
    <property type="protein sequence ID" value="AAA60158.1"/>
    <property type="status" value="JOINED"/>
    <property type="molecule type" value="Genomic_DNA"/>
</dbReference>
<dbReference type="EMBL" id="M33686">
    <property type="protein sequence ID" value="AAA60158.1"/>
    <property type="status" value="JOINED"/>
    <property type="molecule type" value="Genomic_DNA"/>
</dbReference>
<dbReference type="EMBL" id="M33685">
    <property type="protein sequence ID" value="AAA60158.1"/>
    <property type="status" value="JOINED"/>
    <property type="molecule type" value="Genomic_DNA"/>
</dbReference>
<dbReference type="EMBL" id="BT006752">
    <property type="protein sequence ID" value="AAP35398.1"/>
    <property type="molecule type" value="mRNA"/>
</dbReference>
<dbReference type="EMBL" id="AL133230">
    <property type="status" value="NOT_ANNOTATED_CDS"/>
    <property type="molecule type" value="Genomic_DNA"/>
</dbReference>
<dbReference type="EMBL" id="AL034429">
    <property type="status" value="NOT_ANNOTATED_CDS"/>
    <property type="molecule type" value="Genomic_DNA"/>
</dbReference>
<dbReference type="EMBL" id="BC015660">
    <property type="protein sequence ID" value="AAH15660.1"/>
    <property type="molecule type" value="mRNA"/>
</dbReference>
<dbReference type="EMBL" id="BC018164">
    <property type="protein sequence ID" value="AAH18164.1"/>
    <property type="molecule type" value="mRNA"/>
</dbReference>
<dbReference type="CCDS" id="CCDS13430.1"/>
<dbReference type="PIR" id="A35992">
    <property type="entry name" value="TPHUN1"/>
</dbReference>
<dbReference type="RefSeq" id="NP_001265547.1">
    <property type="nucleotide sequence ID" value="NM_001278618.1"/>
</dbReference>
<dbReference type="RefSeq" id="NP_002818.1">
    <property type="nucleotide sequence ID" value="NM_002827.4"/>
</dbReference>
<dbReference type="PDB" id="1A5Y">
    <property type="method" value="X-ray"/>
    <property type="resolution" value="2.50 A"/>
    <property type="chains" value="A=1-330"/>
</dbReference>
<dbReference type="PDB" id="1AAX">
    <property type="method" value="X-ray"/>
    <property type="resolution" value="1.90 A"/>
    <property type="chains" value="A=1-321"/>
</dbReference>
<dbReference type="PDB" id="1BZC">
    <property type="method" value="X-ray"/>
    <property type="resolution" value="2.35 A"/>
    <property type="chains" value="A=1-321"/>
</dbReference>
<dbReference type="PDB" id="1BZH">
    <property type="method" value="X-ray"/>
    <property type="resolution" value="2.10 A"/>
    <property type="chains" value="A=1-298"/>
</dbReference>
<dbReference type="PDB" id="1BZJ">
    <property type="method" value="X-ray"/>
    <property type="resolution" value="2.25 A"/>
    <property type="chains" value="A=2-298"/>
</dbReference>
<dbReference type="PDB" id="1C83">
    <property type="method" value="X-ray"/>
    <property type="resolution" value="1.80 A"/>
    <property type="chains" value="A=1-298"/>
</dbReference>
<dbReference type="PDB" id="1C84">
    <property type="method" value="X-ray"/>
    <property type="resolution" value="2.35 A"/>
    <property type="chains" value="A=1-298"/>
</dbReference>
<dbReference type="PDB" id="1C85">
    <property type="method" value="X-ray"/>
    <property type="resolution" value="2.72 A"/>
    <property type="chains" value="A=1-298"/>
</dbReference>
<dbReference type="PDB" id="1C86">
    <property type="method" value="X-ray"/>
    <property type="resolution" value="2.30 A"/>
    <property type="chains" value="A=1-298"/>
</dbReference>
<dbReference type="PDB" id="1C87">
    <property type="method" value="X-ray"/>
    <property type="resolution" value="2.10 A"/>
    <property type="chains" value="A=1-298"/>
</dbReference>
<dbReference type="PDB" id="1C88">
    <property type="method" value="X-ray"/>
    <property type="resolution" value="1.80 A"/>
    <property type="chains" value="A=1-298"/>
</dbReference>
<dbReference type="PDB" id="1ECV">
    <property type="method" value="X-ray"/>
    <property type="resolution" value="1.95 A"/>
    <property type="chains" value="A=1-298"/>
</dbReference>
<dbReference type="PDB" id="1EEN">
    <property type="method" value="X-ray"/>
    <property type="resolution" value="1.90 A"/>
    <property type="chains" value="A=1-321"/>
</dbReference>
<dbReference type="PDB" id="1EEO">
    <property type="method" value="X-ray"/>
    <property type="resolution" value="1.80 A"/>
    <property type="chains" value="A=1-321"/>
</dbReference>
<dbReference type="PDB" id="1G1F">
    <property type="method" value="X-ray"/>
    <property type="resolution" value="2.00 A"/>
    <property type="chains" value="A=1-298"/>
</dbReference>
<dbReference type="PDB" id="1G1G">
    <property type="method" value="X-ray"/>
    <property type="resolution" value="2.20 A"/>
    <property type="chains" value="A=1-298"/>
</dbReference>
<dbReference type="PDB" id="1G1H">
    <property type="method" value="X-ray"/>
    <property type="resolution" value="2.40 A"/>
    <property type="chains" value="A=1-298"/>
</dbReference>
<dbReference type="PDB" id="1G7F">
    <property type="method" value="X-ray"/>
    <property type="resolution" value="1.80 A"/>
    <property type="chains" value="A=1-298"/>
</dbReference>
<dbReference type="PDB" id="1G7G">
    <property type="method" value="X-ray"/>
    <property type="resolution" value="2.20 A"/>
    <property type="chains" value="A=1-298"/>
</dbReference>
<dbReference type="PDB" id="1GFY">
    <property type="method" value="X-ray"/>
    <property type="resolution" value="2.13 A"/>
    <property type="chains" value="A=1-298"/>
</dbReference>
<dbReference type="PDB" id="1I57">
    <property type="method" value="X-ray"/>
    <property type="resolution" value="2.10 A"/>
    <property type="chains" value="A=1-298"/>
</dbReference>
<dbReference type="PDB" id="1JF7">
    <property type="method" value="X-ray"/>
    <property type="resolution" value="2.20 A"/>
    <property type="chains" value="A/B=1-298"/>
</dbReference>
<dbReference type="PDB" id="1KAK">
    <property type="method" value="X-ray"/>
    <property type="resolution" value="2.50 A"/>
    <property type="chains" value="A=1-298"/>
</dbReference>
<dbReference type="PDB" id="1KAV">
    <property type="method" value="X-ray"/>
    <property type="resolution" value="2.35 A"/>
    <property type="chains" value="A=1-298"/>
</dbReference>
<dbReference type="PDB" id="1L8G">
    <property type="method" value="X-ray"/>
    <property type="resolution" value="2.50 A"/>
    <property type="chains" value="A=1-321"/>
</dbReference>
<dbReference type="PDB" id="1LQF">
    <property type="method" value="X-ray"/>
    <property type="resolution" value="2.50 A"/>
    <property type="chains" value="A/B/C/D=1-283"/>
</dbReference>
<dbReference type="PDB" id="1NL9">
    <property type="method" value="X-ray"/>
    <property type="resolution" value="2.40 A"/>
    <property type="chains" value="A=1-321"/>
</dbReference>
<dbReference type="PDB" id="1NNY">
    <property type="method" value="X-ray"/>
    <property type="resolution" value="2.40 A"/>
    <property type="chains" value="A=1-321"/>
</dbReference>
<dbReference type="PDB" id="1NO6">
    <property type="method" value="X-ray"/>
    <property type="resolution" value="2.40 A"/>
    <property type="chains" value="A=1-321"/>
</dbReference>
<dbReference type="PDB" id="1NWE">
    <property type="method" value="X-ray"/>
    <property type="resolution" value="3.10 A"/>
    <property type="chains" value="A=1-298"/>
</dbReference>
<dbReference type="PDB" id="1NWL">
    <property type="method" value="X-ray"/>
    <property type="resolution" value="2.40 A"/>
    <property type="chains" value="A=1-298"/>
</dbReference>
<dbReference type="PDB" id="1NZ7">
    <property type="method" value="X-ray"/>
    <property type="resolution" value="2.40 A"/>
    <property type="chains" value="A=1-321"/>
</dbReference>
<dbReference type="PDB" id="1OEM">
    <property type="method" value="X-ray"/>
    <property type="resolution" value="1.80 A"/>
    <property type="chains" value="X=1-321"/>
</dbReference>
<dbReference type="PDB" id="1OEO">
    <property type="method" value="X-ray"/>
    <property type="resolution" value="2.15 A"/>
    <property type="chains" value="X=1-321"/>
</dbReference>
<dbReference type="PDB" id="1OES">
    <property type="method" value="X-ray"/>
    <property type="resolution" value="2.20 A"/>
    <property type="chains" value="A=1-321"/>
</dbReference>
<dbReference type="PDB" id="1OET">
    <property type="method" value="X-ray"/>
    <property type="resolution" value="2.30 A"/>
    <property type="chains" value="A=1-321"/>
</dbReference>
<dbReference type="PDB" id="1OEU">
    <property type="method" value="X-ray"/>
    <property type="resolution" value="2.50 A"/>
    <property type="chains" value="A=1-321"/>
</dbReference>
<dbReference type="PDB" id="1OEV">
    <property type="method" value="X-ray"/>
    <property type="resolution" value="2.20 A"/>
    <property type="chains" value="A=1-321"/>
</dbReference>
<dbReference type="PDB" id="1ONY">
    <property type="method" value="X-ray"/>
    <property type="resolution" value="2.15 A"/>
    <property type="chains" value="A=1-321"/>
</dbReference>
<dbReference type="PDB" id="1ONZ">
    <property type="method" value="X-ray"/>
    <property type="resolution" value="2.40 A"/>
    <property type="chains" value="A=1-321"/>
</dbReference>
<dbReference type="PDB" id="1PA1">
    <property type="method" value="X-ray"/>
    <property type="resolution" value="1.60 A"/>
    <property type="chains" value="A=1-298"/>
</dbReference>
<dbReference type="PDB" id="1PH0">
    <property type="method" value="X-ray"/>
    <property type="resolution" value="2.20 A"/>
    <property type="chains" value="A=1-321"/>
</dbReference>
<dbReference type="PDB" id="1PTT">
    <property type="method" value="X-ray"/>
    <property type="resolution" value="2.90 A"/>
    <property type="chains" value="A=1-321"/>
</dbReference>
<dbReference type="PDB" id="1PTU">
    <property type="method" value="X-ray"/>
    <property type="resolution" value="2.60 A"/>
    <property type="chains" value="A=1-321"/>
</dbReference>
<dbReference type="PDB" id="1PTV">
    <property type="method" value="X-ray"/>
    <property type="resolution" value="2.30 A"/>
    <property type="chains" value="A=1-321"/>
</dbReference>
<dbReference type="PDB" id="1PTY">
    <property type="method" value="X-ray"/>
    <property type="resolution" value="1.85 A"/>
    <property type="chains" value="A=1-321"/>
</dbReference>
<dbReference type="PDB" id="1PXH">
    <property type="method" value="X-ray"/>
    <property type="resolution" value="2.15 A"/>
    <property type="chains" value="A=1-321"/>
</dbReference>
<dbReference type="PDB" id="1PYN">
    <property type="method" value="X-ray"/>
    <property type="resolution" value="2.20 A"/>
    <property type="chains" value="A=1-321"/>
</dbReference>
<dbReference type="PDB" id="1Q1M">
    <property type="method" value="X-ray"/>
    <property type="resolution" value="2.60 A"/>
    <property type="chains" value="A=1-321"/>
</dbReference>
<dbReference type="PDB" id="1Q6J">
    <property type="method" value="X-ray"/>
    <property type="resolution" value="2.20 A"/>
    <property type="chains" value="A=1-298"/>
</dbReference>
<dbReference type="PDB" id="1Q6M">
    <property type="method" value="X-ray"/>
    <property type="resolution" value="2.20 A"/>
    <property type="chains" value="A=1-298"/>
</dbReference>
<dbReference type="PDB" id="1Q6N">
    <property type="method" value="X-ray"/>
    <property type="resolution" value="2.10 A"/>
    <property type="chains" value="A/B=1-298"/>
</dbReference>
<dbReference type="PDB" id="1Q6P">
    <property type="method" value="X-ray"/>
    <property type="resolution" value="2.30 A"/>
    <property type="chains" value="A/B=1-298"/>
</dbReference>
<dbReference type="PDB" id="1Q6S">
    <property type="method" value="X-ray"/>
    <property type="resolution" value="2.20 A"/>
    <property type="chains" value="A/B=1-298"/>
</dbReference>
<dbReference type="PDB" id="1Q6T">
    <property type="method" value="X-ray"/>
    <property type="resolution" value="2.30 A"/>
    <property type="chains" value="A/B=1-298"/>
</dbReference>
<dbReference type="PDB" id="1QXK">
    <property type="method" value="X-ray"/>
    <property type="resolution" value="2.30 A"/>
    <property type="chains" value="A=1-321"/>
</dbReference>
<dbReference type="PDB" id="1SUG">
    <property type="method" value="X-ray"/>
    <property type="resolution" value="1.95 A"/>
    <property type="chains" value="A=1-321"/>
</dbReference>
<dbReference type="PDB" id="1T48">
    <property type="method" value="X-ray"/>
    <property type="resolution" value="2.20 A"/>
    <property type="chains" value="A=1-298"/>
</dbReference>
<dbReference type="PDB" id="1T49">
    <property type="method" value="X-ray"/>
    <property type="resolution" value="1.90 A"/>
    <property type="chains" value="A=1-298"/>
</dbReference>
<dbReference type="PDB" id="1T4J">
    <property type="method" value="X-ray"/>
    <property type="resolution" value="2.70 A"/>
    <property type="chains" value="A=1-298"/>
</dbReference>
<dbReference type="PDB" id="1WAX">
    <property type="method" value="X-ray"/>
    <property type="resolution" value="2.20 A"/>
    <property type="chains" value="A=1-321"/>
</dbReference>
<dbReference type="PDB" id="1XBO">
    <property type="method" value="X-ray"/>
    <property type="resolution" value="2.50 A"/>
    <property type="chains" value="A=1-321"/>
</dbReference>
<dbReference type="PDB" id="2AZR">
    <property type="method" value="X-ray"/>
    <property type="resolution" value="2.00 A"/>
    <property type="chains" value="A=1-299"/>
</dbReference>
<dbReference type="PDB" id="2B07">
    <property type="method" value="X-ray"/>
    <property type="resolution" value="2.10 A"/>
    <property type="chains" value="A=1-299"/>
</dbReference>
<dbReference type="PDB" id="2B4S">
    <property type="method" value="X-ray"/>
    <property type="resolution" value="2.30 A"/>
    <property type="chains" value="A/C=1-298"/>
</dbReference>
<dbReference type="PDB" id="2BGD">
    <property type="method" value="X-ray"/>
    <property type="resolution" value="2.40 A"/>
    <property type="chains" value="A=1-321"/>
</dbReference>
<dbReference type="PDB" id="2BGE">
    <property type="method" value="X-ray"/>
    <property type="resolution" value="1.80 A"/>
    <property type="chains" value="A=1-321"/>
</dbReference>
<dbReference type="PDB" id="2CM2">
    <property type="method" value="X-ray"/>
    <property type="resolution" value="1.50 A"/>
    <property type="chains" value="A=2-298"/>
</dbReference>
<dbReference type="PDB" id="2CM3">
    <property type="method" value="X-ray"/>
    <property type="resolution" value="2.10 A"/>
    <property type="chains" value="A/B=1-298"/>
</dbReference>
<dbReference type="PDB" id="2CM7">
    <property type="method" value="X-ray"/>
    <property type="resolution" value="2.10 A"/>
    <property type="chains" value="A=1-321"/>
</dbReference>
<dbReference type="PDB" id="2CM8">
    <property type="method" value="X-ray"/>
    <property type="resolution" value="2.10 A"/>
    <property type="chains" value="A=1-321"/>
</dbReference>
<dbReference type="PDB" id="2CMA">
    <property type="method" value="X-ray"/>
    <property type="resolution" value="2.30 A"/>
    <property type="chains" value="A=1-321"/>
</dbReference>
<dbReference type="PDB" id="2CMB">
    <property type="method" value="X-ray"/>
    <property type="resolution" value="1.70 A"/>
    <property type="chains" value="A=1-298"/>
</dbReference>
<dbReference type="PDB" id="2CMC">
    <property type="method" value="X-ray"/>
    <property type="resolution" value="2.20 A"/>
    <property type="chains" value="A=1-298"/>
</dbReference>
<dbReference type="PDB" id="2CNE">
    <property type="method" value="X-ray"/>
    <property type="resolution" value="1.80 A"/>
    <property type="chains" value="A=1-298"/>
</dbReference>
<dbReference type="PDB" id="2CNF">
    <property type="method" value="X-ray"/>
    <property type="resolution" value="2.20 A"/>
    <property type="chains" value="A=1-321"/>
</dbReference>
<dbReference type="PDB" id="2CNG">
    <property type="method" value="X-ray"/>
    <property type="resolution" value="1.90 A"/>
    <property type="chains" value="A=1-321"/>
</dbReference>
<dbReference type="PDB" id="2CNH">
    <property type="method" value="X-ray"/>
    <property type="resolution" value="1.80 A"/>
    <property type="chains" value="A=1-321"/>
</dbReference>
<dbReference type="PDB" id="2CNI">
    <property type="method" value="X-ray"/>
    <property type="resolution" value="2.00 A"/>
    <property type="chains" value="A=1-321"/>
</dbReference>
<dbReference type="PDB" id="2F6F">
    <property type="method" value="X-ray"/>
    <property type="resolution" value="2.00 A"/>
    <property type="chains" value="A=1-298"/>
</dbReference>
<dbReference type="PDB" id="2F6T">
    <property type="method" value="X-ray"/>
    <property type="resolution" value="1.70 A"/>
    <property type="chains" value="A=1-298"/>
</dbReference>
<dbReference type="PDB" id="2F6V">
    <property type="method" value="X-ray"/>
    <property type="resolution" value="1.70 A"/>
    <property type="chains" value="A=1-298"/>
</dbReference>
<dbReference type="PDB" id="2F6W">
    <property type="method" value="X-ray"/>
    <property type="resolution" value="2.20 A"/>
    <property type="chains" value="A=1-298"/>
</dbReference>
<dbReference type="PDB" id="2F6Y">
    <property type="method" value="X-ray"/>
    <property type="resolution" value="2.15 A"/>
    <property type="chains" value="A=1-298"/>
</dbReference>
<dbReference type="PDB" id="2F6Z">
    <property type="method" value="X-ray"/>
    <property type="resolution" value="1.70 A"/>
    <property type="chains" value="A=1-298"/>
</dbReference>
<dbReference type="PDB" id="2F70">
    <property type="method" value="X-ray"/>
    <property type="resolution" value="2.12 A"/>
    <property type="chains" value="A=1-298"/>
</dbReference>
<dbReference type="PDB" id="2F71">
    <property type="method" value="X-ray"/>
    <property type="resolution" value="1.55 A"/>
    <property type="chains" value="A=1-298"/>
</dbReference>
<dbReference type="PDB" id="2FJM">
    <property type="method" value="X-ray"/>
    <property type="resolution" value="2.10 A"/>
    <property type="chains" value="A/B=1-298"/>
</dbReference>
<dbReference type="PDB" id="2FJN">
    <property type="method" value="X-ray"/>
    <property type="resolution" value="2.20 A"/>
    <property type="chains" value="A/B=1-298"/>
</dbReference>
<dbReference type="PDB" id="2H4G">
    <property type="method" value="X-ray"/>
    <property type="resolution" value="2.50 A"/>
    <property type="chains" value="A=1-299"/>
</dbReference>
<dbReference type="PDB" id="2H4K">
    <property type="method" value="X-ray"/>
    <property type="resolution" value="2.30 A"/>
    <property type="chains" value="A=1-299"/>
</dbReference>
<dbReference type="PDB" id="2HB1">
    <property type="method" value="X-ray"/>
    <property type="resolution" value="2.00 A"/>
    <property type="chains" value="A=1-299"/>
</dbReference>
<dbReference type="PDB" id="2HNP">
    <property type="method" value="X-ray"/>
    <property type="resolution" value="2.85 A"/>
    <property type="chains" value="A=1-321"/>
</dbReference>
<dbReference type="PDB" id="2HNQ">
    <property type="method" value="X-ray"/>
    <property type="resolution" value="2.85 A"/>
    <property type="chains" value="A=1-321"/>
</dbReference>
<dbReference type="PDB" id="2NT7">
    <property type="method" value="X-ray"/>
    <property type="resolution" value="2.10 A"/>
    <property type="chains" value="A=1-299"/>
</dbReference>
<dbReference type="PDB" id="2NTA">
    <property type="method" value="X-ray"/>
    <property type="resolution" value="2.10 A"/>
    <property type="chains" value="A=1-299"/>
</dbReference>
<dbReference type="PDB" id="2QBP">
    <property type="method" value="X-ray"/>
    <property type="resolution" value="2.50 A"/>
    <property type="chains" value="A=1-299"/>
</dbReference>
<dbReference type="PDB" id="2QBQ">
    <property type="method" value="X-ray"/>
    <property type="resolution" value="2.10 A"/>
    <property type="chains" value="A=1-299"/>
</dbReference>
<dbReference type="PDB" id="2QBR">
    <property type="method" value="X-ray"/>
    <property type="resolution" value="2.30 A"/>
    <property type="chains" value="A=1-299"/>
</dbReference>
<dbReference type="PDB" id="2QBS">
    <property type="method" value="X-ray"/>
    <property type="resolution" value="2.10 A"/>
    <property type="chains" value="A=1-299"/>
</dbReference>
<dbReference type="PDB" id="2VEU">
    <property type="method" value="X-ray"/>
    <property type="resolution" value="2.40 A"/>
    <property type="chains" value="A=1-321"/>
</dbReference>
<dbReference type="PDB" id="2VEV">
    <property type="method" value="X-ray"/>
    <property type="resolution" value="1.80 A"/>
    <property type="chains" value="A=1-321"/>
</dbReference>
<dbReference type="PDB" id="2VEW">
    <property type="method" value="X-ray"/>
    <property type="resolution" value="2.00 A"/>
    <property type="chains" value="A=1-321"/>
</dbReference>
<dbReference type="PDB" id="2VEX">
    <property type="method" value="X-ray"/>
    <property type="resolution" value="2.20 A"/>
    <property type="chains" value="A=1-321"/>
</dbReference>
<dbReference type="PDB" id="2VEY">
    <property type="method" value="X-ray"/>
    <property type="resolution" value="2.20 A"/>
    <property type="chains" value="A=1-321"/>
</dbReference>
<dbReference type="PDB" id="2ZMM">
    <property type="method" value="X-ray"/>
    <property type="resolution" value="2.10 A"/>
    <property type="chains" value="A=1-299"/>
</dbReference>
<dbReference type="PDB" id="2ZN7">
    <property type="method" value="X-ray"/>
    <property type="resolution" value="2.10 A"/>
    <property type="chains" value="A=1-299"/>
</dbReference>
<dbReference type="PDB" id="3A5J">
    <property type="method" value="X-ray"/>
    <property type="resolution" value="1.70 A"/>
    <property type="chains" value="A=2-321"/>
</dbReference>
<dbReference type="PDB" id="3A5K">
    <property type="method" value="X-ray"/>
    <property type="resolution" value="1.85 A"/>
    <property type="chains" value="A=2-298"/>
</dbReference>
<dbReference type="PDB" id="3CWE">
    <property type="method" value="X-ray"/>
    <property type="resolution" value="1.60 A"/>
    <property type="chains" value="A=1-283"/>
</dbReference>
<dbReference type="PDB" id="3D9C">
    <property type="method" value="X-ray"/>
    <property type="resolution" value="2.30 A"/>
    <property type="chains" value="A=1-321"/>
</dbReference>
<dbReference type="PDB" id="3EAX">
    <property type="method" value="X-ray"/>
    <property type="resolution" value="1.90 A"/>
    <property type="chains" value="A=1-321"/>
</dbReference>
<dbReference type="PDB" id="3EB1">
    <property type="method" value="X-ray"/>
    <property type="resolution" value="2.40 A"/>
    <property type="chains" value="A=1-321"/>
</dbReference>
<dbReference type="PDB" id="3EU0">
    <property type="method" value="X-ray"/>
    <property type="resolution" value="2.70 A"/>
    <property type="chains" value="A=1-282"/>
</dbReference>
<dbReference type="PDB" id="3I7Z">
    <property type="method" value="X-ray"/>
    <property type="resolution" value="2.30 A"/>
    <property type="chains" value="A=1-321"/>
</dbReference>
<dbReference type="PDB" id="3I80">
    <property type="method" value="X-ray"/>
    <property type="resolution" value="2.25 A"/>
    <property type="chains" value="A=1-321"/>
</dbReference>
<dbReference type="PDB" id="3QKP">
    <property type="method" value="X-ray"/>
    <property type="resolution" value="2.05 A"/>
    <property type="chains" value="A=1-321"/>
</dbReference>
<dbReference type="PDB" id="3QKQ">
    <property type="method" value="X-ray"/>
    <property type="resolution" value="2.20 A"/>
    <property type="chains" value="A=1-321"/>
</dbReference>
<dbReference type="PDB" id="3SME">
    <property type="method" value="X-ray"/>
    <property type="resolution" value="1.70 A"/>
    <property type="chains" value="A=1-298"/>
</dbReference>
<dbReference type="PDB" id="3ZMP">
    <property type="method" value="X-ray"/>
    <property type="resolution" value="2.62 A"/>
    <property type="chains" value="A/B=1-321"/>
</dbReference>
<dbReference type="PDB" id="3ZMQ">
    <property type="method" value="X-ray"/>
    <property type="resolution" value="3.30 A"/>
    <property type="chains" value="A=1-321"/>
</dbReference>
<dbReference type="PDB" id="3ZV2">
    <property type="method" value="X-ray"/>
    <property type="resolution" value="2.80 A"/>
    <property type="chains" value="A=1-320"/>
</dbReference>
<dbReference type="PDB" id="4BJO">
    <property type="method" value="X-ray"/>
    <property type="resolution" value="2.06 A"/>
    <property type="chains" value="A/B=2-321"/>
</dbReference>
<dbReference type="PDB" id="4I8N">
    <property type="method" value="X-ray"/>
    <property type="resolution" value="2.50 A"/>
    <property type="chains" value="A=1-320"/>
</dbReference>
<dbReference type="PDB" id="4QAH">
    <property type="method" value="X-ray"/>
    <property type="resolution" value="2.40 A"/>
    <property type="chains" value="A=1-299"/>
</dbReference>
<dbReference type="PDB" id="4QAP">
    <property type="method" value="X-ray"/>
    <property type="resolution" value="1.90 A"/>
    <property type="chains" value="A=1-299"/>
</dbReference>
<dbReference type="PDB" id="4QBE">
    <property type="method" value="X-ray"/>
    <property type="resolution" value="2.29 A"/>
    <property type="chains" value="A=1-298"/>
</dbReference>
<dbReference type="PDB" id="4QBW">
    <property type="method" value="X-ray"/>
    <property type="resolution" value="1.91 A"/>
    <property type="chains" value="A=1-299"/>
</dbReference>
<dbReference type="PDB" id="4Y14">
    <property type="method" value="X-ray"/>
    <property type="resolution" value="1.90 A"/>
    <property type="chains" value="A/B=2-301"/>
</dbReference>
<dbReference type="PDB" id="4ZRT">
    <property type="method" value="X-ray"/>
    <property type="resolution" value="1.74 A"/>
    <property type="chains" value="A=1-298"/>
</dbReference>
<dbReference type="PDB" id="5K9V">
    <property type="method" value="X-ray"/>
    <property type="resolution" value="1.90 A"/>
    <property type="chains" value="A=1-301"/>
</dbReference>
<dbReference type="PDB" id="5K9W">
    <property type="method" value="X-ray"/>
    <property type="resolution" value="2.01 A"/>
    <property type="chains" value="A=1-301"/>
</dbReference>
<dbReference type="PDB" id="5KA0">
    <property type="method" value="X-ray"/>
    <property type="resolution" value="1.99 A"/>
    <property type="chains" value="A=1-284"/>
</dbReference>
<dbReference type="PDB" id="5KA1">
    <property type="method" value="X-ray"/>
    <property type="resolution" value="1.84 A"/>
    <property type="chains" value="A=1-284"/>
</dbReference>
<dbReference type="PDB" id="5KA2">
    <property type="method" value="X-ray"/>
    <property type="resolution" value="2.07 A"/>
    <property type="chains" value="A=1-301"/>
</dbReference>
<dbReference type="PDB" id="5KA3">
    <property type="method" value="X-ray"/>
    <property type="resolution" value="2.14 A"/>
    <property type="chains" value="A=1-301"/>
</dbReference>
<dbReference type="PDB" id="5KA4">
    <property type="method" value="X-ray"/>
    <property type="resolution" value="2.19 A"/>
    <property type="chains" value="A=1-301"/>
</dbReference>
<dbReference type="PDB" id="5KA7">
    <property type="method" value="X-ray"/>
    <property type="resolution" value="2.06 A"/>
    <property type="chains" value="A=1-301"/>
</dbReference>
<dbReference type="PDB" id="5KA8">
    <property type="method" value="X-ray"/>
    <property type="resolution" value="1.97 A"/>
    <property type="chains" value="A=1-301"/>
</dbReference>
<dbReference type="PDB" id="5KA9">
    <property type="method" value="X-ray"/>
    <property type="resolution" value="2.07 A"/>
    <property type="chains" value="A=1-301"/>
</dbReference>
<dbReference type="PDB" id="5KAA">
    <property type="method" value="X-ray"/>
    <property type="resolution" value="1.97 A"/>
    <property type="chains" value="A=1-284"/>
</dbReference>
<dbReference type="PDB" id="5KAB">
    <property type="method" value="X-ray"/>
    <property type="resolution" value="1.97 A"/>
    <property type="chains" value="A=1-284"/>
</dbReference>
<dbReference type="PDB" id="5KAC">
    <property type="method" value="X-ray"/>
    <property type="resolution" value="1.90 A"/>
    <property type="chains" value="A=1-301"/>
</dbReference>
<dbReference type="PDB" id="5KAD">
    <property type="method" value="X-ray"/>
    <property type="resolution" value="1.90 A"/>
    <property type="chains" value="A/B=1-301"/>
</dbReference>
<dbReference type="PDB" id="5QDE">
    <property type="method" value="X-ray"/>
    <property type="resolution" value="1.76 A"/>
    <property type="chains" value="A=1-321"/>
</dbReference>
<dbReference type="PDB" id="5QDF">
    <property type="method" value="X-ray"/>
    <property type="resolution" value="1.71 A"/>
    <property type="chains" value="A=1-321"/>
</dbReference>
<dbReference type="PDB" id="5QDG">
    <property type="method" value="X-ray"/>
    <property type="resolution" value="1.79 A"/>
    <property type="chains" value="A=1-321"/>
</dbReference>
<dbReference type="PDB" id="5QDH">
    <property type="method" value="X-ray"/>
    <property type="resolution" value="1.68 A"/>
    <property type="chains" value="A=1-321"/>
</dbReference>
<dbReference type="PDB" id="5QDI">
    <property type="method" value="X-ray"/>
    <property type="resolution" value="1.62 A"/>
    <property type="chains" value="A=1-321"/>
</dbReference>
<dbReference type="PDB" id="5QDJ">
    <property type="method" value="X-ray"/>
    <property type="resolution" value="1.76 A"/>
    <property type="chains" value="A=1-321"/>
</dbReference>
<dbReference type="PDB" id="5QDK">
    <property type="method" value="X-ray"/>
    <property type="resolution" value="1.55 A"/>
    <property type="chains" value="A=1-321"/>
</dbReference>
<dbReference type="PDB" id="5QDL">
    <property type="method" value="X-ray"/>
    <property type="resolution" value="1.83 A"/>
    <property type="chains" value="A=1-321"/>
</dbReference>
<dbReference type="PDB" id="5QDM">
    <property type="method" value="X-ray"/>
    <property type="resolution" value="2.65 A"/>
    <property type="chains" value="A=1-321"/>
</dbReference>
<dbReference type="PDB" id="5QDN">
    <property type="method" value="X-ray"/>
    <property type="resolution" value="1.82 A"/>
    <property type="chains" value="A=1-321"/>
</dbReference>
<dbReference type="PDB" id="5QDO">
    <property type="method" value="X-ray"/>
    <property type="resolution" value="1.79 A"/>
    <property type="chains" value="A=1-321"/>
</dbReference>
<dbReference type="PDB" id="5QDP">
    <property type="method" value="X-ray"/>
    <property type="resolution" value="1.74 A"/>
    <property type="chains" value="A=1-321"/>
</dbReference>
<dbReference type="PDB" id="5QDQ">
    <property type="method" value="X-ray"/>
    <property type="resolution" value="1.57 A"/>
    <property type="chains" value="A=1-321"/>
</dbReference>
<dbReference type="PDB" id="5QDR">
    <property type="method" value="X-ray"/>
    <property type="resolution" value="1.78 A"/>
    <property type="chains" value="A=1-321"/>
</dbReference>
<dbReference type="PDB" id="5QDS">
    <property type="method" value="X-ray"/>
    <property type="resolution" value="1.75 A"/>
    <property type="chains" value="A=1-321"/>
</dbReference>
<dbReference type="PDB" id="5QDT">
    <property type="method" value="X-ray"/>
    <property type="resolution" value="1.82 A"/>
    <property type="chains" value="A=1-321"/>
</dbReference>
<dbReference type="PDB" id="5QDU">
    <property type="method" value="X-ray"/>
    <property type="resolution" value="1.67 A"/>
    <property type="chains" value="A=1-321"/>
</dbReference>
<dbReference type="PDB" id="5QDV">
    <property type="method" value="X-ray"/>
    <property type="resolution" value="1.77 A"/>
    <property type="chains" value="A=1-321"/>
</dbReference>
<dbReference type="PDB" id="5QDW">
    <property type="method" value="X-ray"/>
    <property type="resolution" value="2.21 A"/>
    <property type="chains" value="A=1-321"/>
</dbReference>
<dbReference type="PDB" id="5QDX">
    <property type="method" value="X-ray"/>
    <property type="resolution" value="2.06 A"/>
    <property type="chains" value="A=1-321"/>
</dbReference>
<dbReference type="PDB" id="5QDY">
    <property type="method" value="X-ray"/>
    <property type="resolution" value="1.83 A"/>
    <property type="chains" value="A=1-321"/>
</dbReference>
<dbReference type="PDB" id="5QDZ">
    <property type="method" value="X-ray"/>
    <property type="resolution" value="2.14 A"/>
    <property type="chains" value="A=1-321"/>
</dbReference>
<dbReference type="PDB" id="5QE0">
    <property type="method" value="X-ray"/>
    <property type="resolution" value="1.98 A"/>
    <property type="chains" value="A=1-321"/>
</dbReference>
<dbReference type="PDB" id="5QE1">
    <property type="method" value="X-ray"/>
    <property type="resolution" value="1.69 A"/>
    <property type="chains" value="A=1-321"/>
</dbReference>
<dbReference type="PDB" id="5QE2">
    <property type="method" value="X-ray"/>
    <property type="resolution" value="1.79 A"/>
    <property type="chains" value="A=1-321"/>
</dbReference>
<dbReference type="PDB" id="5QE3">
    <property type="method" value="X-ray"/>
    <property type="resolution" value="1.74 A"/>
    <property type="chains" value="A=1-321"/>
</dbReference>
<dbReference type="PDB" id="5QE4">
    <property type="method" value="X-ray"/>
    <property type="resolution" value="1.85 A"/>
    <property type="chains" value="A=1-321"/>
</dbReference>
<dbReference type="PDB" id="5QE5">
    <property type="method" value="X-ray"/>
    <property type="resolution" value="1.77 A"/>
    <property type="chains" value="A=1-321"/>
</dbReference>
<dbReference type="PDB" id="5QE6">
    <property type="method" value="X-ray"/>
    <property type="resolution" value="1.77 A"/>
    <property type="chains" value="A=1-321"/>
</dbReference>
<dbReference type="PDB" id="5QE7">
    <property type="method" value="X-ray"/>
    <property type="resolution" value="1.71 A"/>
    <property type="chains" value="A=1-321"/>
</dbReference>
<dbReference type="PDB" id="5QE8">
    <property type="method" value="X-ray"/>
    <property type="resolution" value="1.81 A"/>
    <property type="chains" value="A=1-321"/>
</dbReference>
<dbReference type="PDB" id="5QE9">
    <property type="method" value="X-ray"/>
    <property type="resolution" value="1.69 A"/>
    <property type="chains" value="A=1-321"/>
</dbReference>
<dbReference type="PDB" id="5QEA">
    <property type="method" value="X-ray"/>
    <property type="resolution" value="1.74 A"/>
    <property type="chains" value="A=1-321"/>
</dbReference>
<dbReference type="PDB" id="5QEB">
    <property type="method" value="X-ray"/>
    <property type="resolution" value="1.73 A"/>
    <property type="chains" value="A=1-321"/>
</dbReference>
<dbReference type="PDB" id="5QEC">
    <property type="method" value="X-ray"/>
    <property type="resolution" value="1.67 A"/>
    <property type="chains" value="A=1-321"/>
</dbReference>
<dbReference type="PDB" id="5QED">
    <property type="method" value="X-ray"/>
    <property type="resolution" value="1.75 A"/>
    <property type="chains" value="A=1-321"/>
</dbReference>
<dbReference type="PDB" id="5QEE">
    <property type="method" value="X-ray"/>
    <property type="resolution" value="1.93 A"/>
    <property type="chains" value="A=1-321"/>
</dbReference>
<dbReference type="PDB" id="5QEF">
    <property type="method" value="X-ray"/>
    <property type="resolution" value="1.60 A"/>
    <property type="chains" value="A=1-321"/>
</dbReference>
<dbReference type="PDB" id="5QEG">
    <property type="method" value="X-ray"/>
    <property type="resolution" value="1.97 A"/>
    <property type="chains" value="A=1-321"/>
</dbReference>
<dbReference type="PDB" id="5QEH">
    <property type="method" value="X-ray"/>
    <property type="resolution" value="1.94 A"/>
    <property type="chains" value="A=1-321"/>
</dbReference>
<dbReference type="PDB" id="5QEI">
    <property type="method" value="X-ray"/>
    <property type="resolution" value="1.74 A"/>
    <property type="chains" value="A=1-321"/>
</dbReference>
<dbReference type="PDB" id="5QEJ">
    <property type="method" value="X-ray"/>
    <property type="resolution" value="1.92 A"/>
    <property type="chains" value="A=1-321"/>
</dbReference>
<dbReference type="PDB" id="5QEK">
    <property type="method" value="X-ray"/>
    <property type="resolution" value="1.90 A"/>
    <property type="chains" value="A=1-321"/>
</dbReference>
<dbReference type="PDB" id="5QEL">
    <property type="method" value="X-ray"/>
    <property type="resolution" value="1.65 A"/>
    <property type="chains" value="A=1-321"/>
</dbReference>
<dbReference type="PDB" id="5QEM">
    <property type="method" value="X-ray"/>
    <property type="resolution" value="1.75 A"/>
    <property type="chains" value="A=1-321"/>
</dbReference>
<dbReference type="PDB" id="5QEN">
    <property type="method" value="X-ray"/>
    <property type="resolution" value="1.77 A"/>
    <property type="chains" value="A=1-321"/>
</dbReference>
<dbReference type="PDB" id="5QEO">
    <property type="method" value="X-ray"/>
    <property type="resolution" value="1.72 A"/>
    <property type="chains" value="A=1-321"/>
</dbReference>
<dbReference type="PDB" id="5QEP">
    <property type="method" value="X-ray"/>
    <property type="resolution" value="1.77 A"/>
    <property type="chains" value="A=1-321"/>
</dbReference>
<dbReference type="PDB" id="5QEQ">
    <property type="method" value="X-ray"/>
    <property type="resolution" value="1.97 A"/>
    <property type="chains" value="A=1-321"/>
</dbReference>
<dbReference type="PDB" id="5QER">
    <property type="method" value="X-ray"/>
    <property type="resolution" value="1.73 A"/>
    <property type="chains" value="A=1-321"/>
</dbReference>
<dbReference type="PDB" id="5QES">
    <property type="method" value="X-ray"/>
    <property type="resolution" value="1.75 A"/>
    <property type="chains" value="A=1-321"/>
</dbReference>
<dbReference type="PDB" id="5QET">
    <property type="method" value="X-ray"/>
    <property type="resolution" value="1.72 A"/>
    <property type="chains" value="A=1-321"/>
</dbReference>
<dbReference type="PDB" id="5QEU">
    <property type="method" value="X-ray"/>
    <property type="resolution" value="1.74 A"/>
    <property type="chains" value="A=1-321"/>
</dbReference>
<dbReference type="PDB" id="5QEV">
    <property type="method" value="X-ray"/>
    <property type="resolution" value="1.72 A"/>
    <property type="chains" value="A=1-321"/>
</dbReference>
<dbReference type="PDB" id="5QEW">
    <property type="method" value="X-ray"/>
    <property type="resolution" value="1.83 A"/>
    <property type="chains" value="A=1-321"/>
</dbReference>
<dbReference type="PDB" id="5QEX">
    <property type="method" value="X-ray"/>
    <property type="resolution" value="1.67 A"/>
    <property type="chains" value="A=1-321"/>
</dbReference>
<dbReference type="PDB" id="5QEY">
    <property type="method" value="X-ray"/>
    <property type="resolution" value="1.77 A"/>
    <property type="chains" value="A=1-321"/>
</dbReference>
<dbReference type="PDB" id="5QEZ">
    <property type="method" value="X-ray"/>
    <property type="resolution" value="1.65 A"/>
    <property type="chains" value="A=1-321"/>
</dbReference>
<dbReference type="PDB" id="5QF0">
    <property type="method" value="X-ray"/>
    <property type="resolution" value="1.71 A"/>
    <property type="chains" value="A=1-321"/>
</dbReference>
<dbReference type="PDB" id="5QF1">
    <property type="method" value="X-ray"/>
    <property type="resolution" value="1.84 A"/>
    <property type="chains" value="A=1-321"/>
</dbReference>
<dbReference type="PDB" id="5QF2">
    <property type="method" value="X-ray"/>
    <property type="resolution" value="1.77 A"/>
    <property type="chains" value="A=1-321"/>
</dbReference>
<dbReference type="PDB" id="5QF3">
    <property type="method" value="X-ray"/>
    <property type="resolution" value="1.56 A"/>
    <property type="chains" value="A=1-321"/>
</dbReference>
<dbReference type="PDB" id="5QF4">
    <property type="method" value="X-ray"/>
    <property type="resolution" value="1.83 A"/>
    <property type="chains" value="A=1-321"/>
</dbReference>
<dbReference type="PDB" id="5QF5">
    <property type="method" value="X-ray"/>
    <property type="resolution" value="1.73 A"/>
    <property type="chains" value="A=1-321"/>
</dbReference>
<dbReference type="PDB" id="5QF6">
    <property type="method" value="X-ray"/>
    <property type="resolution" value="1.76 A"/>
    <property type="chains" value="A=1-321"/>
</dbReference>
<dbReference type="PDB" id="5QF7">
    <property type="method" value="X-ray"/>
    <property type="resolution" value="1.75 A"/>
    <property type="chains" value="A=1-321"/>
</dbReference>
<dbReference type="PDB" id="5QF8">
    <property type="method" value="X-ray"/>
    <property type="resolution" value="1.99 A"/>
    <property type="chains" value="A=1-321"/>
</dbReference>
<dbReference type="PDB" id="5QF9">
    <property type="method" value="X-ray"/>
    <property type="resolution" value="1.94 A"/>
    <property type="chains" value="A=1-321"/>
</dbReference>
<dbReference type="PDB" id="5QFA">
    <property type="method" value="X-ray"/>
    <property type="resolution" value="1.74 A"/>
    <property type="chains" value="A=1-321"/>
</dbReference>
<dbReference type="PDB" id="5QFB">
    <property type="method" value="X-ray"/>
    <property type="resolution" value="1.85 A"/>
    <property type="chains" value="A=1-321"/>
</dbReference>
<dbReference type="PDB" id="5QFC">
    <property type="method" value="X-ray"/>
    <property type="resolution" value="1.84 A"/>
    <property type="chains" value="A=1-321"/>
</dbReference>
<dbReference type="PDB" id="5QFD">
    <property type="method" value="X-ray"/>
    <property type="resolution" value="1.69 A"/>
    <property type="chains" value="A=1-321"/>
</dbReference>
<dbReference type="PDB" id="5QFE">
    <property type="method" value="X-ray"/>
    <property type="resolution" value="1.56 A"/>
    <property type="chains" value="A=1-321"/>
</dbReference>
<dbReference type="PDB" id="5QFF">
    <property type="method" value="X-ray"/>
    <property type="resolution" value="1.70 A"/>
    <property type="chains" value="A=1-321"/>
</dbReference>
<dbReference type="PDB" id="5QFG">
    <property type="method" value="X-ray"/>
    <property type="resolution" value="1.65 A"/>
    <property type="chains" value="A=1-321"/>
</dbReference>
<dbReference type="PDB" id="5QFH">
    <property type="method" value="X-ray"/>
    <property type="resolution" value="1.59 A"/>
    <property type="chains" value="A=1-321"/>
</dbReference>
<dbReference type="PDB" id="5QFI">
    <property type="method" value="X-ray"/>
    <property type="resolution" value="1.68 A"/>
    <property type="chains" value="A=1-321"/>
</dbReference>
<dbReference type="PDB" id="5QFJ">
    <property type="method" value="X-ray"/>
    <property type="resolution" value="1.95 A"/>
    <property type="chains" value="A=1-321"/>
</dbReference>
<dbReference type="PDB" id="5QFK">
    <property type="method" value="X-ray"/>
    <property type="resolution" value="1.59 A"/>
    <property type="chains" value="A=1-321"/>
</dbReference>
<dbReference type="PDB" id="5QFL">
    <property type="method" value="X-ray"/>
    <property type="resolution" value="1.82 A"/>
    <property type="chains" value="A=1-321"/>
</dbReference>
<dbReference type="PDB" id="5QFM">
    <property type="method" value="X-ray"/>
    <property type="resolution" value="1.83 A"/>
    <property type="chains" value="A=1-321"/>
</dbReference>
<dbReference type="PDB" id="5QFN">
    <property type="method" value="X-ray"/>
    <property type="resolution" value="1.68 A"/>
    <property type="chains" value="A=1-321"/>
</dbReference>
<dbReference type="PDB" id="5QFO">
    <property type="method" value="X-ray"/>
    <property type="resolution" value="1.85 A"/>
    <property type="chains" value="A=1-321"/>
</dbReference>
<dbReference type="PDB" id="5QFP">
    <property type="method" value="X-ray"/>
    <property type="resolution" value="1.77 A"/>
    <property type="chains" value="A=1-321"/>
</dbReference>
<dbReference type="PDB" id="5QFQ">
    <property type="method" value="X-ray"/>
    <property type="resolution" value="1.62 A"/>
    <property type="chains" value="A=1-321"/>
</dbReference>
<dbReference type="PDB" id="5QFR">
    <property type="method" value="X-ray"/>
    <property type="resolution" value="1.62 A"/>
    <property type="chains" value="A=1-321"/>
</dbReference>
<dbReference type="PDB" id="5QFS">
    <property type="method" value="X-ray"/>
    <property type="resolution" value="1.85 A"/>
    <property type="chains" value="A=1-321"/>
</dbReference>
<dbReference type="PDB" id="5QFT">
    <property type="method" value="X-ray"/>
    <property type="resolution" value="1.96 A"/>
    <property type="chains" value="A=1-321"/>
</dbReference>
<dbReference type="PDB" id="5QFU">
    <property type="method" value="X-ray"/>
    <property type="resolution" value="1.61 A"/>
    <property type="chains" value="A=1-321"/>
</dbReference>
<dbReference type="PDB" id="5QFV">
    <property type="method" value="X-ray"/>
    <property type="resolution" value="1.64 A"/>
    <property type="chains" value="A=1-321"/>
</dbReference>
<dbReference type="PDB" id="5QFW">
    <property type="method" value="X-ray"/>
    <property type="resolution" value="1.66 A"/>
    <property type="chains" value="A=1-321"/>
</dbReference>
<dbReference type="PDB" id="5QFX">
    <property type="method" value="X-ray"/>
    <property type="resolution" value="1.82 A"/>
    <property type="chains" value="A=1-321"/>
</dbReference>
<dbReference type="PDB" id="5QFY">
    <property type="method" value="X-ray"/>
    <property type="resolution" value="1.77 A"/>
    <property type="chains" value="A=1-321"/>
</dbReference>
<dbReference type="PDB" id="5QFZ">
    <property type="method" value="X-ray"/>
    <property type="resolution" value="1.72 A"/>
    <property type="chains" value="A=1-321"/>
</dbReference>
<dbReference type="PDB" id="5QG0">
    <property type="method" value="X-ray"/>
    <property type="resolution" value="1.75 A"/>
    <property type="chains" value="A=1-321"/>
</dbReference>
<dbReference type="PDB" id="5QG1">
    <property type="method" value="X-ray"/>
    <property type="resolution" value="2.21 A"/>
    <property type="chains" value="A=1-321"/>
</dbReference>
<dbReference type="PDB" id="5QG2">
    <property type="method" value="X-ray"/>
    <property type="resolution" value="2.12 A"/>
    <property type="chains" value="A=1-321"/>
</dbReference>
<dbReference type="PDB" id="5QG3">
    <property type="method" value="X-ray"/>
    <property type="resolution" value="1.65 A"/>
    <property type="chains" value="A=1-321"/>
</dbReference>
<dbReference type="PDB" id="5QG4">
    <property type="method" value="X-ray"/>
    <property type="resolution" value="1.79 A"/>
    <property type="chains" value="A=1-321"/>
</dbReference>
<dbReference type="PDB" id="5QG5">
    <property type="method" value="X-ray"/>
    <property type="resolution" value="2.07 A"/>
    <property type="chains" value="A=1-321"/>
</dbReference>
<dbReference type="PDB" id="5QG6">
    <property type="method" value="X-ray"/>
    <property type="resolution" value="1.73 A"/>
    <property type="chains" value="A=1-321"/>
</dbReference>
<dbReference type="PDB" id="5QG7">
    <property type="method" value="X-ray"/>
    <property type="resolution" value="1.81 A"/>
    <property type="chains" value="A=1-321"/>
</dbReference>
<dbReference type="PDB" id="5QG8">
    <property type="method" value="X-ray"/>
    <property type="resolution" value="1.63 A"/>
    <property type="chains" value="A=1-321"/>
</dbReference>
<dbReference type="PDB" id="5QG9">
    <property type="method" value="X-ray"/>
    <property type="resolution" value="1.67 A"/>
    <property type="chains" value="A=1-321"/>
</dbReference>
<dbReference type="PDB" id="5QGA">
    <property type="method" value="X-ray"/>
    <property type="resolution" value="1.65 A"/>
    <property type="chains" value="A=1-321"/>
</dbReference>
<dbReference type="PDB" id="5QGB">
    <property type="method" value="X-ray"/>
    <property type="resolution" value="1.55 A"/>
    <property type="chains" value="A=1-321"/>
</dbReference>
<dbReference type="PDB" id="5QGC">
    <property type="method" value="X-ray"/>
    <property type="resolution" value="1.59 A"/>
    <property type="chains" value="A=1-321"/>
</dbReference>
<dbReference type="PDB" id="5QGD">
    <property type="method" value="X-ray"/>
    <property type="resolution" value="1.66 A"/>
    <property type="chains" value="A=1-321"/>
</dbReference>
<dbReference type="PDB" id="5QGE">
    <property type="method" value="X-ray"/>
    <property type="resolution" value="1.70 A"/>
    <property type="chains" value="A=1-321"/>
</dbReference>
<dbReference type="PDB" id="5QGF">
    <property type="method" value="X-ray"/>
    <property type="resolution" value="1.51 A"/>
    <property type="chains" value="A=1-321"/>
</dbReference>
<dbReference type="PDB" id="5T19">
    <property type="method" value="X-ray"/>
    <property type="resolution" value="2.10 A"/>
    <property type="chains" value="A=1-321"/>
</dbReference>
<dbReference type="PDB" id="6B8E">
    <property type="method" value="X-ray"/>
    <property type="resolution" value="1.82 A"/>
    <property type="chains" value="A=1-321"/>
</dbReference>
<dbReference type="PDB" id="6B8T">
    <property type="method" value="X-ray"/>
    <property type="resolution" value="1.85 A"/>
    <property type="chains" value="A=1-321"/>
</dbReference>
<dbReference type="PDB" id="6B8X">
    <property type="method" value="X-ray"/>
    <property type="resolution" value="1.74 A"/>
    <property type="chains" value="A=1-321"/>
</dbReference>
<dbReference type="PDB" id="6B8Z">
    <property type="method" value="X-ray"/>
    <property type="resolution" value="1.80 A"/>
    <property type="chains" value="A=1-321"/>
</dbReference>
<dbReference type="PDB" id="6B90">
    <property type="method" value="X-ray"/>
    <property type="resolution" value="1.95 A"/>
    <property type="chains" value="A=1-321"/>
</dbReference>
<dbReference type="PDB" id="6B95">
    <property type="method" value="X-ray"/>
    <property type="resolution" value="1.95 A"/>
    <property type="chains" value="A=1-321"/>
</dbReference>
<dbReference type="PDB" id="6BAI">
    <property type="method" value="X-ray"/>
    <property type="resolution" value="1.95 A"/>
    <property type="chains" value="A=1-321"/>
</dbReference>
<dbReference type="PDB" id="6CWU">
    <property type="method" value="X-ray"/>
    <property type="resolution" value="2.08 A"/>
    <property type="chains" value="A=1-321"/>
</dbReference>
<dbReference type="PDB" id="6CWV">
    <property type="method" value="X-ray"/>
    <property type="resolution" value="1.98 A"/>
    <property type="chains" value="A=1-321"/>
</dbReference>
<dbReference type="PDB" id="6NTP">
    <property type="method" value="X-ray"/>
    <property type="resolution" value="1.89 A"/>
    <property type="chains" value="A=1-298"/>
</dbReference>
<dbReference type="PDB" id="6OL4">
    <property type="method" value="X-ray"/>
    <property type="resolution" value="2.15 A"/>
    <property type="chains" value="A=2-297"/>
</dbReference>
<dbReference type="PDB" id="6OLQ">
    <property type="method" value="X-ray"/>
    <property type="resolution" value="2.10 A"/>
    <property type="chains" value="A=2-298"/>
</dbReference>
<dbReference type="PDB" id="6OLV">
    <property type="method" value="X-ray"/>
    <property type="resolution" value="2.10 A"/>
    <property type="chains" value="A=2-297"/>
</dbReference>
<dbReference type="PDB" id="6OMY">
    <property type="method" value="X-ray"/>
    <property type="resolution" value="2.10 A"/>
    <property type="chains" value="A=2-298"/>
</dbReference>
<dbReference type="PDB" id="6PFW">
    <property type="method" value="X-ray"/>
    <property type="resolution" value="2.34 A"/>
    <property type="chains" value="A=2-298"/>
</dbReference>
<dbReference type="PDB" id="6PG0">
    <property type="method" value="X-ray"/>
    <property type="resolution" value="2.10 A"/>
    <property type="chains" value="A=2-298"/>
</dbReference>
<dbReference type="PDB" id="6PGT">
    <property type="method" value="X-ray"/>
    <property type="resolution" value="2.20 A"/>
    <property type="chains" value="A=2-299"/>
</dbReference>
<dbReference type="PDB" id="6PHA">
    <property type="method" value="X-ray"/>
    <property type="resolution" value="2.30 A"/>
    <property type="chains" value="A=2-298"/>
</dbReference>
<dbReference type="PDB" id="6PHS">
    <property type="method" value="X-ray"/>
    <property type="resolution" value="2.13 A"/>
    <property type="chains" value="A=2-298"/>
</dbReference>
<dbReference type="PDB" id="6PM8">
    <property type="method" value="X-ray"/>
    <property type="resolution" value="2.06 A"/>
    <property type="chains" value="A=2-298"/>
</dbReference>
<dbReference type="PDB" id="6W30">
    <property type="method" value="X-ray"/>
    <property type="resolution" value="2.10 A"/>
    <property type="chains" value="A=1-321"/>
</dbReference>
<dbReference type="PDB" id="6XE8">
    <property type="method" value="X-ray"/>
    <property type="resolution" value="1.95 A"/>
    <property type="chains" value="A=1-321"/>
</dbReference>
<dbReference type="PDB" id="6XEA">
    <property type="method" value="X-ray"/>
    <property type="resolution" value="1.55 A"/>
    <property type="chains" value="A=1-321"/>
</dbReference>
<dbReference type="PDB" id="6XED">
    <property type="method" value="X-ray"/>
    <property type="resolution" value="1.79 A"/>
    <property type="chains" value="A=1-321"/>
</dbReference>
<dbReference type="PDB" id="6XEE">
    <property type="method" value="X-ray"/>
    <property type="resolution" value="2.50 A"/>
    <property type="chains" value="A=1-321"/>
</dbReference>
<dbReference type="PDB" id="6XEF">
    <property type="method" value="X-ray"/>
    <property type="resolution" value="2.05 A"/>
    <property type="chains" value="A=1-321"/>
</dbReference>
<dbReference type="PDB" id="6XEG">
    <property type="method" value="X-ray"/>
    <property type="resolution" value="2.55 A"/>
    <property type="chains" value="A=1-321"/>
</dbReference>
<dbReference type="PDB" id="7FQM">
    <property type="method" value="X-ray"/>
    <property type="resolution" value="1.94 A"/>
    <property type="chains" value="A=1-321"/>
</dbReference>
<dbReference type="PDB" id="7FQN">
    <property type="method" value="X-ray"/>
    <property type="resolution" value="2.04 A"/>
    <property type="chains" value="A=1-321"/>
</dbReference>
<dbReference type="PDB" id="7FQO">
    <property type="method" value="X-ray"/>
    <property type="resolution" value="1.93 A"/>
    <property type="chains" value="A=1-321"/>
</dbReference>
<dbReference type="PDB" id="7FQP">
    <property type="method" value="X-ray"/>
    <property type="resolution" value="1.88 A"/>
    <property type="chains" value="A=1-321"/>
</dbReference>
<dbReference type="PDB" id="7FQQ">
    <property type="method" value="X-ray"/>
    <property type="resolution" value="1.88 A"/>
    <property type="chains" value="A=1-321"/>
</dbReference>
<dbReference type="PDB" id="7FQR">
    <property type="method" value="X-ray"/>
    <property type="resolution" value="1.90 A"/>
    <property type="chains" value="A=1-321"/>
</dbReference>
<dbReference type="PDB" id="7FQS">
    <property type="method" value="X-ray"/>
    <property type="resolution" value="2.12 A"/>
    <property type="chains" value="A=1-321"/>
</dbReference>
<dbReference type="PDB" id="7FQT">
    <property type="method" value="X-ray"/>
    <property type="resolution" value="2.54 A"/>
    <property type="chains" value="A=1-321"/>
</dbReference>
<dbReference type="PDB" id="7FQU">
    <property type="method" value="X-ray"/>
    <property type="resolution" value="1.86 A"/>
    <property type="chains" value="A=1-321"/>
</dbReference>
<dbReference type="PDB" id="7FQV">
    <property type="method" value="X-ray"/>
    <property type="resolution" value="2.04 A"/>
    <property type="chains" value="A=1-321"/>
</dbReference>
<dbReference type="PDB" id="7FQW">
    <property type="method" value="X-ray"/>
    <property type="resolution" value="2.17 A"/>
    <property type="chains" value="A=1-321"/>
</dbReference>
<dbReference type="PDB" id="7FQX">
    <property type="method" value="X-ray"/>
    <property type="resolution" value="2.46 A"/>
    <property type="chains" value="A=1-321"/>
</dbReference>
<dbReference type="PDB" id="7FQY">
    <property type="method" value="X-ray"/>
    <property type="resolution" value="2.13 A"/>
    <property type="chains" value="A=1-321"/>
</dbReference>
<dbReference type="PDB" id="7FQZ">
    <property type="method" value="X-ray"/>
    <property type="resolution" value="2.09 A"/>
    <property type="chains" value="A=1-321"/>
</dbReference>
<dbReference type="PDB" id="7FRE">
    <property type="method" value="X-ray"/>
    <property type="resolution" value="1.85 A"/>
    <property type="chains" value="A=1-321"/>
</dbReference>
<dbReference type="PDB" id="7FRF">
    <property type="method" value="X-ray"/>
    <property type="resolution" value="2.15 A"/>
    <property type="chains" value="A=1-321"/>
</dbReference>
<dbReference type="PDB" id="7FRG">
    <property type="method" value="X-ray"/>
    <property type="resolution" value="1.84 A"/>
    <property type="chains" value="A=1-321"/>
</dbReference>
<dbReference type="PDB" id="7FRH">
    <property type="method" value="X-ray"/>
    <property type="resolution" value="1.84 A"/>
    <property type="chains" value="A=1-321"/>
</dbReference>
<dbReference type="PDB" id="7FRI">
    <property type="method" value="X-ray"/>
    <property type="resolution" value="1.86 A"/>
    <property type="chains" value="A=1-321"/>
</dbReference>
<dbReference type="PDB" id="7FRJ">
    <property type="method" value="X-ray"/>
    <property type="resolution" value="1.80 A"/>
    <property type="chains" value="A=1-321"/>
</dbReference>
<dbReference type="PDB" id="7FRK">
    <property type="method" value="X-ray"/>
    <property type="resolution" value="1.80 A"/>
    <property type="chains" value="A=1-321"/>
</dbReference>
<dbReference type="PDB" id="7FRL">
    <property type="method" value="X-ray"/>
    <property type="resolution" value="1.79 A"/>
    <property type="chains" value="A=1-321"/>
</dbReference>
<dbReference type="PDB" id="7FRM">
    <property type="method" value="X-ray"/>
    <property type="resolution" value="1.91 A"/>
    <property type="chains" value="A=1-321"/>
</dbReference>
<dbReference type="PDB" id="7FRN">
    <property type="method" value="X-ray"/>
    <property type="resolution" value="1.85 A"/>
    <property type="chains" value="A=1-321"/>
</dbReference>
<dbReference type="PDB" id="7FRO">
    <property type="method" value="X-ray"/>
    <property type="resolution" value="1.93 A"/>
    <property type="chains" value="A=1-321"/>
</dbReference>
<dbReference type="PDB" id="7FRP">
    <property type="method" value="X-ray"/>
    <property type="resolution" value="1.77 A"/>
    <property type="chains" value="A=1-321"/>
</dbReference>
<dbReference type="PDB" id="7FRQ">
    <property type="method" value="X-ray"/>
    <property type="resolution" value="2.01 A"/>
    <property type="chains" value="A=1-321"/>
</dbReference>
<dbReference type="PDB" id="7FRR">
    <property type="method" value="X-ray"/>
    <property type="resolution" value="1.83 A"/>
    <property type="chains" value="A=1-321"/>
</dbReference>
<dbReference type="PDB" id="7FRS">
    <property type="method" value="X-ray"/>
    <property type="resolution" value="1.83 A"/>
    <property type="chains" value="A=1-321"/>
</dbReference>
<dbReference type="PDB" id="7FRT">
    <property type="method" value="X-ray"/>
    <property type="resolution" value="1.86 A"/>
    <property type="chains" value="A=1-321"/>
</dbReference>
<dbReference type="PDB" id="7FRU">
    <property type="method" value="X-ray"/>
    <property type="resolution" value="1.98 A"/>
    <property type="chains" value="A=1-321"/>
</dbReference>
<dbReference type="PDB" id="7GS7">
    <property type="method" value="X-ray"/>
    <property type="resolution" value="1.66 A"/>
    <property type="chains" value="A=1-321"/>
</dbReference>
<dbReference type="PDB" id="7GS8">
    <property type="method" value="X-ray"/>
    <property type="resolution" value="1.67 A"/>
    <property type="chains" value="A=1-321"/>
</dbReference>
<dbReference type="PDB" id="7GS9">
    <property type="method" value="X-ray"/>
    <property type="resolution" value="1.96 A"/>
    <property type="chains" value="A=1-321"/>
</dbReference>
<dbReference type="PDB" id="7GSA">
    <property type="method" value="X-ray"/>
    <property type="resolution" value="1.72 A"/>
    <property type="chains" value="A=1-321"/>
</dbReference>
<dbReference type="PDB" id="7GSB">
    <property type="method" value="X-ray"/>
    <property type="resolution" value="1.72 A"/>
    <property type="chains" value="A=1-321"/>
</dbReference>
<dbReference type="PDB" id="7GSC">
    <property type="method" value="X-ray"/>
    <property type="resolution" value="1.69 A"/>
    <property type="chains" value="A=1-321"/>
</dbReference>
<dbReference type="PDB" id="7GSD">
    <property type="method" value="X-ray"/>
    <property type="resolution" value="1.80 A"/>
    <property type="chains" value="A=1-321"/>
</dbReference>
<dbReference type="PDB" id="7GSE">
    <property type="method" value="X-ray"/>
    <property type="resolution" value="1.89 A"/>
    <property type="chains" value="A=1-321"/>
</dbReference>
<dbReference type="PDB" id="7GSF">
    <property type="method" value="X-ray"/>
    <property type="resolution" value="1.78 A"/>
    <property type="chains" value="A=1-321"/>
</dbReference>
<dbReference type="PDB" id="7GSG">
    <property type="method" value="X-ray"/>
    <property type="resolution" value="1.90 A"/>
    <property type="chains" value="A=1-321"/>
</dbReference>
<dbReference type="PDB" id="7GSH">
    <property type="method" value="X-ray"/>
    <property type="resolution" value="1.88 A"/>
    <property type="chains" value="A=1-321"/>
</dbReference>
<dbReference type="PDB" id="7GSI">
    <property type="method" value="X-ray"/>
    <property type="resolution" value="1.71 A"/>
    <property type="chains" value="A=1-321"/>
</dbReference>
<dbReference type="PDB" id="7GSJ">
    <property type="method" value="X-ray"/>
    <property type="resolution" value="1.77 A"/>
    <property type="chains" value="A=1-321"/>
</dbReference>
<dbReference type="PDB" id="7GSK">
    <property type="method" value="X-ray"/>
    <property type="resolution" value="1.84 A"/>
    <property type="chains" value="A=1-321"/>
</dbReference>
<dbReference type="PDB" id="7GSL">
    <property type="method" value="X-ray"/>
    <property type="resolution" value="1.77 A"/>
    <property type="chains" value="A=1-321"/>
</dbReference>
<dbReference type="PDB" id="7GSM">
    <property type="method" value="X-ray"/>
    <property type="resolution" value="2.03 A"/>
    <property type="chains" value="A=1-321"/>
</dbReference>
<dbReference type="PDB" id="7GSN">
    <property type="method" value="X-ray"/>
    <property type="resolution" value="1.87 A"/>
    <property type="chains" value="A=1-321"/>
</dbReference>
<dbReference type="PDB" id="7GSO">
    <property type="method" value="X-ray"/>
    <property type="resolution" value="1.72 A"/>
    <property type="chains" value="A=1-321"/>
</dbReference>
<dbReference type="PDB" id="7GSQ">
    <property type="method" value="X-ray"/>
    <property type="resolution" value="1.73 A"/>
    <property type="chains" value="A=1-321"/>
</dbReference>
<dbReference type="PDB" id="7GSR">
    <property type="method" value="X-ray"/>
    <property type="resolution" value="1.69 A"/>
    <property type="chains" value="A=1-321"/>
</dbReference>
<dbReference type="PDB" id="7GST">
    <property type="method" value="X-ray"/>
    <property type="resolution" value="1.64 A"/>
    <property type="chains" value="A=1-321"/>
</dbReference>
<dbReference type="PDB" id="7GSU">
    <property type="method" value="X-ray"/>
    <property type="resolution" value="1.65 A"/>
    <property type="chains" value="A=1-321"/>
</dbReference>
<dbReference type="PDB" id="7GSV">
    <property type="method" value="X-ray"/>
    <property type="resolution" value="1.92 A"/>
    <property type="chains" value="A=1-321"/>
</dbReference>
<dbReference type="PDB" id="7GSW">
    <property type="method" value="X-ray"/>
    <property type="resolution" value="1.79 A"/>
    <property type="chains" value="A=1-321"/>
</dbReference>
<dbReference type="PDB" id="7GSX">
    <property type="method" value="X-ray"/>
    <property type="resolution" value="1.67 A"/>
    <property type="chains" value="A=1-321"/>
</dbReference>
<dbReference type="PDB" id="7GSY">
    <property type="method" value="X-ray"/>
    <property type="resolution" value="1.97 A"/>
    <property type="chains" value="A=1-321"/>
</dbReference>
<dbReference type="PDB" id="7GSZ">
    <property type="method" value="X-ray"/>
    <property type="resolution" value="1.91 A"/>
    <property type="chains" value="A=1-321"/>
</dbReference>
<dbReference type="PDB" id="7GT0">
    <property type="method" value="X-ray"/>
    <property type="resolution" value="1.76 A"/>
    <property type="chains" value="A=1-321"/>
</dbReference>
<dbReference type="PDB" id="7GT1">
    <property type="method" value="X-ray"/>
    <property type="resolution" value="1.91 A"/>
    <property type="chains" value="A=1-321"/>
</dbReference>
<dbReference type="PDB" id="7GT2">
    <property type="method" value="X-ray"/>
    <property type="resolution" value="1.90 A"/>
    <property type="chains" value="A=1-321"/>
</dbReference>
<dbReference type="PDB" id="7GT3">
    <property type="method" value="X-ray"/>
    <property type="resolution" value="1.59 A"/>
    <property type="chains" value="A=1-321"/>
</dbReference>
<dbReference type="PDB" id="7GT4">
    <property type="method" value="X-ray"/>
    <property type="resolution" value="1.75 A"/>
    <property type="chains" value="A=1-321"/>
</dbReference>
<dbReference type="PDB" id="7GT5">
    <property type="method" value="X-ray"/>
    <property type="resolution" value="1.61 A"/>
    <property type="chains" value="A=1-321"/>
</dbReference>
<dbReference type="PDB" id="7GT6">
    <property type="method" value="X-ray"/>
    <property type="resolution" value="1.66 A"/>
    <property type="chains" value="A=1-321"/>
</dbReference>
<dbReference type="PDB" id="7GT7">
    <property type="method" value="X-ray"/>
    <property type="resolution" value="1.84 A"/>
    <property type="chains" value="A=1-321"/>
</dbReference>
<dbReference type="PDB" id="7GT8">
    <property type="method" value="X-ray"/>
    <property type="resolution" value="1.91 A"/>
    <property type="chains" value="A=1-321"/>
</dbReference>
<dbReference type="PDB" id="7GT9">
    <property type="method" value="X-ray"/>
    <property type="resolution" value="1.90 A"/>
    <property type="chains" value="A=1-321"/>
</dbReference>
<dbReference type="PDB" id="7GTA">
    <property type="method" value="X-ray"/>
    <property type="resolution" value="2.06 A"/>
    <property type="chains" value="A=1-321"/>
</dbReference>
<dbReference type="PDB" id="7GTB">
    <property type="method" value="X-ray"/>
    <property type="resolution" value="1.86 A"/>
    <property type="chains" value="A=1-321"/>
</dbReference>
<dbReference type="PDB" id="7GTC">
    <property type="method" value="X-ray"/>
    <property type="resolution" value="1.92 A"/>
    <property type="chains" value="A=1-321"/>
</dbReference>
<dbReference type="PDB" id="7GTD">
    <property type="method" value="X-ray"/>
    <property type="resolution" value="1.91 A"/>
    <property type="chains" value="A=1-321"/>
</dbReference>
<dbReference type="PDB" id="7GTE">
    <property type="method" value="X-ray"/>
    <property type="resolution" value="1.90 A"/>
    <property type="chains" value="A=1-321"/>
</dbReference>
<dbReference type="PDB" id="7GTF">
    <property type="method" value="X-ray"/>
    <property type="resolution" value="1.97 A"/>
    <property type="chains" value="A=1-321"/>
</dbReference>
<dbReference type="PDB" id="7GTG">
    <property type="method" value="X-ray"/>
    <property type="resolution" value="1.69 A"/>
    <property type="chains" value="A=1-321"/>
</dbReference>
<dbReference type="PDB" id="7GTH">
    <property type="method" value="X-ray"/>
    <property type="resolution" value="1.66 A"/>
    <property type="chains" value="A=1-321"/>
</dbReference>
<dbReference type="PDB" id="7GTI">
    <property type="method" value="X-ray"/>
    <property type="resolution" value="1.66 A"/>
    <property type="chains" value="A=1-321"/>
</dbReference>
<dbReference type="PDB" id="7GTJ">
    <property type="method" value="X-ray"/>
    <property type="resolution" value="1.83 A"/>
    <property type="chains" value="A=1-321"/>
</dbReference>
<dbReference type="PDB" id="7GTK">
    <property type="method" value="X-ray"/>
    <property type="resolution" value="1.76 A"/>
    <property type="chains" value="A=1-321"/>
</dbReference>
<dbReference type="PDB" id="7GTL">
    <property type="method" value="X-ray"/>
    <property type="resolution" value="1.83 A"/>
    <property type="chains" value="A=1-321"/>
</dbReference>
<dbReference type="PDB" id="7GTM">
    <property type="method" value="X-ray"/>
    <property type="resolution" value="1.72 A"/>
    <property type="chains" value="A=1-321"/>
</dbReference>
<dbReference type="PDB" id="7GTN">
    <property type="method" value="X-ray"/>
    <property type="resolution" value="1.66 A"/>
    <property type="chains" value="A=1-321"/>
</dbReference>
<dbReference type="PDB" id="7GTO">
    <property type="method" value="X-ray"/>
    <property type="resolution" value="1.65 A"/>
    <property type="chains" value="A=1-321"/>
</dbReference>
<dbReference type="PDB" id="7GTP">
    <property type="method" value="X-ray"/>
    <property type="resolution" value="2.47 A"/>
    <property type="chains" value="A=1-321"/>
</dbReference>
<dbReference type="PDB" id="7GTQ">
    <property type="method" value="X-ray"/>
    <property type="resolution" value="2.09 A"/>
    <property type="chains" value="A=1-321"/>
</dbReference>
<dbReference type="PDB" id="7GTR">
    <property type="method" value="X-ray"/>
    <property type="resolution" value="1.78 A"/>
    <property type="chains" value="A=1-321"/>
</dbReference>
<dbReference type="PDB" id="7GTS">
    <property type="method" value="X-ray"/>
    <property type="resolution" value="1.80 A"/>
    <property type="chains" value="A=1-321"/>
</dbReference>
<dbReference type="PDB" id="7GTT">
    <property type="method" value="X-ray"/>
    <property type="resolution" value="1.93 A"/>
    <property type="chains" value="A=1-321"/>
</dbReference>
<dbReference type="PDB" id="7GTU">
    <property type="method" value="X-ray"/>
    <property type="resolution" value="2.08 A"/>
    <property type="chains" value="A=1-321"/>
</dbReference>
<dbReference type="PDB" id="7GTV">
    <property type="method" value="X-ray"/>
    <property type="resolution" value="1.72 A"/>
    <property type="chains" value="A=1-321"/>
</dbReference>
<dbReference type="PDB" id="7GTW">
    <property type="method" value="X-ray"/>
    <property type="resolution" value="1.51 A"/>
    <property type="chains" value="A=1-321"/>
</dbReference>
<dbReference type="PDB" id="7GTX">
    <property type="method" value="X-ray"/>
    <property type="resolution" value="1.51 A"/>
    <property type="chains" value="A=1-321"/>
</dbReference>
<dbReference type="PDB" id="7GTY">
    <property type="method" value="X-ray"/>
    <property type="resolution" value="1.54 A"/>
    <property type="chains" value="A=1-321"/>
</dbReference>
<dbReference type="PDB" id="7GTZ">
    <property type="method" value="X-ray"/>
    <property type="resolution" value="1.60 A"/>
    <property type="chains" value="A=1-321"/>
</dbReference>
<dbReference type="PDB" id="7GU0">
    <property type="method" value="X-ray"/>
    <property type="resolution" value="1.66 A"/>
    <property type="chains" value="A=1-321"/>
</dbReference>
<dbReference type="PDB" id="7GU1">
    <property type="method" value="X-ray"/>
    <property type="resolution" value="1.59 A"/>
    <property type="chains" value="A=1-321"/>
</dbReference>
<dbReference type="PDB" id="7GU2">
    <property type="method" value="X-ray"/>
    <property type="resolution" value="1.80 A"/>
    <property type="chains" value="A=1-321"/>
</dbReference>
<dbReference type="PDB" id="7GU3">
    <property type="method" value="X-ray"/>
    <property type="resolution" value="1.74 A"/>
    <property type="chains" value="A=1-321"/>
</dbReference>
<dbReference type="PDB" id="7GU4">
    <property type="method" value="X-ray"/>
    <property type="resolution" value="1.59 A"/>
    <property type="chains" value="A=1-321"/>
</dbReference>
<dbReference type="PDB" id="7GU5">
    <property type="method" value="X-ray"/>
    <property type="resolution" value="1.52 A"/>
    <property type="chains" value="A=1-321"/>
</dbReference>
<dbReference type="PDB" id="7GU6">
    <property type="method" value="X-ray"/>
    <property type="resolution" value="1.56 A"/>
    <property type="chains" value="A=1-321"/>
</dbReference>
<dbReference type="PDB" id="7GU7">
    <property type="method" value="X-ray"/>
    <property type="resolution" value="1.70 A"/>
    <property type="chains" value="A=1-321"/>
</dbReference>
<dbReference type="PDB" id="7GU8">
    <property type="method" value="X-ray"/>
    <property type="resolution" value="1.59 A"/>
    <property type="chains" value="A=1-321"/>
</dbReference>
<dbReference type="PDB" id="7GU9">
    <property type="method" value="X-ray"/>
    <property type="resolution" value="1.53 A"/>
    <property type="chains" value="A=1-321"/>
</dbReference>
<dbReference type="PDB" id="7GUA">
    <property type="method" value="X-ray"/>
    <property type="resolution" value="1.63 A"/>
    <property type="chains" value="A=1-321"/>
</dbReference>
<dbReference type="PDB" id="7GUB">
    <property type="method" value="X-ray"/>
    <property type="resolution" value="1.94 A"/>
    <property type="chains" value="A=1-321"/>
</dbReference>
<dbReference type="PDB" id="7GUC">
    <property type="method" value="X-ray"/>
    <property type="resolution" value="1.78 A"/>
    <property type="chains" value="A=1-321"/>
</dbReference>
<dbReference type="PDB" id="7KEN">
    <property type="method" value="X-ray"/>
    <property type="resolution" value="1.80 A"/>
    <property type="chains" value="A=2-323"/>
</dbReference>
<dbReference type="PDB" id="7KEY">
    <property type="method" value="X-ray"/>
    <property type="resolution" value="1.77 A"/>
    <property type="chains" value="A=2-283"/>
</dbReference>
<dbReference type="PDB" id="7KLX">
    <property type="method" value="X-ray"/>
    <property type="resolution" value="1.84 A"/>
    <property type="chains" value="A=2-283"/>
</dbReference>
<dbReference type="PDB" id="7L0C">
    <property type="method" value="X-ray"/>
    <property type="resolution" value="1.80 A"/>
    <property type="chains" value="A=1-321"/>
</dbReference>
<dbReference type="PDB" id="7L0H">
    <property type="method" value="X-ray"/>
    <property type="resolution" value="2.10 A"/>
    <property type="chains" value="A=1-321"/>
</dbReference>
<dbReference type="PDB" id="7LFO">
    <property type="method" value="X-ray"/>
    <property type="resolution" value="1.94 A"/>
    <property type="chains" value="A=1-321"/>
</dbReference>
<dbReference type="PDB" id="7MKZ">
    <property type="method" value="X-ray"/>
    <property type="resolution" value="1.40 A"/>
    <property type="chains" value="A=1-301"/>
</dbReference>
<dbReference type="PDB" id="7MM1">
    <property type="method" value="X-ray"/>
    <property type="resolution" value="1.85 A"/>
    <property type="chains" value="A=1-321"/>
</dbReference>
<dbReference type="PDB" id="7MN7">
    <property type="method" value="X-ray"/>
    <property type="resolution" value="1.95 A"/>
    <property type="chains" value="A=1-301"/>
</dbReference>
<dbReference type="PDB" id="7MN9">
    <property type="method" value="X-ray"/>
    <property type="resolution" value="1.24 A"/>
    <property type="chains" value="A=1-284"/>
</dbReference>
<dbReference type="PDB" id="7MNA">
    <property type="method" value="X-ray"/>
    <property type="resolution" value="1.47 A"/>
    <property type="chains" value="A=1-284"/>
</dbReference>
<dbReference type="PDB" id="7MNB">
    <property type="method" value="X-ray"/>
    <property type="resolution" value="2.20 A"/>
    <property type="chains" value="A=1-301"/>
</dbReference>
<dbReference type="PDB" id="7MNC">
    <property type="method" value="X-ray"/>
    <property type="resolution" value="1.85 A"/>
    <property type="chains" value="A=1-301"/>
</dbReference>
<dbReference type="PDB" id="7MND">
    <property type="method" value="X-ray"/>
    <property type="resolution" value="2.29 A"/>
    <property type="chains" value="A=1-301"/>
</dbReference>
<dbReference type="PDB" id="7MNE">
    <property type="method" value="X-ray"/>
    <property type="resolution" value="1.60 A"/>
    <property type="chains" value="A=1-301"/>
</dbReference>
<dbReference type="PDB" id="7MNF">
    <property type="method" value="X-ray"/>
    <property type="resolution" value="1.70 A"/>
    <property type="chains" value="A=1-301"/>
</dbReference>
<dbReference type="PDB" id="7MOU">
    <property type="method" value="X-ray"/>
    <property type="resolution" value="1.48 A"/>
    <property type="chains" value="A=1-284"/>
</dbReference>
<dbReference type="PDB" id="7MOV">
    <property type="method" value="X-ray"/>
    <property type="resolution" value="1.65 A"/>
    <property type="chains" value="A/B=1-301"/>
</dbReference>
<dbReference type="PDB" id="7MOW">
    <property type="method" value="X-ray"/>
    <property type="resolution" value="1.80 A"/>
    <property type="chains" value="A=1-301"/>
</dbReference>
<dbReference type="PDB" id="7RIN">
    <property type="method" value="X-ray"/>
    <property type="resolution" value="1.85 A"/>
    <property type="chains" value="A=1-321"/>
</dbReference>
<dbReference type="PDB" id="7S4F">
    <property type="method" value="X-ray"/>
    <property type="resolution" value="1.65 A"/>
    <property type="chains" value="A=1-298"/>
</dbReference>
<dbReference type="PDB" id="8DU7">
    <property type="method" value="X-ray"/>
    <property type="resolution" value="2.40 A"/>
    <property type="chains" value="A=1-284"/>
</dbReference>
<dbReference type="PDB" id="8EXI">
    <property type="method" value="X-ray"/>
    <property type="resolution" value="1.60 A"/>
    <property type="chains" value="A=1-297"/>
</dbReference>
<dbReference type="PDB" id="8EXJ">
    <property type="method" value="X-ray"/>
    <property type="resolution" value="2.30 A"/>
    <property type="chains" value="A=1-299"/>
</dbReference>
<dbReference type="PDB" id="8EXK">
    <property type="method" value="X-ray"/>
    <property type="resolution" value="2.10 A"/>
    <property type="chains" value="A=3-299"/>
</dbReference>
<dbReference type="PDB" id="8EXM">
    <property type="method" value="X-ray"/>
    <property type="resolution" value="2.35 A"/>
    <property type="chains" value="A=1-299"/>
</dbReference>
<dbReference type="PDB" id="8EXN">
    <property type="method" value="X-ray"/>
    <property type="resolution" value="2.15 A"/>
    <property type="chains" value="A=1-299"/>
</dbReference>
<dbReference type="PDB" id="8EYA">
    <property type="method" value="X-ray"/>
    <property type="resolution" value="2.10 A"/>
    <property type="chains" value="A/B=1-301"/>
</dbReference>
<dbReference type="PDB" id="8EYB">
    <property type="method" value="X-ray"/>
    <property type="resolution" value="2.35 A"/>
    <property type="chains" value="A/B=2-297"/>
</dbReference>
<dbReference type="PDB" id="8EYC">
    <property type="method" value="X-ray"/>
    <property type="resolution" value="2.99 A"/>
    <property type="chains" value="A=1-299"/>
</dbReference>
<dbReference type="PDB" id="8F88">
    <property type="method" value="X-ray"/>
    <property type="resolution" value="3.10 A"/>
    <property type="chains" value="A/B/C=1-321"/>
</dbReference>
<dbReference type="PDB" id="8G65">
    <property type="method" value="X-ray"/>
    <property type="resolution" value="1.45 A"/>
    <property type="chains" value="A/B=1-298"/>
</dbReference>
<dbReference type="PDB" id="8G67">
    <property type="method" value="X-ray"/>
    <property type="resolution" value="1.53 A"/>
    <property type="chains" value="A/B=1-298"/>
</dbReference>
<dbReference type="PDB" id="8G68">
    <property type="method" value="X-ray"/>
    <property type="resolution" value="1.82 A"/>
    <property type="chains" value="A/B=1-298"/>
</dbReference>
<dbReference type="PDB" id="8G69">
    <property type="method" value="X-ray"/>
    <property type="resolution" value="1.53 A"/>
    <property type="chains" value="A/B=1-298"/>
</dbReference>
<dbReference type="PDB" id="8G6A">
    <property type="method" value="X-ray"/>
    <property type="resolution" value="1.62 A"/>
    <property type="chains" value="A/B=1-298"/>
</dbReference>
<dbReference type="PDB" id="8SKL">
    <property type="method" value="X-ray"/>
    <property type="resolution" value="1.55 A"/>
    <property type="chains" value="A=1-321"/>
</dbReference>
<dbReference type="PDB" id="8U1E">
    <property type="method" value="X-ray"/>
    <property type="resolution" value="1.43 A"/>
    <property type="chains" value="A/B=1-321"/>
</dbReference>
<dbReference type="PDB" id="8XOY">
    <property type="method" value="X-ray"/>
    <property type="resolution" value="1.55 A"/>
    <property type="chains" value="A=1-321"/>
</dbReference>
<dbReference type="PDB" id="9C66">
    <property type="method" value="X-ray"/>
    <property type="resolution" value="1.40 A"/>
    <property type="chains" value="B=304-313"/>
</dbReference>
<dbReference type="PDB" id="9CYO">
    <property type="method" value="X-ray"/>
    <property type="resolution" value="1.94 A"/>
    <property type="chains" value="A=1-321"/>
</dbReference>
<dbReference type="PDB" id="9CYP">
    <property type="method" value="X-ray"/>
    <property type="resolution" value="1.99 A"/>
    <property type="chains" value="A=1-321"/>
</dbReference>
<dbReference type="PDB" id="9CYQ">
    <property type="method" value="X-ray"/>
    <property type="resolution" value="2.30 A"/>
    <property type="chains" value="A=1-321"/>
</dbReference>
<dbReference type="PDB" id="9CYR">
    <property type="method" value="X-ray"/>
    <property type="resolution" value="1.65 A"/>
    <property type="chains" value="A=1-321"/>
</dbReference>
<dbReference type="PDBsum" id="1A5Y"/>
<dbReference type="PDBsum" id="1AAX"/>
<dbReference type="PDBsum" id="1BZC"/>
<dbReference type="PDBsum" id="1BZH"/>
<dbReference type="PDBsum" id="1BZJ"/>
<dbReference type="PDBsum" id="1C83"/>
<dbReference type="PDBsum" id="1C84"/>
<dbReference type="PDBsum" id="1C85"/>
<dbReference type="PDBsum" id="1C86"/>
<dbReference type="PDBsum" id="1C87"/>
<dbReference type="PDBsum" id="1C88"/>
<dbReference type="PDBsum" id="1ECV"/>
<dbReference type="PDBsum" id="1EEN"/>
<dbReference type="PDBsum" id="1EEO"/>
<dbReference type="PDBsum" id="1G1F"/>
<dbReference type="PDBsum" id="1G1G"/>
<dbReference type="PDBsum" id="1G1H"/>
<dbReference type="PDBsum" id="1G7F"/>
<dbReference type="PDBsum" id="1G7G"/>
<dbReference type="PDBsum" id="1GFY"/>
<dbReference type="PDBsum" id="1I57"/>
<dbReference type="PDBsum" id="1JF7"/>
<dbReference type="PDBsum" id="1KAK"/>
<dbReference type="PDBsum" id="1KAV"/>
<dbReference type="PDBsum" id="1L8G"/>
<dbReference type="PDBsum" id="1LQF"/>
<dbReference type="PDBsum" id="1NL9"/>
<dbReference type="PDBsum" id="1NNY"/>
<dbReference type="PDBsum" id="1NO6"/>
<dbReference type="PDBsum" id="1NWE"/>
<dbReference type="PDBsum" id="1NWL"/>
<dbReference type="PDBsum" id="1NZ7"/>
<dbReference type="PDBsum" id="1OEM"/>
<dbReference type="PDBsum" id="1OEO"/>
<dbReference type="PDBsum" id="1OES"/>
<dbReference type="PDBsum" id="1OET"/>
<dbReference type="PDBsum" id="1OEU"/>
<dbReference type="PDBsum" id="1OEV"/>
<dbReference type="PDBsum" id="1ONY"/>
<dbReference type="PDBsum" id="1ONZ"/>
<dbReference type="PDBsum" id="1PA1"/>
<dbReference type="PDBsum" id="1PH0"/>
<dbReference type="PDBsum" id="1PTT"/>
<dbReference type="PDBsum" id="1PTU"/>
<dbReference type="PDBsum" id="1PTV"/>
<dbReference type="PDBsum" id="1PTY"/>
<dbReference type="PDBsum" id="1PXH"/>
<dbReference type="PDBsum" id="1PYN"/>
<dbReference type="PDBsum" id="1Q1M"/>
<dbReference type="PDBsum" id="1Q6J"/>
<dbReference type="PDBsum" id="1Q6M"/>
<dbReference type="PDBsum" id="1Q6N"/>
<dbReference type="PDBsum" id="1Q6P"/>
<dbReference type="PDBsum" id="1Q6S"/>
<dbReference type="PDBsum" id="1Q6T"/>
<dbReference type="PDBsum" id="1QXK"/>
<dbReference type="PDBsum" id="1SUG"/>
<dbReference type="PDBsum" id="1T48"/>
<dbReference type="PDBsum" id="1T49"/>
<dbReference type="PDBsum" id="1T4J"/>
<dbReference type="PDBsum" id="1WAX"/>
<dbReference type="PDBsum" id="1XBO"/>
<dbReference type="PDBsum" id="2AZR"/>
<dbReference type="PDBsum" id="2B07"/>
<dbReference type="PDBsum" id="2B4S"/>
<dbReference type="PDBsum" id="2BGD"/>
<dbReference type="PDBsum" id="2BGE"/>
<dbReference type="PDBsum" id="2CM2"/>
<dbReference type="PDBsum" id="2CM3"/>
<dbReference type="PDBsum" id="2CM7"/>
<dbReference type="PDBsum" id="2CM8"/>
<dbReference type="PDBsum" id="2CMA"/>
<dbReference type="PDBsum" id="2CMB"/>
<dbReference type="PDBsum" id="2CMC"/>
<dbReference type="PDBsum" id="2CNE"/>
<dbReference type="PDBsum" id="2CNF"/>
<dbReference type="PDBsum" id="2CNG"/>
<dbReference type="PDBsum" id="2CNH"/>
<dbReference type="PDBsum" id="2CNI"/>
<dbReference type="PDBsum" id="2F6F"/>
<dbReference type="PDBsum" id="2F6T"/>
<dbReference type="PDBsum" id="2F6V"/>
<dbReference type="PDBsum" id="2F6W"/>
<dbReference type="PDBsum" id="2F6Y"/>
<dbReference type="PDBsum" id="2F6Z"/>
<dbReference type="PDBsum" id="2F70"/>
<dbReference type="PDBsum" id="2F71"/>
<dbReference type="PDBsum" id="2FJM"/>
<dbReference type="PDBsum" id="2FJN"/>
<dbReference type="PDBsum" id="2H4G"/>
<dbReference type="PDBsum" id="2H4K"/>
<dbReference type="PDBsum" id="2HB1"/>
<dbReference type="PDBsum" id="2HNP"/>
<dbReference type="PDBsum" id="2HNQ"/>
<dbReference type="PDBsum" id="2NT7"/>
<dbReference type="PDBsum" id="2NTA"/>
<dbReference type="PDBsum" id="2QBP"/>
<dbReference type="PDBsum" id="2QBQ"/>
<dbReference type="PDBsum" id="2QBR"/>
<dbReference type="PDBsum" id="2QBS"/>
<dbReference type="PDBsum" id="2VEU"/>
<dbReference type="PDBsum" id="2VEV"/>
<dbReference type="PDBsum" id="2VEW"/>
<dbReference type="PDBsum" id="2VEX"/>
<dbReference type="PDBsum" id="2VEY"/>
<dbReference type="PDBsum" id="2ZMM"/>
<dbReference type="PDBsum" id="2ZN7"/>
<dbReference type="PDBsum" id="3A5J"/>
<dbReference type="PDBsum" id="3A5K"/>
<dbReference type="PDBsum" id="3CWE"/>
<dbReference type="PDBsum" id="3D9C"/>
<dbReference type="PDBsum" id="3EAX"/>
<dbReference type="PDBsum" id="3EB1"/>
<dbReference type="PDBsum" id="3EU0"/>
<dbReference type="PDBsum" id="3I7Z"/>
<dbReference type="PDBsum" id="3I80"/>
<dbReference type="PDBsum" id="3QKP"/>
<dbReference type="PDBsum" id="3QKQ"/>
<dbReference type="PDBsum" id="3SME"/>
<dbReference type="PDBsum" id="3ZMP"/>
<dbReference type="PDBsum" id="3ZMQ"/>
<dbReference type="PDBsum" id="3ZV2"/>
<dbReference type="PDBsum" id="4BJO"/>
<dbReference type="PDBsum" id="4I8N"/>
<dbReference type="PDBsum" id="4QAH"/>
<dbReference type="PDBsum" id="4QAP"/>
<dbReference type="PDBsum" id="4QBE"/>
<dbReference type="PDBsum" id="4QBW"/>
<dbReference type="PDBsum" id="4Y14"/>
<dbReference type="PDBsum" id="4ZRT"/>
<dbReference type="PDBsum" id="5K9V"/>
<dbReference type="PDBsum" id="5K9W"/>
<dbReference type="PDBsum" id="5KA0"/>
<dbReference type="PDBsum" id="5KA1"/>
<dbReference type="PDBsum" id="5KA2"/>
<dbReference type="PDBsum" id="5KA3"/>
<dbReference type="PDBsum" id="5KA4"/>
<dbReference type="PDBsum" id="5KA7"/>
<dbReference type="PDBsum" id="5KA8"/>
<dbReference type="PDBsum" id="5KA9"/>
<dbReference type="PDBsum" id="5KAA"/>
<dbReference type="PDBsum" id="5KAB"/>
<dbReference type="PDBsum" id="5KAC"/>
<dbReference type="PDBsum" id="5KAD"/>
<dbReference type="PDBsum" id="5QDE"/>
<dbReference type="PDBsum" id="5QDF"/>
<dbReference type="PDBsum" id="5QDG"/>
<dbReference type="PDBsum" id="5QDH"/>
<dbReference type="PDBsum" id="5QDI"/>
<dbReference type="PDBsum" id="5QDJ"/>
<dbReference type="PDBsum" id="5QDK"/>
<dbReference type="PDBsum" id="5QDL"/>
<dbReference type="PDBsum" id="5QDM"/>
<dbReference type="PDBsum" id="5QDN"/>
<dbReference type="PDBsum" id="5QDO"/>
<dbReference type="PDBsum" id="5QDP"/>
<dbReference type="PDBsum" id="5QDQ"/>
<dbReference type="PDBsum" id="5QDR"/>
<dbReference type="PDBsum" id="5QDS"/>
<dbReference type="PDBsum" id="5QDT"/>
<dbReference type="PDBsum" id="5QDU"/>
<dbReference type="PDBsum" id="5QDV"/>
<dbReference type="PDBsum" id="5QDW"/>
<dbReference type="PDBsum" id="5QDX"/>
<dbReference type="PDBsum" id="5QDY"/>
<dbReference type="PDBsum" id="5QDZ"/>
<dbReference type="PDBsum" id="5QE0"/>
<dbReference type="PDBsum" id="5QE1"/>
<dbReference type="PDBsum" id="5QE2"/>
<dbReference type="PDBsum" id="5QE3"/>
<dbReference type="PDBsum" id="5QE4"/>
<dbReference type="PDBsum" id="5QE5"/>
<dbReference type="PDBsum" id="5QE6"/>
<dbReference type="PDBsum" id="5QE7"/>
<dbReference type="PDBsum" id="5QE8"/>
<dbReference type="PDBsum" id="5QE9"/>
<dbReference type="PDBsum" id="5QEA"/>
<dbReference type="PDBsum" id="5QEB"/>
<dbReference type="PDBsum" id="5QEC"/>
<dbReference type="PDBsum" id="5QED"/>
<dbReference type="PDBsum" id="5QEE"/>
<dbReference type="PDBsum" id="5QEF"/>
<dbReference type="PDBsum" id="5QEG"/>
<dbReference type="PDBsum" id="5QEH"/>
<dbReference type="PDBsum" id="5QEI"/>
<dbReference type="PDBsum" id="5QEJ"/>
<dbReference type="PDBsum" id="5QEK"/>
<dbReference type="PDBsum" id="5QEL"/>
<dbReference type="PDBsum" id="5QEM"/>
<dbReference type="PDBsum" id="5QEN"/>
<dbReference type="PDBsum" id="5QEO"/>
<dbReference type="PDBsum" id="5QEP"/>
<dbReference type="PDBsum" id="5QEQ"/>
<dbReference type="PDBsum" id="5QER"/>
<dbReference type="PDBsum" id="5QES"/>
<dbReference type="PDBsum" id="5QET"/>
<dbReference type="PDBsum" id="5QEU"/>
<dbReference type="PDBsum" id="5QEV"/>
<dbReference type="PDBsum" id="5QEW"/>
<dbReference type="PDBsum" id="5QEX"/>
<dbReference type="PDBsum" id="5QEY"/>
<dbReference type="PDBsum" id="5QEZ"/>
<dbReference type="PDBsum" id="5QF0"/>
<dbReference type="PDBsum" id="5QF1"/>
<dbReference type="PDBsum" id="5QF2"/>
<dbReference type="PDBsum" id="5QF3"/>
<dbReference type="PDBsum" id="5QF4"/>
<dbReference type="PDBsum" id="5QF5"/>
<dbReference type="PDBsum" id="5QF6"/>
<dbReference type="PDBsum" id="5QF7"/>
<dbReference type="PDBsum" id="5QF8"/>
<dbReference type="PDBsum" id="5QF9"/>
<dbReference type="PDBsum" id="5QFA"/>
<dbReference type="PDBsum" id="5QFB"/>
<dbReference type="PDBsum" id="5QFC"/>
<dbReference type="PDBsum" id="5QFD"/>
<dbReference type="PDBsum" id="5QFE"/>
<dbReference type="PDBsum" id="5QFF"/>
<dbReference type="PDBsum" id="5QFG"/>
<dbReference type="PDBsum" id="5QFH"/>
<dbReference type="PDBsum" id="5QFI"/>
<dbReference type="PDBsum" id="5QFJ"/>
<dbReference type="PDBsum" id="5QFK"/>
<dbReference type="PDBsum" id="5QFL"/>
<dbReference type="PDBsum" id="5QFM"/>
<dbReference type="PDBsum" id="5QFN"/>
<dbReference type="PDBsum" id="5QFO"/>
<dbReference type="PDBsum" id="5QFP"/>
<dbReference type="PDBsum" id="5QFQ"/>
<dbReference type="PDBsum" id="5QFR"/>
<dbReference type="PDBsum" id="5QFS"/>
<dbReference type="PDBsum" id="5QFT"/>
<dbReference type="PDBsum" id="5QFU"/>
<dbReference type="PDBsum" id="5QFV"/>
<dbReference type="PDBsum" id="5QFW"/>
<dbReference type="PDBsum" id="5QFX"/>
<dbReference type="PDBsum" id="5QFY"/>
<dbReference type="PDBsum" id="5QFZ"/>
<dbReference type="PDBsum" id="5QG0"/>
<dbReference type="PDBsum" id="5QG1"/>
<dbReference type="PDBsum" id="5QG2"/>
<dbReference type="PDBsum" id="5QG3"/>
<dbReference type="PDBsum" id="5QG4"/>
<dbReference type="PDBsum" id="5QG5"/>
<dbReference type="PDBsum" id="5QG6"/>
<dbReference type="PDBsum" id="5QG7"/>
<dbReference type="PDBsum" id="5QG8"/>
<dbReference type="PDBsum" id="5QG9"/>
<dbReference type="PDBsum" id="5QGA"/>
<dbReference type="PDBsum" id="5QGB"/>
<dbReference type="PDBsum" id="5QGC"/>
<dbReference type="PDBsum" id="5QGD"/>
<dbReference type="PDBsum" id="5QGE"/>
<dbReference type="PDBsum" id="5QGF"/>
<dbReference type="PDBsum" id="5T19"/>
<dbReference type="PDBsum" id="6B8E"/>
<dbReference type="PDBsum" id="6B8T"/>
<dbReference type="PDBsum" id="6B8X"/>
<dbReference type="PDBsum" id="6B8Z"/>
<dbReference type="PDBsum" id="6B90"/>
<dbReference type="PDBsum" id="6B95"/>
<dbReference type="PDBsum" id="6BAI"/>
<dbReference type="PDBsum" id="6CWU"/>
<dbReference type="PDBsum" id="6CWV"/>
<dbReference type="PDBsum" id="6NTP"/>
<dbReference type="PDBsum" id="6OL4"/>
<dbReference type="PDBsum" id="6OLQ"/>
<dbReference type="PDBsum" id="6OLV"/>
<dbReference type="PDBsum" id="6OMY"/>
<dbReference type="PDBsum" id="6PFW"/>
<dbReference type="PDBsum" id="6PG0"/>
<dbReference type="PDBsum" id="6PGT"/>
<dbReference type="PDBsum" id="6PHA"/>
<dbReference type="PDBsum" id="6PHS"/>
<dbReference type="PDBsum" id="6PM8"/>
<dbReference type="PDBsum" id="6W30"/>
<dbReference type="PDBsum" id="6XE8"/>
<dbReference type="PDBsum" id="6XEA"/>
<dbReference type="PDBsum" id="6XED"/>
<dbReference type="PDBsum" id="6XEE"/>
<dbReference type="PDBsum" id="6XEF"/>
<dbReference type="PDBsum" id="6XEG"/>
<dbReference type="PDBsum" id="7FQM"/>
<dbReference type="PDBsum" id="7FQN"/>
<dbReference type="PDBsum" id="7FQO"/>
<dbReference type="PDBsum" id="7FQP"/>
<dbReference type="PDBsum" id="7FQQ"/>
<dbReference type="PDBsum" id="7FQR"/>
<dbReference type="PDBsum" id="7FQS"/>
<dbReference type="PDBsum" id="7FQT"/>
<dbReference type="PDBsum" id="7FQU"/>
<dbReference type="PDBsum" id="7FQV"/>
<dbReference type="PDBsum" id="7FQW"/>
<dbReference type="PDBsum" id="7FQX"/>
<dbReference type="PDBsum" id="7FQY"/>
<dbReference type="PDBsum" id="7FQZ"/>
<dbReference type="PDBsum" id="7FRE"/>
<dbReference type="PDBsum" id="7FRF"/>
<dbReference type="PDBsum" id="7FRG"/>
<dbReference type="PDBsum" id="7FRH"/>
<dbReference type="PDBsum" id="7FRI"/>
<dbReference type="PDBsum" id="7FRJ"/>
<dbReference type="PDBsum" id="7FRK"/>
<dbReference type="PDBsum" id="7FRL"/>
<dbReference type="PDBsum" id="7FRM"/>
<dbReference type="PDBsum" id="7FRN"/>
<dbReference type="PDBsum" id="7FRO"/>
<dbReference type="PDBsum" id="7FRP"/>
<dbReference type="PDBsum" id="7FRQ"/>
<dbReference type="PDBsum" id="7FRR"/>
<dbReference type="PDBsum" id="7FRS"/>
<dbReference type="PDBsum" id="7FRT"/>
<dbReference type="PDBsum" id="7FRU"/>
<dbReference type="PDBsum" id="7GS7"/>
<dbReference type="PDBsum" id="7GS8"/>
<dbReference type="PDBsum" id="7GS9"/>
<dbReference type="PDBsum" id="7GSA"/>
<dbReference type="PDBsum" id="7GSB"/>
<dbReference type="PDBsum" id="7GSC"/>
<dbReference type="PDBsum" id="7GSD"/>
<dbReference type="PDBsum" id="7GSE"/>
<dbReference type="PDBsum" id="7GSF"/>
<dbReference type="PDBsum" id="7GSG"/>
<dbReference type="PDBsum" id="7GSH"/>
<dbReference type="PDBsum" id="7GSI"/>
<dbReference type="PDBsum" id="7GSJ"/>
<dbReference type="PDBsum" id="7GSK"/>
<dbReference type="PDBsum" id="7GSL"/>
<dbReference type="PDBsum" id="7GSM"/>
<dbReference type="PDBsum" id="7GSN"/>
<dbReference type="PDBsum" id="7GSO"/>
<dbReference type="PDBsum" id="7GSQ"/>
<dbReference type="PDBsum" id="7GSR"/>
<dbReference type="PDBsum" id="7GST"/>
<dbReference type="PDBsum" id="7GSU"/>
<dbReference type="PDBsum" id="7GSV"/>
<dbReference type="PDBsum" id="7GSW"/>
<dbReference type="PDBsum" id="7GSX"/>
<dbReference type="PDBsum" id="7GSY"/>
<dbReference type="PDBsum" id="7GSZ"/>
<dbReference type="PDBsum" id="7GT0"/>
<dbReference type="PDBsum" id="7GT1"/>
<dbReference type="PDBsum" id="7GT2"/>
<dbReference type="PDBsum" id="7GT3"/>
<dbReference type="PDBsum" id="7GT4"/>
<dbReference type="PDBsum" id="7GT5"/>
<dbReference type="PDBsum" id="7GT6"/>
<dbReference type="PDBsum" id="7GT7"/>
<dbReference type="PDBsum" id="7GT8"/>
<dbReference type="PDBsum" id="7GT9"/>
<dbReference type="PDBsum" id="7GTA"/>
<dbReference type="PDBsum" id="7GTB"/>
<dbReference type="PDBsum" id="7GTC"/>
<dbReference type="PDBsum" id="7GTD"/>
<dbReference type="PDBsum" id="7GTE"/>
<dbReference type="PDBsum" id="7GTF"/>
<dbReference type="PDBsum" id="7GTG"/>
<dbReference type="PDBsum" id="7GTH"/>
<dbReference type="PDBsum" id="7GTI"/>
<dbReference type="PDBsum" id="7GTJ"/>
<dbReference type="PDBsum" id="7GTK"/>
<dbReference type="PDBsum" id="7GTL"/>
<dbReference type="PDBsum" id="7GTM"/>
<dbReference type="PDBsum" id="7GTN"/>
<dbReference type="PDBsum" id="7GTO"/>
<dbReference type="PDBsum" id="7GTP"/>
<dbReference type="PDBsum" id="7GTQ"/>
<dbReference type="PDBsum" id="7GTR"/>
<dbReference type="PDBsum" id="7GTS"/>
<dbReference type="PDBsum" id="7GTT"/>
<dbReference type="PDBsum" id="7GTU"/>
<dbReference type="PDBsum" id="7GTV"/>
<dbReference type="PDBsum" id="7GTW"/>
<dbReference type="PDBsum" id="7GTX"/>
<dbReference type="PDBsum" id="7GTY"/>
<dbReference type="PDBsum" id="7GTZ"/>
<dbReference type="PDBsum" id="7GU0"/>
<dbReference type="PDBsum" id="7GU1"/>
<dbReference type="PDBsum" id="7GU2"/>
<dbReference type="PDBsum" id="7GU3"/>
<dbReference type="PDBsum" id="7GU4"/>
<dbReference type="PDBsum" id="7GU5"/>
<dbReference type="PDBsum" id="7GU6"/>
<dbReference type="PDBsum" id="7GU7"/>
<dbReference type="PDBsum" id="7GU8"/>
<dbReference type="PDBsum" id="7GU9"/>
<dbReference type="PDBsum" id="7GUA"/>
<dbReference type="PDBsum" id="7GUB"/>
<dbReference type="PDBsum" id="7GUC"/>
<dbReference type="PDBsum" id="7KEN"/>
<dbReference type="PDBsum" id="7KEY"/>
<dbReference type="PDBsum" id="7KLX"/>
<dbReference type="PDBsum" id="7L0C"/>
<dbReference type="PDBsum" id="7L0H"/>
<dbReference type="PDBsum" id="7LFO"/>
<dbReference type="PDBsum" id="7MKZ"/>
<dbReference type="PDBsum" id="7MM1"/>
<dbReference type="PDBsum" id="7MN7"/>
<dbReference type="PDBsum" id="7MN9"/>
<dbReference type="PDBsum" id="7MNA"/>
<dbReference type="PDBsum" id="7MNB"/>
<dbReference type="PDBsum" id="7MNC"/>
<dbReference type="PDBsum" id="7MND"/>
<dbReference type="PDBsum" id="7MNE"/>
<dbReference type="PDBsum" id="7MNF"/>
<dbReference type="PDBsum" id="7MOU"/>
<dbReference type="PDBsum" id="7MOV"/>
<dbReference type="PDBsum" id="7MOW"/>
<dbReference type="PDBsum" id="7RIN"/>
<dbReference type="PDBsum" id="7S4F"/>
<dbReference type="PDBsum" id="8DU7"/>
<dbReference type="PDBsum" id="8EXI"/>
<dbReference type="PDBsum" id="8EXJ"/>
<dbReference type="PDBsum" id="8EXK"/>
<dbReference type="PDBsum" id="8EXM"/>
<dbReference type="PDBsum" id="8EXN"/>
<dbReference type="PDBsum" id="8EYA"/>
<dbReference type="PDBsum" id="8EYB"/>
<dbReference type="PDBsum" id="8EYC"/>
<dbReference type="PDBsum" id="8F88"/>
<dbReference type="PDBsum" id="8G65"/>
<dbReference type="PDBsum" id="8G67"/>
<dbReference type="PDBsum" id="8G68"/>
<dbReference type="PDBsum" id="8G69"/>
<dbReference type="PDBsum" id="8G6A"/>
<dbReference type="PDBsum" id="8SKL"/>
<dbReference type="PDBsum" id="8U1E"/>
<dbReference type="PDBsum" id="8XOY"/>
<dbReference type="PDBsum" id="9C66"/>
<dbReference type="PDBsum" id="9CYO"/>
<dbReference type="PDBsum" id="9CYP"/>
<dbReference type="PDBsum" id="9CYQ"/>
<dbReference type="PDBsum" id="9CYR"/>
<dbReference type="BMRB" id="P18031"/>
<dbReference type="SMR" id="P18031"/>
<dbReference type="BioGRID" id="111736">
    <property type="interactions" value="667"/>
</dbReference>
<dbReference type="DIP" id="DIP-38014N"/>
<dbReference type="FunCoup" id="P18031">
    <property type="interactions" value="2805"/>
</dbReference>
<dbReference type="IntAct" id="P18031">
    <property type="interactions" value="276"/>
</dbReference>
<dbReference type="MINT" id="P18031"/>
<dbReference type="STRING" id="9606.ENSP00000360683"/>
<dbReference type="BindingDB" id="P18031"/>
<dbReference type="ChEMBL" id="CHEMBL335"/>
<dbReference type="DrugBank" id="DB08549">
    <property type="generic name" value="(3R)-METHYLCARBAMOYL-7-SULFOAMINO-3,4-DIHYDRO-1H-ISOQUINOLINE-2-CARBOXYLIC ACID BENZYL ESTER"/>
</dbReference>
<dbReference type="DrugBank" id="DB08783">
    <property type="generic name" value="(4-{(2S)-2-[(tert-butoxycarbonyl)amino]-3-methoxy-3-oxopropyl}phenyl)methaneseleninic acid"/>
</dbReference>
<dbReference type="DrugBank" id="DB03483">
    <property type="generic name" value="(4S)-5-[[(2S)-1-[[(2S)-1-Amino-3-[4-[difluoro(phosphono)methyl]phenyl]-1-oxopropan-2-yl]amino]-3-[4-[difluoro(phosphono)methyl]phenyl]-1-oxopropan-2-yl]amino]-4-benzamido-5-oxopentanoic acid"/>
</dbReference>
<dbReference type="DrugBank" id="DB08593">
    <property type="generic name" value="1,2,5-THIADIAZOLIDIN-3-ONE-1,1-DIOXIDE"/>
</dbReference>
<dbReference type="DrugBank" id="DB04800">
    <property type="generic name" value="1-METHYL-3-PHENYL-1H-PYRAZOL-5-YLSULFAMIC ACID"/>
</dbReference>
<dbReference type="DrugBank" id="DB03670">
    <property type="generic name" value="2-(Oxalyl-Amino)-4,5,6,7-Tetrahydro-Thieno[2,3-C]Pyridine-3-Carboxylic Acid"/>
</dbReference>
<dbReference type="DrugBank" id="DB03102">
    <property type="generic name" value="2-(Oxalyl-Amino)-4,7-Dihydro-5h-Thieno[2,3-C]Pyran-3-Carboxylic Acid"/>
</dbReference>
<dbReference type="DrugBank" id="DB02072">
    <property type="generic name" value="2-(Oxalyl-Amino)-4,7-Dihydro-5h-Thieno[2,3-C]Thiopyran-3-Carboxylic Acid"/>
</dbReference>
<dbReference type="DrugBank" id="DB02622">
    <property type="generic name" value="2-(Oxalyl-Amino)-Benzoic Acid"/>
</dbReference>
<dbReference type="DrugBank" id="DB07295">
    <property type="generic name" value="2-[(7-HYDROXY-NAPHTHALEN-1-YL)-OXALYL-AMINO]-BENZOIC ACID"/>
</dbReference>
<dbReference type="DrugBank" id="DB04088">
    <property type="generic name" value="2-[{4-[(2S)-2-{[(Allyloxy)carbonyl]amino}-3-({4-[3-hydroxy-2-(methoxycarbonyl)phenoxy]butyl}amino)-3-oxopropyl]phenyl}(carboxycarbonyl)amino]benzoic acid"/>
</dbReference>
<dbReference type="DrugBank" id="DB01820">
    <property type="generic name" value="2-{[4-(2-Acetylamino-2-pentylcarbamoyl-ethyl)-naphthalen-1-YL]-oxalyl-amino}-benzoic acid"/>
</dbReference>
<dbReference type="DrugBank" id="DB02259">
    <property type="generic name" value="3-(3,5-Dibromo-4-Hydroxy-Benzoyl)-2-Ethyl-Benzofuran-6-Sulfonic Acid (4-Sulfamoyl-Phenyl)-Amide"/>
</dbReference>
<dbReference type="DrugBank" id="DB03311">
    <property type="generic name" value="3-(3,5-Dibromo-4-Hydroxy-Benzoyl)-2-Ethyl-Benzofuran-6-Sulfonic Acid [4-(Thiazol-2-Ylsulfamoyl)-Phenyl]-Amide"/>
</dbReference>
<dbReference type="DrugBank" id="DB04142">
    <property type="generic name" value="3-(3,5-Dibromo-4-Hydroxy-Benzoyl)-2-Ethyl-Benzofuran-6-Sulfonic Acid Dimethylamide"/>
</dbReference>
<dbReference type="DrugBank" id="DB02620">
    <property type="generic name" value="3-(4-{2-[2-(2-bromo-acetylamino)-ethyldisulfanyl]-ethylcarbamoyl}-cyclohexylcarbamoyl)-pyrazine-2-carboxylic acid"/>
</dbReference>
<dbReference type="DrugBank" id="DB07298">
    <property type="generic name" value="3-(CARBOXYMETHOXY)THIENO[2,3-B]PYRIDINE-2-CARBOXYLIC ACID"/>
</dbReference>
<dbReference type="DrugBank" id="DB01734">
    <property type="generic name" value="3-(Oxalyl-Amino)-Naphthalene-2-Carboxylic Acid"/>
</dbReference>
<dbReference type="DrugBank" id="DB08147">
    <property type="generic name" value="4-[3-(dibenzylamino)phenyl]-2,4-dioxobutanoic acid"/>
</dbReference>
<dbReference type="DrugBank" id="DB03557">
    <property type="generic name" value="4-[[(2S)-1-[[6-[(1-Amino-1-oxo-3-sulfanylpropan-2-yl)amino]-6-oxohexyl]amino]-3-[4-[difluoro(phosphono)methyl]phenyl]-1-oxopropan-2-yl]amino]-3-[[2-[4-[difluoro(phosphono)methyl]phenyl]acetyl]amino]-4-oxobutanoic acid"/>
</dbReference>
<dbReference type="DrugBank" id="DB07197">
    <property type="generic name" value="4-BROMO-3-(CARBOXYMETHOXY)-5-(4-HYDROXYPHENYL)THIOPHENE-2-CARBOXYLIC ACID"/>
</dbReference>
<dbReference type="DrugBank" id="DB06829">
    <property type="generic name" value="4-BROMO-3-(CARBOXYMETHOXY)-5-[3-(CYCLOHEXYLAMINO)PHENYL]THIOPHENE-2-CARBOXYLIC ACID"/>
</dbReference>
<dbReference type="DrugBank" id="DB07130">
    <property type="generic name" value="4-BROMO-3-(CARBOXYMETHOXY)-5-PHENYLTHIOPHENE-2-CARBOXYLIC ACID"/>
</dbReference>
<dbReference type="DrugBank" id="DB03714">
    <property type="generic name" value="4-Carbamoyl-4-{[6-(Difluoro-Phosphono-Methyl)-Naphthalene-2-Carbonyl]-Amino}-Butyric Acid"/>
</dbReference>
<dbReference type="DrugBank" id="DB07480">
    <property type="generic name" value="4-PHOSPHONOOXY-PHENYL-METHYL-[4-PHOSPHONOOXY]BENZEN"/>
</dbReference>
<dbReference type="DrugBank" id="DB02014">
    <property type="generic name" value="5-(2-Fluoro-5-{(1E)-3-[3-hydroxy-2-(methoxycarbonyl)phenoxy]-1-propen-1-yl}phenyl)-1,2-oxazole-3-carboxylic acid"/>
</dbReference>
<dbReference type="DrugBank" id="DB07730">
    <property type="generic name" value="5-(3-HYDROXYPHENYL)ISOTHIAZOL-3(2H)-ONE 1,1-DIOXIDE"/>
</dbReference>
<dbReference type="DrugBank" id="DB08001">
    <property type="generic name" value="5-(3-{3-[3-HYDROXY-2-(METHOXYCARBONYL)PHENOXY]PROPENYL}PHENYL)-4-(HYDROXYMETHYL)ISOXAZOLE-3-CARBOXYLIC ACID"/>
</dbReference>
<dbReference type="DrugBank" id="DB07134">
    <property type="generic name" value="5-(4-CHLORO-5-PHENYL-3-THIENYL)-1,2,5-THIADIAZOLIDIN-3-ONE 1,1-DIOXIDE"/>
</dbReference>
<dbReference type="DrugBank" id="DB08591">
    <property type="generic name" value="5-(4-METHOXYBIPHENYL-3-YL)-1,2,5-THIADIAZOLIDIN-3-ONE 1,1-DIOXIDE"/>
</dbReference>
<dbReference type="DrugBank" id="DB07289">
    <property type="generic name" value="5-[3-(BENZYLAMINO)PHENYL]-4-BROMO-3-(CARBOXYMETHOXY)THIOPHENE-2-CARBOXYLIC ACID"/>
</dbReference>
<dbReference type="DrugBank" id="DB08397">
    <property type="generic name" value="6-(DIFLUORO-PHOSPHONO-METHYL)-NAPHTHALENE-2-CARBOXYLIC ACID"/>
</dbReference>
<dbReference type="DrugBank" id="DB04001">
    <property type="generic name" value="6-(Oxalyl-Amino)-1h-Indole-5-Carboxylic Acid"/>
</dbReference>
<dbReference type="DrugBank" id="DB02827">
    <property type="generic name" value="7-(1,1-Dioxo-1h-Benzo[D]Isothiazol-3-Yloxymethyl)-2-(Oxalyl-Amino)-4,7-Dihydro-5h-Thieno[2,3-C]Pyran-3-Carboxylic Acid"/>
</dbReference>
<dbReference type="DrugBank" id="DB07719">
    <property type="generic name" value="[(3R)-3-(Methylcarbamoyl)-2-{[(2-methyl-2-propanyl)oxy]carbonyl}-1,2,3,4-tetrahydro-7-isoquinolinyl]sulfamic acid"/>
</dbReference>
<dbReference type="DrugBank" id="DB06887">
    <property type="generic name" value="[(3S)-3-(Methylcarbamoyl)-2-{[(2-methyl-2-propanyl)oxy]carbonyl}-1,2,3,4-tetrahydro-7-isoquinolinyl]sulfamic acid"/>
</dbReference>
<dbReference type="DrugBank" id="DB04204">
    <property type="generic name" value="[(4-{4-[4-(Difluoro-Phosphono-Methyl)-Phenyl]-Butyl}-Phenyl)-Difluoro-Methyl]-Phosphonic Acid"/>
</dbReference>
<dbReference type="DrugBank" id="DB02420">
    <property type="generic name" value="[[4-(Aminomethyl)Phenyl]Amino]Oxo-Acetic Acid"/>
</dbReference>
<dbReference type="DrugBank" id="DB07263">
    <property type="generic name" value="[{2-bromo-4-[(2R)-3-oxo-2,3-diphenylpropyl]phenyl}(difluoro)methyl]phosphonic acid"/>
</dbReference>
<dbReference type="DrugBank" id="DB14511">
    <property type="generic name" value="Acetate"/>
</dbReference>
<dbReference type="DrugBank" id="DB02615">
    <property type="generic name" value="Compound 19"/>
</dbReference>
<dbReference type="DrugBank" id="DB03982">
    <property type="generic name" value="Compound 5, 2-(Naphthalen-1-Yl-Oxalyl-Amino)-Benzoicacid"/>
</dbReference>
<dbReference type="DrugBank" id="DB13089">
    <property type="generic name" value="Enoxolone"/>
</dbReference>
<dbReference type="DrugBank" id="DB06521">
    <property type="generic name" value="Ertiprotafib"/>
</dbReference>
<dbReference type="DrugBank" id="DB11091">
    <property type="generic name" value="Hydrogen peroxide"/>
</dbReference>
<dbReference type="DrugBank" id="DB05506">
    <property type="generic name" value="ISIS 113715"/>
</dbReference>
<dbReference type="DrugBank" id="DB08003">
    <property type="generic name" value="ISOTHIAZOLIDINONE ANALOG"/>
</dbReference>
<dbReference type="DrugBank" id="DB03661">
    <property type="generic name" value="L-cysteic acid"/>
</dbReference>
<dbReference type="DrugBank" id="DB19281">
    <property type="generic name" value="Licochalcone A"/>
</dbReference>
<dbReference type="DrugBank" id="DB04525">
    <property type="generic name" value="N-(3-Carboxypropanoyl)-L-phenylalanyl-3-carboxy-O-(carboxymethyl)-N-pentyl-L-tyrosinamide"/>
</dbReference>
<dbReference type="DrugBank" id="DB02784">
    <property type="generic name" value="N-(Bromoacetyl)-beta-alanyl-N-(2-{4-[(carboxycarbonyl)amino]phenyl}ethyl)-L-serinamide"/>
</dbReference>
<dbReference type="DrugBank" id="DB07651">
    <property type="generic name" value="N-ACETYL-L-PHENYLALANYL-4-[DIFLUORO(PHOSPHONO)METHYL]-L-PHENYLALANINAMIDE"/>
</dbReference>
<dbReference type="DrugBank" id="DB02662">
    <property type="generic name" value="Novo Nordisk a/S Compound"/>
</dbReference>
<dbReference type="DrugBank" id="DB08371">
    <property type="generic name" value="p-Benzoyl-L-phenylalanine"/>
</dbReference>
<dbReference type="DrugBank" id="DB02977">
    <property type="generic name" value="PNU177836"/>
</dbReference>
<dbReference type="DrugBank" id="DB01915">
    <property type="generic name" value="S-Hydroxycysteine"/>
</dbReference>
<dbReference type="DrugBank" id="DB06333">
    <property type="generic name" value="Trodusquemine"/>
</dbReference>
<dbReference type="DrugBank" id="DB09158">
    <property type="generic name" value="Trypan blue free acid"/>
</dbReference>
<dbReference type="DrugBank" id="DB15588">
    <property type="generic name" value="Ursolic acid"/>
</dbReference>
<dbReference type="DrugBank" id="DB02436">
    <property type="generic name" value="{4-[(2S)-2-({[(1S)-1-Carboxy-2-phenylethyl]carbamoyl}amino)-3-oxo-3-(pentylamino)propyl]phenoxy}malonic acid"/>
</dbReference>
<dbReference type="DrugBank" id="DB04285">
    <property type="generic name" value="{4-[(2s,4e)-2-(1,3-Benzothiazol-2-Yl)-2-(1h-1,2,3-Benzotriazol-1-Yl)-5-Phenylpent-4-Enyl]Phenyl}(Difluoro)Methylphosphonic Acid"/>
</dbReference>
<dbReference type="DrugBank" id="DB02651">
    <property type="generic name" value="{[2-(1h-1,2,3-Benzotriazol-1-Yl)-2-(3,4-Difluorophenyl)Propane-1,3-Diyl]Bis[4,1-Phenylene(Difluoromethylene)]}Bis(Phosphonic Acid)"/>
</dbReference>
<dbReference type="DrugBank" id="DB03154">
    <property type="generic name" value="{[7-(Difluoro-Phosphono-Methyl)-Naphthalen-2-Yl]-Difluoro-Methyl}-Phosphonic Acid"/>
</dbReference>
<dbReference type="DrugCentral" id="P18031"/>
<dbReference type="GuidetoPHARMACOLOGY" id="2976"/>
<dbReference type="DEPOD" id="PTPN1"/>
<dbReference type="GlyGen" id="P18031">
    <property type="glycosylation" value="4 sites, 1 O-linked glycan (4 sites)"/>
</dbReference>
<dbReference type="iPTMnet" id="P18031"/>
<dbReference type="MetOSite" id="P18031"/>
<dbReference type="PhosphoSitePlus" id="P18031"/>
<dbReference type="SwissPalm" id="P18031"/>
<dbReference type="BioMuta" id="PTPN1"/>
<dbReference type="DMDM" id="131467"/>
<dbReference type="OGP" id="P18031"/>
<dbReference type="CPTAC" id="CPTAC-578"/>
<dbReference type="CPTAC" id="CPTAC-579"/>
<dbReference type="jPOST" id="P18031"/>
<dbReference type="MassIVE" id="P18031"/>
<dbReference type="PaxDb" id="9606-ENSP00000360683"/>
<dbReference type="PeptideAtlas" id="P18031"/>
<dbReference type="ProteomicsDB" id="53539"/>
<dbReference type="Pumba" id="P18031"/>
<dbReference type="ABCD" id="P18031">
    <property type="antibodies" value="19 sequenced antibodies"/>
</dbReference>
<dbReference type="Antibodypedia" id="2724">
    <property type="antibodies" value="808 antibodies from 43 providers"/>
</dbReference>
<dbReference type="DNASU" id="5770"/>
<dbReference type="Ensembl" id="ENST00000371621.5">
    <property type="protein sequence ID" value="ENSP00000360683.3"/>
    <property type="gene ID" value="ENSG00000196396.10"/>
</dbReference>
<dbReference type="GeneID" id="5770"/>
<dbReference type="KEGG" id="hsa:5770"/>
<dbReference type="MANE-Select" id="ENST00000371621.5">
    <property type="protein sequence ID" value="ENSP00000360683.3"/>
    <property type="RefSeq nucleotide sequence ID" value="NM_002827.4"/>
    <property type="RefSeq protein sequence ID" value="NP_002818.1"/>
</dbReference>
<dbReference type="UCSC" id="uc002xvl.5">
    <property type="organism name" value="human"/>
</dbReference>
<dbReference type="AGR" id="HGNC:9642"/>
<dbReference type="CTD" id="5770"/>
<dbReference type="DisGeNET" id="5770"/>
<dbReference type="GeneCards" id="PTPN1"/>
<dbReference type="HGNC" id="HGNC:9642">
    <property type="gene designation" value="PTPN1"/>
</dbReference>
<dbReference type="HPA" id="ENSG00000196396">
    <property type="expression patterns" value="Low tissue specificity"/>
</dbReference>
<dbReference type="MalaCards" id="PTPN1"/>
<dbReference type="MIM" id="176885">
    <property type="type" value="gene"/>
</dbReference>
<dbReference type="neXtProt" id="NX_P18031"/>
<dbReference type="OpenTargets" id="ENSG00000196396"/>
<dbReference type="PharmGKB" id="PA33985"/>
<dbReference type="VEuPathDB" id="HostDB:ENSG00000196396"/>
<dbReference type="eggNOG" id="KOG0789">
    <property type="taxonomic scope" value="Eukaryota"/>
</dbReference>
<dbReference type="GeneTree" id="ENSGT00940000158041"/>
<dbReference type="HOGENOM" id="CLU_001645_9_0_1"/>
<dbReference type="InParanoid" id="P18031"/>
<dbReference type="OMA" id="EFWEIDE"/>
<dbReference type="OrthoDB" id="9450131at2759"/>
<dbReference type="PAN-GO" id="P18031">
    <property type="GO annotations" value="8 GO annotations based on evolutionary models"/>
</dbReference>
<dbReference type="PhylomeDB" id="P18031"/>
<dbReference type="TreeFam" id="TF315897"/>
<dbReference type="BRENDA" id="3.1.3.48">
    <property type="organism ID" value="2681"/>
</dbReference>
<dbReference type="PathwayCommons" id="P18031"/>
<dbReference type="Reactome" id="R-HSA-354192">
    <property type="pathway name" value="Integrin signaling"/>
</dbReference>
<dbReference type="Reactome" id="R-HSA-6807004">
    <property type="pathway name" value="Negative regulation of MET activity"/>
</dbReference>
<dbReference type="Reactome" id="R-HSA-77387">
    <property type="pathway name" value="Insulin receptor recycling"/>
</dbReference>
<dbReference type="Reactome" id="R-HSA-877312">
    <property type="pathway name" value="Regulation of IFNG signaling"/>
</dbReference>
<dbReference type="Reactome" id="R-HSA-8849472">
    <property type="pathway name" value="PTK6 Down-Regulation"/>
</dbReference>
<dbReference type="Reactome" id="R-HSA-9022699">
    <property type="pathway name" value="MECP2 regulates neuronal receptors and channels"/>
</dbReference>
<dbReference type="Reactome" id="R-HSA-912694">
    <property type="pathway name" value="Regulation of IFNA/IFNB signaling"/>
</dbReference>
<dbReference type="Reactome" id="R-HSA-982772">
    <property type="pathway name" value="Growth hormone receptor signaling"/>
</dbReference>
<dbReference type="Reactome" id="R-HSA-9860927">
    <property type="pathway name" value="Turbulent (oscillatory, disturbed) flow shear stress activates signaling by PIEZO1 and integrins in endothelial cells"/>
</dbReference>
<dbReference type="SABIO-RK" id="P18031"/>
<dbReference type="SignaLink" id="P18031"/>
<dbReference type="SIGNOR" id="P18031"/>
<dbReference type="BioGRID-ORCS" id="5770">
    <property type="hits" value="99 hits in 1189 CRISPR screens"/>
</dbReference>
<dbReference type="CD-CODE" id="AB997901">
    <property type="entry name" value="Synthetic Condensate 000089"/>
</dbReference>
<dbReference type="CD-CODE" id="F345034F">
    <property type="entry name" value="Signaling cluster"/>
</dbReference>
<dbReference type="ChiTaRS" id="PTPN1">
    <property type="organism name" value="human"/>
</dbReference>
<dbReference type="EvolutionaryTrace" id="P18031"/>
<dbReference type="GeneWiki" id="PTPN1"/>
<dbReference type="GenomeRNAi" id="5770"/>
<dbReference type="Pharos" id="P18031">
    <property type="development level" value="Tchem"/>
</dbReference>
<dbReference type="PRO" id="PR:P18031"/>
<dbReference type="Proteomes" id="UP000005640">
    <property type="component" value="Chromosome 20"/>
</dbReference>
<dbReference type="RNAct" id="P18031">
    <property type="molecule type" value="protein"/>
</dbReference>
<dbReference type="Bgee" id="ENSG00000196396">
    <property type="expression patterns" value="Expressed in upper lobe of left lung and 150 other cell types or tissues"/>
</dbReference>
<dbReference type="ExpressionAtlas" id="P18031">
    <property type="expression patterns" value="baseline and differential"/>
</dbReference>
<dbReference type="GO" id="GO:0005737">
    <property type="term" value="C:cytoplasm"/>
    <property type="evidence" value="ECO:0000250"/>
    <property type="project" value="ARUK-UCL"/>
</dbReference>
<dbReference type="GO" id="GO:0098554">
    <property type="term" value="C:cytoplasmic side of endoplasmic reticulum membrane"/>
    <property type="evidence" value="ECO:0000314"/>
    <property type="project" value="ParkinsonsUK-UCL"/>
</dbReference>
<dbReference type="GO" id="GO:0005829">
    <property type="term" value="C:cytosol"/>
    <property type="evidence" value="ECO:0000314"/>
    <property type="project" value="HPA"/>
</dbReference>
<dbReference type="GO" id="GO:0005769">
    <property type="term" value="C:early endosome"/>
    <property type="evidence" value="ECO:0000314"/>
    <property type="project" value="UniProtKB"/>
</dbReference>
<dbReference type="GO" id="GO:0005783">
    <property type="term" value="C:endoplasmic reticulum"/>
    <property type="evidence" value="ECO:0000314"/>
    <property type="project" value="HPA"/>
</dbReference>
<dbReference type="GO" id="GO:0031904">
    <property type="term" value="C:endosome lumen"/>
    <property type="evidence" value="ECO:0007669"/>
    <property type="project" value="Ensembl"/>
</dbReference>
<dbReference type="GO" id="GO:0098978">
    <property type="term" value="C:glutamatergic synapse"/>
    <property type="evidence" value="ECO:0007669"/>
    <property type="project" value="Ensembl"/>
</dbReference>
<dbReference type="GO" id="GO:0030061">
    <property type="term" value="C:mitochondrial crista"/>
    <property type="evidence" value="ECO:0007669"/>
    <property type="project" value="Ensembl"/>
</dbReference>
<dbReference type="GO" id="GO:0005759">
    <property type="term" value="C:mitochondrial matrix"/>
    <property type="evidence" value="ECO:0007669"/>
    <property type="project" value="Ensembl"/>
</dbReference>
<dbReference type="GO" id="GO:0098794">
    <property type="term" value="C:postsynapse"/>
    <property type="evidence" value="ECO:0007669"/>
    <property type="project" value="Ensembl"/>
</dbReference>
<dbReference type="GO" id="GO:0032991">
    <property type="term" value="C:protein-containing complex"/>
    <property type="evidence" value="ECO:0000314"/>
    <property type="project" value="MGI"/>
</dbReference>
<dbReference type="GO" id="GO:0097443">
    <property type="term" value="C:sorting endosome"/>
    <property type="evidence" value="ECO:0000250"/>
    <property type="project" value="BHF-UCL"/>
</dbReference>
<dbReference type="GO" id="GO:0045296">
    <property type="term" value="F:cadherin binding"/>
    <property type="evidence" value="ECO:0007005"/>
    <property type="project" value="BHF-UCL"/>
</dbReference>
<dbReference type="GO" id="GO:0019899">
    <property type="term" value="F:enzyme binding"/>
    <property type="evidence" value="ECO:0000353"/>
    <property type="project" value="UniProtKB"/>
</dbReference>
<dbReference type="GO" id="GO:0046875">
    <property type="term" value="F:ephrin receptor binding"/>
    <property type="evidence" value="ECO:0000353"/>
    <property type="project" value="UniProtKB"/>
</dbReference>
<dbReference type="GO" id="GO:0005158">
    <property type="term" value="F:insulin receptor binding"/>
    <property type="evidence" value="ECO:0007669"/>
    <property type="project" value="Ensembl"/>
</dbReference>
<dbReference type="GO" id="GO:0004726">
    <property type="term" value="F:non-membrane spanning protein tyrosine phosphatase activity"/>
    <property type="evidence" value="ECO:0000318"/>
    <property type="project" value="GO_Central"/>
</dbReference>
<dbReference type="GO" id="GO:0019901">
    <property type="term" value="F:protein kinase binding"/>
    <property type="evidence" value="ECO:0000353"/>
    <property type="project" value="UniProtKB"/>
</dbReference>
<dbReference type="GO" id="GO:0051721">
    <property type="term" value="F:protein phosphatase 2A binding"/>
    <property type="evidence" value="ECO:0007669"/>
    <property type="project" value="Ensembl"/>
</dbReference>
<dbReference type="GO" id="GO:0004725">
    <property type="term" value="F:protein tyrosine phosphatase activity"/>
    <property type="evidence" value="ECO:0000314"/>
    <property type="project" value="UniProtKB"/>
</dbReference>
<dbReference type="GO" id="GO:0030971">
    <property type="term" value="F:receptor tyrosine kinase binding"/>
    <property type="evidence" value="ECO:0000353"/>
    <property type="project" value="UniProtKB"/>
</dbReference>
<dbReference type="GO" id="GO:0003723">
    <property type="term" value="F:RNA binding"/>
    <property type="evidence" value="ECO:0007005"/>
    <property type="project" value="UniProtKB"/>
</dbReference>
<dbReference type="GO" id="GO:0008270">
    <property type="term" value="F:zinc ion binding"/>
    <property type="evidence" value="ECO:0000314"/>
    <property type="project" value="UniProtKB"/>
</dbReference>
<dbReference type="GO" id="GO:0030036">
    <property type="term" value="P:actin cytoskeleton organization"/>
    <property type="evidence" value="ECO:0000315"/>
    <property type="project" value="UniProtKB"/>
</dbReference>
<dbReference type="GO" id="GO:1904385">
    <property type="term" value="P:cellular response to angiotensin"/>
    <property type="evidence" value="ECO:0007669"/>
    <property type="project" value="Ensembl"/>
</dbReference>
<dbReference type="GO" id="GO:0044344">
    <property type="term" value="P:cellular response to fibroblast growth factor stimulus"/>
    <property type="evidence" value="ECO:0007669"/>
    <property type="project" value="Ensembl"/>
</dbReference>
<dbReference type="GO" id="GO:0071456">
    <property type="term" value="P:cellular response to hypoxia"/>
    <property type="evidence" value="ECO:0007669"/>
    <property type="project" value="Ensembl"/>
</dbReference>
<dbReference type="GO" id="GO:1990090">
    <property type="term" value="P:cellular response to nerve growth factor stimulus"/>
    <property type="evidence" value="ECO:0007669"/>
    <property type="project" value="Ensembl"/>
</dbReference>
<dbReference type="GO" id="GO:0071732">
    <property type="term" value="P:cellular response to nitric oxide"/>
    <property type="evidence" value="ECO:0007669"/>
    <property type="project" value="Ensembl"/>
</dbReference>
<dbReference type="GO" id="GO:0036120">
    <property type="term" value="P:cellular response to platelet-derived growth factor stimulus"/>
    <property type="evidence" value="ECO:0007669"/>
    <property type="project" value="Ensembl"/>
</dbReference>
<dbReference type="GO" id="GO:0034620">
    <property type="term" value="P:cellular response to unfolded protein"/>
    <property type="evidence" value="ECO:0000304"/>
    <property type="project" value="ParkinsonsUK-UCL"/>
</dbReference>
<dbReference type="GO" id="GO:0030968">
    <property type="term" value="P:endoplasmic reticulum unfolded protein response"/>
    <property type="evidence" value="ECO:0000314"/>
    <property type="project" value="UniProtKB"/>
</dbReference>
<dbReference type="GO" id="GO:0060397">
    <property type="term" value="P:growth hormone receptor signaling pathway via JAK-STAT"/>
    <property type="evidence" value="ECO:0000304"/>
    <property type="project" value="Reactome"/>
</dbReference>
<dbReference type="GO" id="GO:0038020">
    <property type="term" value="P:insulin receptor recycling"/>
    <property type="evidence" value="ECO:0007669"/>
    <property type="project" value="Ensembl"/>
</dbReference>
<dbReference type="GO" id="GO:0008286">
    <property type="term" value="P:insulin receptor signaling pathway"/>
    <property type="evidence" value="ECO:0007669"/>
    <property type="project" value="Ensembl"/>
</dbReference>
<dbReference type="GO" id="GO:0036498">
    <property type="term" value="P:IRE1-mediated unfolded protein response"/>
    <property type="evidence" value="ECO:0000250"/>
    <property type="project" value="ARUK-UCL"/>
</dbReference>
<dbReference type="GO" id="GO:0008285">
    <property type="term" value="P:negative regulation of cell population proliferation"/>
    <property type="evidence" value="ECO:0007669"/>
    <property type="project" value="Ensembl"/>
</dbReference>
<dbReference type="GO" id="GO:0010812">
    <property type="term" value="P:negative regulation of cell-substrate adhesion"/>
    <property type="evidence" value="ECO:0007669"/>
    <property type="project" value="Ensembl"/>
</dbReference>
<dbReference type="GO" id="GO:1902236">
    <property type="term" value="P:negative regulation of endoplasmic reticulum stress-induced intrinsic apoptotic signaling pathway"/>
    <property type="evidence" value="ECO:0000250"/>
    <property type="project" value="ARUK-UCL"/>
</dbReference>
<dbReference type="GO" id="GO:0070373">
    <property type="term" value="P:negative regulation of ERK1 and ERK2 cascade"/>
    <property type="evidence" value="ECO:0000250"/>
    <property type="project" value="BHF-UCL"/>
</dbReference>
<dbReference type="GO" id="GO:0046627">
    <property type="term" value="P:negative regulation of insulin receptor signaling pathway"/>
    <property type="evidence" value="ECO:0000303"/>
    <property type="project" value="BHF-UCL"/>
</dbReference>
<dbReference type="GO" id="GO:0043407">
    <property type="term" value="P:negative regulation of MAP kinase activity"/>
    <property type="evidence" value="ECO:0000315"/>
    <property type="project" value="CACAO"/>
</dbReference>
<dbReference type="GO" id="GO:0010977">
    <property type="term" value="P:negative regulation of neuron projection development"/>
    <property type="evidence" value="ECO:0007669"/>
    <property type="project" value="Ensembl"/>
</dbReference>
<dbReference type="GO" id="GO:1903898">
    <property type="term" value="P:negative regulation of PERK-mediated unfolded protein response"/>
    <property type="evidence" value="ECO:0000314"/>
    <property type="project" value="ParkinsonsUK-UCL"/>
</dbReference>
<dbReference type="GO" id="GO:0051898">
    <property type="term" value="P:negative regulation of phosphatidylinositol 3-kinase/protein kinase B signal transduction"/>
    <property type="evidence" value="ECO:0007669"/>
    <property type="project" value="Ensembl"/>
</dbReference>
<dbReference type="GO" id="GO:0009968">
    <property type="term" value="P:negative regulation of signal transduction"/>
    <property type="evidence" value="ECO:0000304"/>
    <property type="project" value="Reactome"/>
</dbReference>
<dbReference type="GO" id="GO:1904753">
    <property type="term" value="P:negative regulation of vascular associated smooth muscle cell migration"/>
    <property type="evidence" value="ECO:0007669"/>
    <property type="project" value="Ensembl"/>
</dbReference>
<dbReference type="GO" id="GO:0030948">
    <property type="term" value="P:negative regulation of vascular endothelial growth factor receptor signaling pathway"/>
    <property type="evidence" value="ECO:0000250"/>
    <property type="project" value="BHF-UCL"/>
</dbReference>
<dbReference type="GO" id="GO:0035335">
    <property type="term" value="P:peptidyl-tyrosine dephosphorylation"/>
    <property type="evidence" value="ECO:0000314"/>
    <property type="project" value="UniProtKB"/>
</dbReference>
<dbReference type="GO" id="GO:0035791">
    <property type="term" value="P:platelet-derived growth factor receptor-beta signaling pathway"/>
    <property type="evidence" value="ECO:0000315"/>
    <property type="project" value="UniProtKB"/>
</dbReference>
<dbReference type="GO" id="GO:0010666">
    <property type="term" value="P:positive regulation of cardiac muscle cell apoptotic process"/>
    <property type="evidence" value="ECO:0007669"/>
    <property type="project" value="Ensembl"/>
</dbReference>
<dbReference type="GO" id="GO:2000353">
    <property type="term" value="P:positive regulation of endothelial cell apoptotic process"/>
    <property type="evidence" value="ECO:0007669"/>
    <property type="project" value="Ensembl"/>
</dbReference>
<dbReference type="GO" id="GO:0010460">
    <property type="term" value="P:positive regulation of heart rate"/>
    <property type="evidence" value="ECO:0007669"/>
    <property type="project" value="Ensembl"/>
</dbReference>
<dbReference type="GO" id="GO:1903896">
    <property type="term" value="P:positive regulation of IRE1-mediated unfolded protein response"/>
    <property type="evidence" value="ECO:0000304"/>
    <property type="project" value="ParkinsonsUK-UCL"/>
</dbReference>
<dbReference type="GO" id="GO:0043507">
    <property type="term" value="P:positive regulation of JUN kinase activity"/>
    <property type="evidence" value="ECO:0000250"/>
    <property type="project" value="ARUK-UCL"/>
</dbReference>
<dbReference type="GO" id="GO:0061098">
    <property type="term" value="P:positive regulation of protein tyrosine kinase activity"/>
    <property type="evidence" value="ECO:0000314"/>
    <property type="project" value="ParkinsonsUK-UCL"/>
</dbReference>
<dbReference type="GO" id="GO:2000646">
    <property type="term" value="P:positive regulation of receptor catabolic process"/>
    <property type="evidence" value="ECO:0000315"/>
    <property type="project" value="CACAO"/>
</dbReference>
<dbReference type="GO" id="GO:0003084">
    <property type="term" value="P:positive regulation of systemic arterial blood pressure"/>
    <property type="evidence" value="ECO:0007669"/>
    <property type="project" value="Ensembl"/>
</dbReference>
<dbReference type="GO" id="GO:0006470">
    <property type="term" value="P:protein dephosphorylation"/>
    <property type="evidence" value="ECO:0000315"/>
    <property type="project" value="CACAO"/>
</dbReference>
<dbReference type="GO" id="GO:0030100">
    <property type="term" value="P:regulation of endocytosis"/>
    <property type="evidence" value="ECO:0000314"/>
    <property type="project" value="UniProtKB"/>
</dbReference>
<dbReference type="GO" id="GO:1902202">
    <property type="term" value="P:regulation of hepatocyte growth factor receptor signaling pathway"/>
    <property type="evidence" value="ECO:0000315"/>
    <property type="project" value="UniProtKB"/>
</dbReference>
<dbReference type="GO" id="GO:0033157">
    <property type="term" value="P:regulation of intracellular protein transport"/>
    <property type="evidence" value="ECO:0000315"/>
    <property type="project" value="CACAO"/>
</dbReference>
<dbReference type="GO" id="GO:0150052">
    <property type="term" value="P:regulation of postsynapse assembly"/>
    <property type="evidence" value="ECO:0007669"/>
    <property type="project" value="Ensembl"/>
</dbReference>
<dbReference type="GO" id="GO:0030162">
    <property type="term" value="P:regulation of proteolysis"/>
    <property type="evidence" value="ECO:0007669"/>
    <property type="project" value="Ensembl"/>
</dbReference>
<dbReference type="GO" id="GO:0009966">
    <property type="term" value="P:regulation of signal transduction"/>
    <property type="evidence" value="ECO:0000315"/>
    <property type="project" value="UniProtKB"/>
</dbReference>
<dbReference type="GO" id="GO:0060338">
    <property type="term" value="P:regulation of type I interferon-mediated signaling pathway"/>
    <property type="evidence" value="ECO:0000304"/>
    <property type="project" value="Reactome"/>
</dbReference>
<dbReference type="GO" id="GO:0031667">
    <property type="term" value="P:response to nutrient levels"/>
    <property type="evidence" value="ECO:0007669"/>
    <property type="project" value="Ensembl"/>
</dbReference>
<dbReference type="GO" id="GO:0097706">
    <property type="term" value="P:vascular endothelial cell response to oscillatory fluid shear stress"/>
    <property type="evidence" value="ECO:0000304"/>
    <property type="project" value="Reactome"/>
</dbReference>
<dbReference type="CDD" id="cd14608">
    <property type="entry name" value="PTPc-N1"/>
    <property type="match status" value="1"/>
</dbReference>
<dbReference type="FunFam" id="3.90.190.10:FF:000025">
    <property type="entry name" value="Tyrosine-protein phosphatase non-receptor type 1"/>
    <property type="match status" value="1"/>
</dbReference>
<dbReference type="Gene3D" id="3.90.190.10">
    <property type="entry name" value="Protein tyrosine phosphatase superfamily"/>
    <property type="match status" value="1"/>
</dbReference>
<dbReference type="InterPro" id="IPR051985">
    <property type="entry name" value="NR_tyrosine_phosphatase"/>
</dbReference>
<dbReference type="InterPro" id="IPR029021">
    <property type="entry name" value="Prot-tyrosine_phosphatase-like"/>
</dbReference>
<dbReference type="InterPro" id="IPR000242">
    <property type="entry name" value="PTP_cat"/>
</dbReference>
<dbReference type="InterPro" id="IPR012265">
    <property type="entry name" value="Ptpn1/Ptpn2"/>
</dbReference>
<dbReference type="InterPro" id="IPR016130">
    <property type="entry name" value="Tyr_Pase_AS"/>
</dbReference>
<dbReference type="InterPro" id="IPR003595">
    <property type="entry name" value="Tyr_Pase_cat"/>
</dbReference>
<dbReference type="InterPro" id="IPR000387">
    <property type="entry name" value="Tyr_Pase_dom"/>
</dbReference>
<dbReference type="PANTHER" id="PTHR46047:SF2">
    <property type="entry name" value="TYROSINE-PROTEIN PHOSPHATASE NON-RECEPTOR TYPE 1"/>
    <property type="match status" value="1"/>
</dbReference>
<dbReference type="PANTHER" id="PTHR46047">
    <property type="entry name" value="TYROSINE-PROTEIN PHOSPHATASE NON-RECEPTOR TYPE 61F"/>
    <property type="match status" value="1"/>
</dbReference>
<dbReference type="Pfam" id="PF00102">
    <property type="entry name" value="Y_phosphatase"/>
    <property type="match status" value="1"/>
</dbReference>
<dbReference type="PIRSF" id="PIRSF000926">
    <property type="entry name" value="Tyr-Ptase_nr1"/>
    <property type="match status" value="1"/>
</dbReference>
<dbReference type="PRINTS" id="PR00700">
    <property type="entry name" value="PRTYPHPHTASE"/>
</dbReference>
<dbReference type="SMART" id="SM00194">
    <property type="entry name" value="PTPc"/>
    <property type="match status" value="1"/>
</dbReference>
<dbReference type="SMART" id="SM00404">
    <property type="entry name" value="PTPc_motif"/>
    <property type="match status" value="1"/>
</dbReference>
<dbReference type="SUPFAM" id="SSF52799">
    <property type="entry name" value="(Phosphotyrosine protein) phosphatases II"/>
    <property type="match status" value="1"/>
</dbReference>
<dbReference type="PROSITE" id="PS00383">
    <property type="entry name" value="TYR_PHOSPHATASE_1"/>
    <property type="match status" value="1"/>
</dbReference>
<dbReference type="PROSITE" id="PS50056">
    <property type="entry name" value="TYR_PHOSPHATASE_2"/>
    <property type="match status" value="1"/>
</dbReference>
<dbReference type="PROSITE" id="PS50055">
    <property type="entry name" value="TYR_PHOSPHATASE_PTP"/>
    <property type="match status" value="1"/>
</dbReference>
<name>PTN1_HUMAN</name>
<accession>P18031</accession>
<accession>Q5TGD8</accession>
<accession>Q9BQV9</accession>
<accession>Q9NQQ4</accession>
<evidence type="ECO:0000250" key="1"/>
<evidence type="ECO:0000255" key="2">
    <source>
        <dbReference type="PROSITE-ProRule" id="PRU00160"/>
    </source>
</evidence>
<evidence type="ECO:0000255" key="3">
    <source>
        <dbReference type="PROSITE-ProRule" id="PRU10044"/>
    </source>
</evidence>
<evidence type="ECO:0000256" key="4">
    <source>
        <dbReference type="SAM" id="MobiDB-lite"/>
    </source>
</evidence>
<evidence type="ECO:0000269" key="5">
    <source>
    </source>
</evidence>
<evidence type="ECO:0000269" key="6">
    <source>
    </source>
</evidence>
<evidence type="ECO:0000269" key="7">
    <source>
    </source>
</evidence>
<evidence type="ECO:0000269" key="8">
    <source>
    </source>
</evidence>
<evidence type="ECO:0000269" key="9">
    <source>
    </source>
</evidence>
<evidence type="ECO:0000269" key="10">
    <source>
    </source>
</evidence>
<evidence type="ECO:0000269" key="11">
    <source>
    </source>
</evidence>
<evidence type="ECO:0000269" key="12">
    <source>
    </source>
</evidence>
<evidence type="ECO:0000269" key="13">
    <source>
    </source>
</evidence>
<evidence type="ECO:0000269" key="14">
    <source>
    </source>
</evidence>
<evidence type="ECO:0000269" key="15">
    <source>
    </source>
</evidence>
<evidence type="ECO:0000269" key="16">
    <source>
    </source>
</evidence>
<evidence type="ECO:0000269" key="17">
    <source>
    </source>
</evidence>
<evidence type="ECO:0000305" key="18"/>
<evidence type="ECO:0007744" key="19">
    <source>
    </source>
</evidence>
<evidence type="ECO:0007744" key="20">
    <source>
    </source>
</evidence>
<evidence type="ECO:0007744" key="21">
    <source>
    </source>
</evidence>
<evidence type="ECO:0007744" key="22">
    <source>
    </source>
</evidence>
<evidence type="ECO:0007744" key="23">
    <source>
    </source>
</evidence>
<evidence type="ECO:0007829" key="24">
    <source>
        <dbReference type="PDB" id="1BZH"/>
    </source>
</evidence>
<evidence type="ECO:0007829" key="25">
    <source>
        <dbReference type="PDB" id="2CMB"/>
    </source>
</evidence>
<evidence type="ECO:0007829" key="26">
    <source>
        <dbReference type="PDB" id="2CNE"/>
    </source>
</evidence>
<evidence type="ECO:0007829" key="27">
    <source>
        <dbReference type="PDB" id="2FJM"/>
    </source>
</evidence>
<evidence type="ECO:0007829" key="28">
    <source>
        <dbReference type="PDB" id="5QEL"/>
    </source>
</evidence>
<evidence type="ECO:0007829" key="29">
    <source>
        <dbReference type="PDB" id="5QF0"/>
    </source>
</evidence>
<evidence type="ECO:0007829" key="30">
    <source>
        <dbReference type="PDB" id="6XEA"/>
    </source>
</evidence>
<evidence type="ECO:0007829" key="31">
    <source>
        <dbReference type="PDB" id="7MKZ"/>
    </source>
</evidence>
<evidence type="ECO:0007829" key="32">
    <source>
        <dbReference type="PDB" id="7MN9"/>
    </source>
</evidence>
<evidence type="ECO:0007829" key="33">
    <source>
        <dbReference type="PDB" id="8G65"/>
    </source>
</evidence>
<sequence>MEMEKEFEQIDKSGSWAAIYQDIRHEASDFPCRVAKLPKNKNRNRYRDVSPFDHSRIKLHQEDNDYINASLIKMEEAQRSYILTQGPLPNTCGHFWEMVWEQKSRGVVMLNRVMEKGSLKCAQYWPQKEEKEMIFEDTNLKLTLISEDIKSYYTVRQLELENLTTQETREILHFHYTTWPDFGVPESPASFLNFLFKVRESGSLSPEHGPVVVHCSAGIGRSGTFCLADTCLLLMDKRKDPSSVDIKKVLLEMRKFRMGLIQTADQLRFSYLAVIEGAKFIMGDSSVQDQWKELSHEDLEPPPEHIPPPPRPPKRILEPHNGKCREFFPNHQWVKEETQEDKDCPIKEEKGSPLNAAPYGIESMSQDTEVRSRVVGGSLRGAQAASPAKGEPSLPEKDEDHALSYWKPFLVNMCVATVLTAGAYLCYRFLFNSNT</sequence>
<keyword id="KW-0002">3D-structure</keyword>
<keyword id="KW-0007">Acetylation</keyword>
<keyword id="KW-0903">Direct protein sequencing</keyword>
<keyword id="KW-0256">Endoplasmic reticulum</keyword>
<keyword id="KW-0378">Hydrolase</keyword>
<keyword id="KW-0472">Membrane</keyword>
<keyword id="KW-0558">Oxidation</keyword>
<keyword id="KW-0597">Phosphoprotein</keyword>
<keyword id="KW-0904">Protein phosphatase</keyword>
<keyword id="KW-1267">Proteomics identification</keyword>
<keyword id="KW-1185">Reference proteome</keyword>
<keyword id="KW-0702">S-nitrosylation</keyword>
<comment type="function">
    <text evidence="10 11 13">Tyrosine-protein phosphatase which acts as a regulator of endoplasmic reticulum unfolded protein response. Mediates dephosphorylation of EIF2AK3/PERK; inactivating the protein kinase activity of EIF2AK3/PERK. May play an important role in CKII- and p60c-src-induced signal transduction cascades. May regulate the EFNA5-EPHA3 signaling pathway which modulates cell reorganization and cell-cell repulsion. May also regulate the hepatocyte growth factor receptor signaling pathway through dephosphorylation of MET.</text>
</comment>
<comment type="catalytic activity">
    <reaction evidence="3">
        <text>O-phospho-L-tyrosyl-[protein] + H2O = L-tyrosyl-[protein] + phosphate</text>
        <dbReference type="Rhea" id="RHEA:10684"/>
        <dbReference type="Rhea" id="RHEA-COMP:10136"/>
        <dbReference type="Rhea" id="RHEA-COMP:20101"/>
        <dbReference type="ChEBI" id="CHEBI:15377"/>
        <dbReference type="ChEBI" id="CHEBI:43474"/>
        <dbReference type="ChEBI" id="CHEBI:46858"/>
        <dbReference type="ChEBI" id="CHEBI:61978"/>
        <dbReference type="EC" id="3.1.3.48"/>
    </reaction>
</comment>
<comment type="subunit">
    <text evidence="10 11 12">Interacts with EPHA3 (phosphorylated); dephosphorylates EPHA3 and may regulate its trafficking and function (PubMed:21135139). Interacts with MET (PubMed:18819921). Interacts with NCK1 (PubMed:21707536).</text>
</comment>
<comment type="interaction">
    <interactant intactId="EBI-968788">
        <id>P18031</id>
    </interactant>
    <interactant intactId="EBI-13059134">
        <id>Q13520</id>
        <label>AQP6</label>
    </interactant>
    <organismsDiffer>false</organismsDiffer>
    <experiments>3</experiments>
</comment>
<comment type="interaction">
    <interactant intactId="EBI-968788">
        <id>P18031</id>
    </interactant>
    <interactant intactId="EBI-702093">
        <id>P56945</id>
        <label>BCAR1</label>
    </interactant>
    <organismsDiffer>false</organismsDiffer>
    <experiments>5</experiments>
</comment>
<comment type="interaction">
    <interactant intactId="EBI-968788">
        <id>P18031</id>
    </interactant>
    <interactant intactId="EBI-8658094">
        <id>P11274-1</id>
        <label>BCR</label>
    </interactant>
    <organismsDiffer>false</organismsDiffer>
    <experiments>3</experiments>
</comment>
<comment type="interaction">
    <interactant intactId="EBI-968788">
        <id>P18031</id>
    </interactant>
    <interactant intactId="EBI-1542113">
        <id>P07384</id>
        <label>CAPN1</label>
    </interactant>
    <organismsDiffer>false</organismsDiffer>
    <experiments>4</experiments>
</comment>
<comment type="interaction">
    <interactant intactId="EBI-968788">
        <id>P18031</id>
    </interactant>
    <interactant intactId="EBI-603614">
        <id>Q03135</id>
        <label>CAV1</label>
    </interactant>
    <organismsDiffer>false</organismsDiffer>
    <experiments>5</experiments>
</comment>
<comment type="interaction">
    <interactant intactId="EBI-968788">
        <id>P18031</id>
    </interactant>
    <interactant intactId="EBI-351886">
        <id>Q14247</id>
        <label>CTTN</label>
    </interactant>
    <organismsDiffer>false</organismsDiffer>
    <experiments>2</experiments>
</comment>
<comment type="interaction">
    <interactant intactId="EBI-968788">
        <id>P18031</id>
    </interactant>
    <interactant intactId="EBI-297353">
        <id>P00533</id>
        <label>EGFR</label>
    </interactant>
    <organismsDiffer>false</organismsDiffer>
    <experiments>9</experiments>
</comment>
<comment type="interaction">
    <interactant intactId="EBI-968788">
        <id>P18031</id>
    </interactant>
    <interactant intactId="EBI-18535450">
        <id>Q9GZR5</id>
        <label>ELOVL4</label>
    </interactant>
    <organismsDiffer>false</organismsDiffer>
    <experiments>3</experiments>
</comment>
<comment type="interaction">
    <interactant intactId="EBI-968788">
        <id>P18031</id>
    </interactant>
    <interactant intactId="EBI-617321">
        <id>P19235</id>
        <label>EPOR</label>
    </interactant>
    <organismsDiffer>false</organismsDiffer>
    <experiments>3</experiments>
</comment>
<comment type="interaction">
    <interactant intactId="EBI-968788">
        <id>P18031</id>
    </interactant>
    <interactant intactId="EBI-286316">
        <id>P10912</id>
        <label>GHR</label>
    </interactant>
    <organismsDiffer>false</organismsDiffer>
    <experiments>5</experiments>
</comment>
<comment type="interaction">
    <interactant intactId="EBI-968788">
        <id>P18031</id>
    </interactant>
    <interactant intactId="EBI-401755">
        <id>P62993</id>
        <label>GRB2</label>
    </interactant>
    <organismsDiffer>false</organismsDiffer>
    <experiments>4</experiments>
</comment>
<comment type="interaction">
    <interactant intactId="EBI-968788">
        <id>P18031</id>
    </interactant>
    <interactant intactId="EBI-475981">
        <id>P08069</id>
        <label>IGF1R</label>
    </interactant>
    <organismsDiffer>false</organismsDiffer>
    <experiments>4</experiments>
</comment>
<comment type="interaction">
    <interactant intactId="EBI-968788">
        <id>P18031</id>
    </interactant>
    <interactant intactId="EBI-475899">
        <id>P06213</id>
        <label>INSR</label>
    </interactant>
    <organismsDiffer>false</organismsDiffer>
    <experiments>33</experiments>
</comment>
<comment type="interaction">
    <interactant intactId="EBI-968788">
        <id>P18031</id>
    </interactant>
    <interactant intactId="EBI-15558981">
        <id>P06213-1</id>
        <label>INSR</label>
    </interactant>
    <organismsDiffer>false</organismsDiffer>
    <experiments>2</experiments>
</comment>
<comment type="interaction">
    <interactant intactId="EBI-968788">
        <id>P18031</id>
    </interactant>
    <interactant intactId="EBI-703066">
        <id>P05556</id>
        <label>ITGB1</label>
    </interactant>
    <organismsDiffer>false</organismsDiffer>
    <experiments>2</experiments>
</comment>
<comment type="interaction">
    <interactant intactId="EBI-968788">
        <id>P18031</id>
    </interactant>
    <interactant intactId="EBI-702847">
        <id>P05106</id>
        <label>ITGB3</label>
    </interactant>
    <organismsDiffer>false</organismsDiffer>
    <experiments>4</experiments>
</comment>
<comment type="interaction">
    <interactant intactId="EBI-968788">
        <id>P18031</id>
    </interactant>
    <interactant intactId="EBI-518647">
        <id>O60674</id>
        <label>JAK2</label>
    </interactant>
    <organismsDiffer>false</organismsDiffer>
    <experiments>5</experiments>
</comment>
<comment type="interaction">
    <interactant intactId="EBI-968788">
        <id>P18031</id>
    </interactant>
    <interactant intactId="EBI-1222766">
        <id>O43561</id>
        <label>LAT</label>
    </interactant>
    <organismsDiffer>false</organismsDiffer>
    <experiments>3</experiments>
</comment>
<comment type="interaction">
    <interactant intactId="EBI-968788">
        <id>P18031</id>
    </interactant>
    <interactant intactId="EBI-1039152">
        <id>P08581</id>
        <label>MET</label>
    </interactant>
    <organismsDiffer>false</organismsDiffer>
    <experiments>3</experiments>
</comment>
<comment type="interaction">
    <interactant intactId="EBI-968788">
        <id>P18031</id>
    </interactant>
    <interactant intactId="EBI-1028226">
        <id>P04629</id>
        <label>NTRK1</label>
    </interactant>
    <organismsDiffer>false</organismsDiffer>
    <experiments>2</experiments>
</comment>
<comment type="interaction">
    <interactant intactId="EBI-968788">
        <id>P18031</id>
    </interactant>
    <interactant intactId="EBI-3936704">
        <id>Q16288</id>
        <label>NTRK3</label>
    </interactant>
    <organismsDiffer>false</organismsDiffer>
    <experiments>2</experiments>
</comment>
<comment type="interaction">
    <interactant intactId="EBI-968788">
        <id>P18031</id>
    </interactant>
    <interactant intactId="EBI-641237">
        <id>P09619</id>
        <label>PDGFRB</label>
    </interactant>
    <organismsDiffer>false</organismsDiffer>
    <experiments>3</experiments>
</comment>
<comment type="interaction">
    <interactant intactId="EBI-968788">
        <id>P18031</id>
    </interactant>
    <interactant intactId="EBI-17630288">
        <id>P57054</id>
        <label>PIGP</label>
    </interactant>
    <organismsDiffer>false</organismsDiffer>
    <experiments>3</experiments>
</comment>
<comment type="interaction">
    <interactant intactId="EBI-968788">
        <id>P18031</id>
    </interactant>
    <interactant intactId="EBI-7371065">
        <id>P08922</id>
        <label>ROS1</label>
    </interactant>
    <organismsDiffer>false</organismsDiffer>
    <experiments>3</experiments>
</comment>
<comment type="interaction">
    <interactant intactId="EBI-968788">
        <id>P18031</id>
    </interactant>
    <interactant intactId="EBI-621482">
        <id>P12931</id>
        <label>SRC</label>
    </interactant>
    <organismsDiffer>false</organismsDiffer>
    <experiments>14</experiments>
</comment>
<comment type="interaction">
    <interactant intactId="EBI-968788">
        <id>P18031</id>
    </interactant>
    <interactant intactId="EBI-518675">
        <id>P40763</id>
        <label>STAT3</label>
    </interactant>
    <organismsDiffer>false</organismsDiffer>
    <experiments>2</experiments>
</comment>
<comment type="interaction">
    <interactant intactId="EBI-968788">
        <id>P18031</id>
    </interactant>
    <interactant intactId="EBI-749537">
        <id>P42229</id>
        <label>STAT5A</label>
    </interactant>
    <organismsDiffer>false</organismsDiffer>
    <experiments>2</experiments>
</comment>
<comment type="interaction">
    <interactant intactId="EBI-968788">
        <id>P18031</id>
    </interactant>
    <interactant intactId="EBI-6268651">
        <id>Q9NPL8</id>
        <label>TIMMDC1</label>
    </interactant>
    <organismsDiffer>false</organismsDiffer>
    <experiments>3</experiments>
</comment>
<comment type="interaction">
    <interactant intactId="EBI-968788">
        <id>P18031</id>
    </interactant>
    <interactant intactId="EBI-10288884">
        <id>Q96HV5</id>
        <label>TMEM41A</label>
    </interactant>
    <organismsDiffer>false</organismsDiffer>
    <experiments>3</experiments>
</comment>
<comment type="interaction">
    <interactant intactId="EBI-968788">
        <id>P18031</id>
    </interactant>
    <interactant intactId="EBI-2548832">
        <id>Q8N661</id>
        <label>TMEM86B</label>
    </interactant>
    <organismsDiffer>false</organismsDiffer>
    <experiments>3</experiments>
</comment>
<comment type="interaction">
    <interactant intactId="EBI-968788">
        <id>P18031</id>
    </interactant>
    <interactant intactId="EBI-7198335">
        <id>Q9H1D0</id>
        <label>TRPV6</label>
    </interactant>
    <organismsDiffer>false</organismsDiffer>
    <experiments>6</experiments>
</comment>
<comment type="interaction">
    <interactant intactId="EBI-968788">
        <id>P18031</id>
    </interactant>
    <interactant intactId="EBI-594644">
        <id>P10599</id>
        <label>TXN</label>
    </interactant>
    <organismsDiffer>false</organismsDiffer>
    <experiments>2</experiments>
</comment>
<comment type="interaction">
    <interactant intactId="EBI-968788">
        <id>P18031</id>
    </interactant>
    <interactant intactId="EBI-77088">
        <id>Q61140</id>
        <label>Bcar1</label>
    </interactant>
    <organismsDiffer>true</organismsDiffer>
    <experiments>5</experiments>
</comment>
<comment type="interaction">
    <interactant intactId="EBI-968788">
        <id>P18031</id>
    </interactant>
    <interactant intactId="EBI-1176801">
        <id>Q63767</id>
        <label>Bcar1</label>
    </interactant>
    <organismsDiffer>true</organismsDiffer>
    <experiments>5</experiments>
</comment>
<comment type="interaction">
    <interactant intactId="EBI-968788">
        <id>P18031</id>
    </interactant>
    <interactant intactId="EBI-397974">
        <id>P15116</id>
        <label>Cdh2</label>
    </interactant>
    <organismsDiffer>true</organismsDiffer>
    <experiments>3</experiments>
</comment>
<comment type="interaction">
    <interactant intactId="EBI-968788">
        <id>P18031</id>
    </interactant>
    <interactant intactId="EBI-8423843">
        <id>Q63768</id>
        <label>Crk</label>
    </interactant>
    <organismsDiffer>true</organismsDiffer>
    <experiments>2</experiments>
</comment>
<comment type="interaction">
    <interactant intactId="EBI-968788">
        <id>P18031</id>
    </interactant>
    <interactant intactId="EBI-401775">
        <id>P62994</id>
        <label>Grb2</label>
    </interactant>
    <organismsDiffer>true</organismsDiffer>
    <experiments>3</experiments>
</comment>
<comment type="interaction">
    <interactant intactId="EBI-968788">
        <id>P18031</id>
    </interactant>
    <interactant intactId="EBI-520230">
        <id>P35570</id>
        <label>Irs1</label>
    </interactant>
    <organismsDiffer>true</organismsDiffer>
    <experiments>3</experiments>
</comment>
<comment type="interaction">
    <interactant intactId="EBI-968788">
        <id>P18031</id>
    </interactant>
    <interactant intactId="EBI-1554855">
        <id>P05622</id>
        <label>Pdgfrb</label>
    </interactant>
    <organismsDiffer>true</organismsDiffer>
    <experiments>3</experiments>
</comment>
<comment type="interaction">
    <interactant intactId="EBI-968788">
        <id>P18031</id>
    </interactant>
    <interactant intactId="EBI-520788">
        <id>P10686</id>
        <label>Plcg1</label>
    </interactant>
    <organismsDiffer>true</organismsDiffer>
    <experiments>4</experiments>
</comment>
<comment type="interaction">
    <interactant intactId="EBI-968788">
        <id>P18031</id>
    </interactant>
    <interactant intactId="EBI-77070">
        <id>P34152</id>
        <label>Ptk2</label>
    </interactant>
    <organismsDiffer>true</organismsDiffer>
    <experiments>2</experiments>
</comment>
<comment type="interaction">
    <interactant intactId="EBI-968788">
        <id>P18031</id>
    </interactant>
    <interactant intactId="EBI-983394">
        <id>Q8VI36</id>
        <label>Pxn</label>
    </interactant>
    <organismsDiffer>true</organismsDiffer>
    <experiments>2</experiments>
</comment>
<comment type="interaction">
    <interactant intactId="EBI-968788">
        <id>P18031</id>
    </interactant>
    <interactant intactId="EBI-7784541">
        <id>Q9WUD9</id>
        <label>Src</label>
    </interactant>
    <organismsDiffer>true</organismsDiffer>
    <experiments>2</experiments>
</comment>
<comment type="interaction">
    <interactant intactId="EBI-968788">
        <id>P18031</id>
    </interactant>
    <interactant intactId="EBI-80152">
        <id>P63166</id>
        <label>Sumo1</label>
    </interactant>
    <organismsDiffer>true</organismsDiffer>
    <experiments>2</experiments>
</comment>
<comment type="subcellular location">
    <subcellularLocation>
        <location evidence="9 11">Endoplasmic reticulum membrane</location>
        <topology evidence="9 11">Peripheral membrane protein</topology>
        <orientation evidence="9 11">Cytoplasmic side</orientation>
    </subcellularLocation>
    <text>Interacts with EPHA3 at the cell membrane.</text>
</comment>
<comment type="tissue specificity">
    <text evidence="15">Expressed in keratinocytes (at protein level).</text>
</comment>
<comment type="PTM">
    <text evidence="7 8">Oxidized on Cys-215; the Cys-SOH formed in response to redox signaling reacts with the alpha-amido of the following residue to form a sulfenamide cross-link, triggering a conformational change that inhibits substrate binding and activity. The active site can be restored by reduction.</text>
</comment>
<comment type="PTM">
    <text evidence="5 6 16 17">Ser-50 is the major site of phosphorylation as compared to Ser-242 and Ser-243. Activated by phosphorylation at Ser-50.</text>
</comment>
<comment type="PTM">
    <text evidence="13">S-nitrosylation of Cys-215 inactivates the enzyme activity.</text>
</comment>
<comment type="PTM">
    <text>Sulfhydration at Cys-215 following endoplasmic reticulum stress inactivates the enzyme activity, promoting EIF2AK3/PERK activity.</text>
</comment>
<comment type="similarity">
    <text evidence="18">Belongs to the protein-tyrosine phosphatase family. Non-receptor class 1 subfamily.</text>
</comment>
<comment type="online information" name="Atlas of Genetics and Cytogenetics in Oncology and Haematology">
    <link uri="https://atlasgeneticsoncology.org/gene/41909/PTPN1"/>
</comment>
<reference key="1">
    <citation type="journal article" date="1990" name="Proc. Natl. Acad. Sci. U.S.A.">
        <title>Cloning of a cDNA for a major human protein-tyrosine-phosphatase.</title>
        <authorList>
            <person name="Chernoff J."/>
            <person name="Schievella A.R."/>
            <person name="Jost C.A."/>
            <person name="Erikson R.L."/>
            <person name="Neel B.G."/>
        </authorList>
    </citation>
    <scope>NUCLEOTIDE SEQUENCE [MRNA]</scope>
    <source>
        <tissue>Placenta</tissue>
    </source>
</reference>
<reference key="2">
    <citation type="journal article" date="1990" name="Proc. Natl. Acad. Sci. U.S.A.">
        <title>Molecular cloning and chromosome mapping of the human gene encoding protein phosphotyrosyl phosphatase 1B.</title>
        <authorList>
            <person name="Brown-Shimer S."/>
            <person name="Johnson K.A."/>
            <person name="Lawrence J.B."/>
            <person name="Johnson C."/>
            <person name="Bruskin A."/>
            <person name="Green N.R."/>
            <person name="Hill D.E."/>
        </authorList>
    </citation>
    <scope>NUCLEOTIDE SEQUENCE [GENOMIC DNA / MRNA]</scope>
    <source>
        <tissue>Placenta</tissue>
    </source>
</reference>
<reference key="3">
    <citation type="submission" date="2003-05" db="EMBL/GenBank/DDBJ databases">
        <title>Cloning of human full-length CDSs in BD Creator(TM) system donor vector.</title>
        <authorList>
            <person name="Kalnine N."/>
            <person name="Chen X."/>
            <person name="Rolfs A."/>
            <person name="Halleck A."/>
            <person name="Hines L."/>
            <person name="Eisenstein S."/>
            <person name="Koundinya M."/>
            <person name="Raphael J."/>
            <person name="Moreira D."/>
            <person name="Kelley T."/>
            <person name="LaBaer J."/>
            <person name="Lin Y."/>
            <person name="Phelan M."/>
            <person name="Farmer A."/>
        </authorList>
    </citation>
    <scope>NUCLEOTIDE SEQUENCE [LARGE SCALE MRNA]</scope>
</reference>
<reference key="4">
    <citation type="journal article" date="2001" name="Nature">
        <title>The DNA sequence and comparative analysis of human chromosome 20.</title>
        <authorList>
            <person name="Deloukas P."/>
            <person name="Matthews L.H."/>
            <person name="Ashurst J.L."/>
            <person name="Burton J."/>
            <person name="Gilbert J.G.R."/>
            <person name="Jones M."/>
            <person name="Stavrides G."/>
            <person name="Almeida J.P."/>
            <person name="Babbage A.K."/>
            <person name="Bagguley C.L."/>
            <person name="Bailey J."/>
            <person name="Barlow K.F."/>
            <person name="Bates K.N."/>
            <person name="Beard L.M."/>
            <person name="Beare D.M."/>
            <person name="Beasley O.P."/>
            <person name="Bird C.P."/>
            <person name="Blakey S.E."/>
            <person name="Bridgeman A.M."/>
            <person name="Brown A.J."/>
            <person name="Buck D."/>
            <person name="Burrill W.D."/>
            <person name="Butler A.P."/>
            <person name="Carder C."/>
            <person name="Carter N.P."/>
            <person name="Chapman J.C."/>
            <person name="Clamp M."/>
            <person name="Clark G."/>
            <person name="Clark L.N."/>
            <person name="Clark S.Y."/>
            <person name="Clee C.M."/>
            <person name="Clegg S."/>
            <person name="Cobley V.E."/>
            <person name="Collier R.E."/>
            <person name="Connor R.E."/>
            <person name="Corby N.R."/>
            <person name="Coulson A."/>
            <person name="Coville G.J."/>
            <person name="Deadman R."/>
            <person name="Dhami P.D."/>
            <person name="Dunn M."/>
            <person name="Ellington A.G."/>
            <person name="Frankland J.A."/>
            <person name="Fraser A."/>
            <person name="French L."/>
            <person name="Garner P."/>
            <person name="Grafham D.V."/>
            <person name="Griffiths C."/>
            <person name="Griffiths M.N.D."/>
            <person name="Gwilliam R."/>
            <person name="Hall R.E."/>
            <person name="Hammond S."/>
            <person name="Harley J.L."/>
            <person name="Heath P.D."/>
            <person name="Ho S."/>
            <person name="Holden J.L."/>
            <person name="Howden P.J."/>
            <person name="Huckle E."/>
            <person name="Hunt A.R."/>
            <person name="Hunt S.E."/>
            <person name="Jekosch K."/>
            <person name="Johnson C.M."/>
            <person name="Johnson D."/>
            <person name="Kay M.P."/>
            <person name="Kimberley A.M."/>
            <person name="King A."/>
            <person name="Knights A."/>
            <person name="Laird G.K."/>
            <person name="Lawlor S."/>
            <person name="Lehvaeslaiho M.H."/>
            <person name="Leversha M.A."/>
            <person name="Lloyd C."/>
            <person name="Lloyd D.M."/>
            <person name="Lovell J.D."/>
            <person name="Marsh V.L."/>
            <person name="Martin S.L."/>
            <person name="McConnachie L.J."/>
            <person name="McLay K."/>
            <person name="McMurray A.A."/>
            <person name="Milne S.A."/>
            <person name="Mistry D."/>
            <person name="Moore M.J.F."/>
            <person name="Mullikin J.C."/>
            <person name="Nickerson T."/>
            <person name="Oliver K."/>
            <person name="Parker A."/>
            <person name="Patel R."/>
            <person name="Pearce T.A.V."/>
            <person name="Peck A.I."/>
            <person name="Phillimore B.J.C.T."/>
            <person name="Prathalingam S.R."/>
            <person name="Plumb R.W."/>
            <person name="Ramsay H."/>
            <person name="Rice C.M."/>
            <person name="Ross M.T."/>
            <person name="Scott C.E."/>
            <person name="Sehra H.K."/>
            <person name="Shownkeen R."/>
            <person name="Sims S."/>
            <person name="Skuce C.D."/>
            <person name="Smith M.L."/>
            <person name="Soderlund C."/>
            <person name="Steward C.A."/>
            <person name="Sulston J.E."/>
            <person name="Swann R.M."/>
            <person name="Sycamore N."/>
            <person name="Taylor R."/>
            <person name="Tee L."/>
            <person name="Thomas D.W."/>
            <person name="Thorpe A."/>
            <person name="Tracey A."/>
            <person name="Tromans A.C."/>
            <person name="Vaudin M."/>
            <person name="Wall M."/>
            <person name="Wallis J.M."/>
            <person name="Whitehead S.L."/>
            <person name="Whittaker P."/>
            <person name="Willey D.L."/>
            <person name="Williams L."/>
            <person name="Williams S.A."/>
            <person name="Wilming L."/>
            <person name="Wray P.W."/>
            <person name="Hubbard T."/>
            <person name="Durbin R.M."/>
            <person name="Bentley D.R."/>
            <person name="Beck S."/>
            <person name="Rogers J."/>
        </authorList>
    </citation>
    <scope>NUCLEOTIDE SEQUENCE [LARGE SCALE GENOMIC DNA]</scope>
</reference>
<reference key="5">
    <citation type="journal article" date="2004" name="Genome Res.">
        <title>The status, quality, and expansion of the NIH full-length cDNA project: the Mammalian Gene Collection (MGC).</title>
        <authorList>
            <consortium name="The MGC Project Team"/>
        </authorList>
    </citation>
    <scope>NUCLEOTIDE SEQUENCE [LARGE SCALE MRNA]</scope>
    <source>
        <tissue>Eye</tissue>
        <tissue>Lymph</tissue>
    </source>
</reference>
<reference key="6">
    <citation type="journal article" date="1989" name="Proc. Natl. Acad. Sci. U.S.A.">
        <title>Human placenta protein-tyrosine-phosphatase: amino acid sequence and relationship to a family of receptor-like proteins.</title>
        <authorList>
            <person name="Charbonneau H."/>
            <person name="Tonks N.K."/>
            <person name="Kumar S."/>
            <person name="Diltz C.D."/>
            <person name="Harrylock M."/>
            <person name="Cool D.E."/>
            <person name="Krebs E.G."/>
            <person name="Fischer E.H."/>
            <person name="Walsh K.A."/>
        </authorList>
    </citation>
    <scope>PROTEIN SEQUENCE OF 1-321</scope>
    <scope>ACETYLATION AT MET-1</scope>
    <source>
        <tissue>Placenta</tissue>
    </source>
</reference>
<reference key="7">
    <citation type="journal article" date="1993" name="EMBO J.">
        <title>Multi-site phosphorylation of the protein tyrosine phosphatase, PTP1B: identification of cell cycle regulated and phorbol ester stimulated sites of phosphorylation.</title>
        <authorList>
            <person name="Flint A.J."/>
            <person name="Gebbink M.F.G.B."/>
            <person name="Franza B.R. Jr."/>
            <person name="Hill D.E."/>
            <person name="Tonks N.K."/>
        </authorList>
    </citation>
    <scope>PHOSPHORYLATION AT SER-352; SER-378 AND SER-386</scope>
</reference>
<reference key="8">
    <citation type="journal article" date="1992" name="Cell">
        <title>The nontransmembrane tyrosine phosphatase PTP-1B localizes to the endoplasmic reticulum via its 35 amino acid C-terminal sequence.</title>
        <authorList>
            <person name="Frangioni J.V."/>
            <person name="Beahm P.H."/>
            <person name="Shifrin V."/>
            <person name="Jost C.A."/>
            <person name="Neel B.G."/>
        </authorList>
    </citation>
    <scope>SUBCELLULAR LOCATION</scope>
</reference>
<reference key="9">
    <citation type="journal article" date="1997" name="Biochem. J.">
        <title>Protein tyrosine phosphatase 1B interacts with and is tyrosine phosphorylated by the epidermal growth factor receptor.</title>
        <authorList>
            <person name="Liu F."/>
            <person name="Chernoff J."/>
        </authorList>
    </citation>
    <scope>PHOSPHORYLATION AT TYR-66</scope>
</reference>
<reference key="10">
    <citation type="journal article" date="1999" name="J. Biol. Chem.">
        <title>The CLK family kinases, CLK1 and CLK2, phosphorylate and activate the tyrosine phosphatase, PTP-1B.</title>
        <authorList>
            <person name="Moeslein F.M."/>
            <person name="Myers M.P."/>
            <person name="Landreth G.E."/>
        </authorList>
    </citation>
    <scope>PHOSPHORYLATION AT SER-50; SER-242 AND SER-243</scope>
    <scope>MUTAGENESIS OF SER-50</scope>
</reference>
<reference key="11">
    <citation type="journal article" date="2001" name="Mol. Endocrinol.">
        <title>Phosphorylation of PTP1B at Ser(50) by Akt impairs its ability to dephosphorylate the insulin receptor.</title>
        <authorList>
            <person name="Ravichandran L.V."/>
            <person name="Chen H."/>
            <person name="Li Y."/>
            <person name="Quon M.J."/>
        </authorList>
    </citation>
    <scope>PHOSPHORYLATION AT SER-50</scope>
    <scope>MUTAGENESIS OF SER-50</scope>
</reference>
<reference key="12">
    <citation type="journal article" date="2005" name="Nat. Biotechnol.">
        <title>Immunoaffinity profiling of tyrosine phosphorylation in cancer cells.</title>
        <authorList>
            <person name="Rush J."/>
            <person name="Moritz A."/>
            <person name="Lee K.A."/>
            <person name="Guo A."/>
            <person name="Goss V.L."/>
            <person name="Spek E.J."/>
            <person name="Zhang H."/>
            <person name="Zha X.-M."/>
            <person name="Polakiewicz R.D."/>
            <person name="Comb M.J."/>
        </authorList>
    </citation>
    <scope>PHOSPHORYLATION [LARGE SCALE ANALYSIS] AT TYR-20</scope>
    <scope>IDENTIFICATION BY MASS SPECTROMETRY [LARGE SCALE ANALYSIS]</scope>
</reference>
<reference key="13">
    <citation type="journal article" date="2008" name="J. Biol. Chem.">
        <title>Regulation of the Met receptor-tyrosine kinase by the protein-tyrosine phosphatase 1B and T-cell phosphatase.</title>
        <authorList>
            <person name="Sangwan V."/>
            <person name="Paliouras G.N."/>
            <person name="Abella J.V."/>
            <person name="Dube N."/>
            <person name="Monast A."/>
            <person name="Tremblay M.L."/>
            <person name="Park M."/>
        </authorList>
    </citation>
    <scope>FUNCTION IN DEPHOSPHORYLATION OF MET</scope>
    <scope>INTERACTION WITH MET</scope>
</reference>
<reference key="14">
    <citation type="journal article" date="2008" name="Mol. Cell">
        <title>Kinase-selective enrichment enables quantitative phosphoproteomics of the kinome across the cell cycle.</title>
        <authorList>
            <person name="Daub H."/>
            <person name="Olsen J.V."/>
            <person name="Bairlein M."/>
            <person name="Gnad F."/>
            <person name="Oppermann F.S."/>
            <person name="Korner R."/>
            <person name="Greff Z."/>
            <person name="Keri G."/>
            <person name="Stemmann O."/>
            <person name="Mann M."/>
        </authorList>
    </citation>
    <scope>PHOSPHORYLATION [LARGE SCALE ANALYSIS] AT SER-352</scope>
    <scope>IDENTIFICATION BY MASS SPECTROMETRY [LARGE SCALE ANALYSIS]</scope>
    <source>
        <tissue>Cervix carcinoma</tissue>
    </source>
</reference>
<reference key="15">
    <citation type="journal article" date="2010" name="J. Cell Biol.">
        <title>PTP1B regulates Eph receptor function and trafficking.</title>
        <authorList>
            <person name="Nievergall E."/>
            <person name="Janes P.W."/>
            <person name="Stegmayer C."/>
            <person name="Vail M.E."/>
            <person name="Haj F.G."/>
            <person name="Teng S.W."/>
            <person name="Neel B.G."/>
            <person name="Bastiaens P.I."/>
            <person name="Lackmann M."/>
        </authorList>
    </citation>
    <scope>INTERACTION WITH EPHA3</scope>
    <scope>FUNCTION IN EPHA3 DEPHOSPHORYLATION</scope>
    <scope>SUBCELLULAR LOCATION</scope>
</reference>
<reference key="16">
    <citation type="journal article" date="2010" name="Sci. Signal.">
        <title>Quantitative phosphoproteomics reveals widespread full phosphorylation site occupancy during mitosis.</title>
        <authorList>
            <person name="Olsen J.V."/>
            <person name="Vermeulen M."/>
            <person name="Santamaria A."/>
            <person name="Kumar C."/>
            <person name="Miller M.L."/>
            <person name="Jensen L.J."/>
            <person name="Gnad F."/>
            <person name="Cox J."/>
            <person name="Jensen T.S."/>
            <person name="Nigg E.A."/>
            <person name="Brunak S."/>
            <person name="Mann M."/>
        </authorList>
    </citation>
    <scope>PHOSPHORYLATION [LARGE SCALE ANALYSIS] AT SER-352</scope>
    <scope>IDENTIFICATION BY MASS SPECTROMETRY [LARGE SCALE ANALYSIS]</scope>
    <source>
        <tissue>Cervix carcinoma</tissue>
    </source>
</reference>
<reference key="17">
    <citation type="journal article" date="2011" name="Biochem. J.">
        <title>Dock/Nck facilitates PTP61F/PTP1B regulation of insulin signalling.</title>
        <authorList>
            <person name="Wu C.L."/>
            <person name="Buszard B."/>
            <person name="Teng C.H."/>
            <person name="Chen W.L."/>
            <person name="Warr C.G."/>
            <person name="Tiganis T."/>
            <person name="Meng T.C."/>
        </authorList>
    </citation>
    <scope>INTERACTION WITH NCK1</scope>
</reference>
<reference key="18">
    <citation type="journal article" date="2011" name="BMC Syst. Biol.">
        <title>Initial characterization of the human central proteome.</title>
        <authorList>
            <person name="Burkard T.R."/>
            <person name="Planyavsky M."/>
            <person name="Kaupe I."/>
            <person name="Breitwieser F.P."/>
            <person name="Buerckstuemmer T."/>
            <person name="Bennett K.L."/>
            <person name="Superti-Furga G."/>
            <person name="Colinge J."/>
        </authorList>
    </citation>
    <scope>IDENTIFICATION BY MASS SPECTROMETRY [LARGE SCALE ANALYSIS]</scope>
</reference>
<reference key="19">
    <citation type="journal article" date="2011" name="Sci. Signal.">
        <title>H2s-induced sulfhydration of the phosphatase PTP1B and its role in the endoplasmic reticulum stress response.</title>
        <authorList>
            <person name="Krishnan N."/>
            <person name="Fu C."/>
            <person name="Pappin D.J."/>
            <person name="Tonks N.K."/>
        </authorList>
    </citation>
    <scope>FUNCTION</scope>
    <scope>SULFHYDRATION AT CYS-215</scope>
    <scope>S-NITROSYLATION AT CYS-215</scope>
    <scope>MUTAGENESIS OF CYS-215</scope>
    <scope>MUTAGENESIS OF ASP-181 AND CYS-215</scope>
</reference>
<reference key="20">
    <citation type="journal article" date="2011" name="Sci. Signal.">
        <title>System-wide temporal characterization of the proteome and phosphoproteome of human embryonic stem cell differentiation.</title>
        <authorList>
            <person name="Rigbolt K.T."/>
            <person name="Prokhorova T.A."/>
            <person name="Akimov V."/>
            <person name="Henningsen J."/>
            <person name="Johansen P.T."/>
            <person name="Kratchmarova I."/>
            <person name="Kassem M."/>
            <person name="Mann M."/>
            <person name="Olsen J.V."/>
            <person name="Blagoev B."/>
        </authorList>
    </citation>
    <scope>PHOSPHORYLATION [LARGE SCALE ANALYSIS] AT SER-378</scope>
    <scope>IDENTIFICATION BY MASS SPECTROMETRY [LARGE SCALE ANALYSIS]</scope>
</reference>
<reference key="21">
    <citation type="journal article" date="2013" name="J. Proteome Res.">
        <title>Toward a comprehensive characterization of a human cancer cell phosphoproteome.</title>
        <authorList>
            <person name="Zhou H."/>
            <person name="Di Palma S."/>
            <person name="Preisinger C."/>
            <person name="Peng M."/>
            <person name="Polat A.N."/>
            <person name="Heck A.J."/>
            <person name="Mohammed S."/>
        </authorList>
    </citation>
    <scope>PHOSPHORYLATION [LARGE SCALE ANALYSIS] AT SER-50; SER-352; SER-363; SER-365; THR-368; SER-378 AND SER-386</scope>
    <scope>IDENTIFICATION BY MASS SPECTROMETRY [LARGE SCALE ANALYSIS]</scope>
    <source>
        <tissue>Cervix carcinoma</tissue>
        <tissue>Erythroleukemia</tissue>
    </source>
</reference>
<reference key="22">
    <citation type="journal article" date="2017" name="Elife">
        <title>A protein phosphatase network controls the temporal and spatial dynamics of differentiation commitment in human epidermis.</title>
        <authorList>
            <person name="Mishra A."/>
            <person name="Oules B."/>
            <person name="Pisco A.O."/>
            <person name="Ly T."/>
            <person name="Liakath-Ali K."/>
            <person name="Walko G."/>
            <person name="Viswanathan P."/>
            <person name="Tihy M."/>
            <person name="Nijjher J."/>
            <person name="Dunn S.J."/>
            <person name="Lamond A.I."/>
            <person name="Watt F.M."/>
        </authorList>
    </citation>
    <scope>TISSUE SPECIFICITY</scope>
</reference>
<reference key="23">
    <citation type="journal article" date="1994" name="Science">
        <title>Crystal structure of human protein tyrosine phosphatase 1B.</title>
        <authorList>
            <person name="Barford D."/>
            <person name="Flint A.J."/>
            <person name="Tonks N.K."/>
        </authorList>
    </citation>
    <scope>X-RAY CRYSTALLOGRAPHY (2.8 ANGSTROMS) OF 1-321</scope>
</reference>
<reference key="24">
    <citation type="journal article" date="1997" name="Proc. Natl. Acad. Sci. U.S.A.">
        <title>Identification of a second aryl phosphate-binding site in protein-tyrosine phosphatase 1B: a paradigm for inhibitor design.</title>
        <authorList>
            <person name="Puius Y.A."/>
            <person name="Zhao Y."/>
            <person name="Sullivan M."/>
            <person name="Lawrence D.S."/>
            <person name="Almo S.C."/>
            <person name="Zhang Z.Y."/>
        </authorList>
    </citation>
    <scope>X-RAY CRYSTALLOGRAPHY (1.9 ANGSTROMS) OF 1-298 OF MUTANT SER-215</scope>
</reference>
<reference key="25">
    <citation type="journal article" date="1998" name="J. Biol. Chem.">
        <title>Visualization of the cysteinyl-phosphate intermediate of a protein-tyrosine phosphatase by X-ray crystallography.</title>
        <authorList>
            <person name="Pannifer A.D."/>
            <person name="Flint A.J."/>
            <person name="Tonks N.K."/>
            <person name="Barford D."/>
        </authorList>
    </citation>
    <scope>X-RAY CRYSTALLOGRAPHY (2.5 ANGSTROMS) OF 1-285</scope>
</reference>
<reference key="26">
    <citation type="journal article" date="1998" name="Biochemistry">
        <title>Structural basis for inhibition of the protein tyrosine phosphatase 1B by phosphotyrosine peptide mimetics.</title>
        <authorList>
            <person name="Groves M.R."/>
            <person name="Yao Z.-J."/>
            <person name="Roller P.P."/>
            <person name="Burke T.R. Jr."/>
            <person name="Barford D."/>
        </authorList>
    </citation>
    <scope>X-RAY CRYSTALLOGRAPHY (2.35 ANGSTROMS) OF 1-298</scope>
</reference>
<reference key="27">
    <citation type="journal article" date="2003" name="Nature">
        <title>Redox regulation of protein tyrosine phosphatase 1B involves a sulphenyl-amide intermediate.</title>
        <authorList>
            <person name="Salmeen A."/>
            <person name="Andersen J.N."/>
            <person name="Myers M.P."/>
            <person name="Meng T.-C."/>
            <person name="Hinks J.A."/>
            <person name="Tonks N.K."/>
            <person name="Barford D."/>
        </authorList>
    </citation>
    <scope>X-RAY CRYSTALLOGRAPHY (1.8 ANGSTROMS) OF 1-321</scope>
    <scope>OXIDATION AT CYS-215</scope>
    <scope>CROSS-LINK 215-CYS-SER-216</scope>
</reference>
<reference key="28">
    <citation type="journal article" date="2003" name="Nature">
        <title>Oxidation state of the active-site cysteine in protein tyrosine phosphatase 1B.</title>
        <authorList>
            <person name="Van Montfort R.L.M."/>
            <person name="Congreve M."/>
            <person name="Tisi D."/>
            <person name="Carr R."/>
            <person name="Jhoti H."/>
        </authorList>
    </citation>
    <scope>X-RAY CRYSTALLOGRAPHY (2.2 ANGSTROMS) OF 1-321</scope>
    <scope>OXIDATION AT CYS-215</scope>
    <scope>CROSS-LINK 215-CYS-SER-216</scope>
</reference>
<reference key="29">
    <citation type="journal article" date="2005" name="Obes. Res.">
        <title>Protein tyrosine phosphatase 1B variant associated with fat distribution and insulin metabolism.</title>
        <authorList>
            <person name="Ukkola O."/>
            <person name="Rankinen T."/>
            <person name="Lakka T."/>
            <person name="Leon A.S."/>
            <person name="Skinner J.S."/>
            <person name="Wilmore J.H."/>
            <person name="Rao D.C."/>
            <person name="Kesaeniemi Y.A."/>
            <person name="Bouchard C."/>
        </authorList>
    </citation>
    <scope>ASSOCIATION OF VARIANT LEU-387 WITH LOW GLUCOSE TOLERANCE</scope>
</reference>
<feature type="chain" id="PRO_0000094748" description="Tyrosine-protein phosphatase non-receptor type 1">
    <location>
        <begin position="1"/>
        <end position="435"/>
    </location>
</feature>
<feature type="domain" description="Tyrosine-protein phosphatase" evidence="2">
    <location>
        <begin position="3"/>
        <end position="277"/>
    </location>
</feature>
<feature type="region of interest" description="Disordered" evidence="4">
    <location>
        <begin position="338"/>
        <end position="359"/>
    </location>
</feature>
<feature type="region of interest" description="Disordered" evidence="4">
    <location>
        <begin position="378"/>
        <end position="398"/>
    </location>
</feature>
<feature type="compositionally biased region" description="Basic and acidic residues" evidence="4">
    <location>
        <begin position="338"/>
        <end position="351"/>
    </location>
</feature>
<feature type="active site" description="Phosphocysteine intermediate">
    <location>
        <position position="215"/>
    </location>
</feature>
<feature type="binding site">
    <location>
        <position position="181"/>
    </location>
    <ligand>
        <name>substrate</name>
    </ligand>
</feature>
<feature type="binding site" evidence="1">
    <location>
        <begin position="215"/>
        <end position="221"/>
    </location>
    <ligand>
        <name>substrate</name>
    </ligand>
</feature>
<feature type="binding site" evidence="1">
    <location>
        <position position="262"/>
    </location>
    <ligand>
        <name>substrate</name>
    </ligand>
</feature>
<feature type="modified residue" description="N-acetylmethionine" evidence="14">
    <location>
        <position position="1"/>
    </location>
</feature>
<feature type="modified residue" description="Phosphotyrosine" evidence="19">
    <location>
        <position position="20"/>
    </location>
</feature>
<feature type="modified residue" description="Phosphoserine; by PKB/AKT1, CLK1 and CLK2" evidence="5 6 23">
    <location>
        <position position="50"/>
    </location>
</feature>
<feature type="modified residue" description="Phosphotyrosine; by EGFR" evidence="17">
    <location>
        <position position="66"/>
    </location>
</feature>
<feature type="modified residue" description="Cysteine persulfide; alternate" evidence="13">
    <location>
        <position position="215"/>
    </location>
</feature>
<feature type="modified residue" description="Cysteine sulfenic acid (-SOH); alternate" evidence="7 8">
    <location>
        <position position="215"/>
    </location>
</feature>
<feature type="modified residue" description="Cysteine sulfinic acid (-SO2H); alternate" evidence="8">
    <location>
        <position position="215"/>
    </location>
</feature>
<feature type="modified residue" description="S-nitrosocysteine; in reversibly inhibited form" evidence="13">
    <location>
        <position position="215"/>
    </location>
</feature>
<feature type="modified residue" description="Phosphoserine; by CLK1 and CLK2" evidence="5">
    <location>
        <position position="242"/>
    </location>
</feature>
<feature type="modified residue" description="Phosphoserine; by CLK1 and CLK2" evidence="5">
    <location>
        <position position="243"/>
    </location>
</feature>
<feature type="modified residue" description="Phosphoserine" evidence="16 20 21 23">
    <location>
        <position position="352"/>
    </location>
</feature>
<feature type="modified residue" description="Phosphoserine" evidence="23">
    <location>
        <position position="363"/>
    </location>
</feature>
<feature type="modified residue" description="Phosphoserine" evidence="23">
    <location>
        <position position="365"/>
    </location>
</feature>
<feature type="modified residue" description="Phosphothreonine" evidence="23">
    <location>
        <position position="368"/>
    </location>
</feature>
<feature type="modified residue" description="Phosphoserine; by PKC" evidence="16 22 23">
    <location>
        <position position="378"/>
    </location>
</feature>
<feature type="modified residue" description="Phosphoserine; by CDK1" evidence="16 23">
    <location>
        <position position="386"/>
    </location>
</feature>
<feature type="cross-link" description="N,N-(cysteine-1,S-diyl)serine (Cys-Ser); in inhibited form" evidence="7 8">
    <location>
        <begin position="215"/>
        <end position="216"/>
    </location>
</feature>
<feature type="sequence variant" id="VAR_022013" description="In dbSNP:rs16995304.">
    <original>G</original>
    <variation>S</variation>
    <location>
        <position position="381"/>
    </location>
</feature>
<feature type="sequence variant" id="VAR_022014" description="In dbSNP:rs16995309.">
    <original>P</original>
    <variation>L</variation>
    <location>
        <position position="387"/>
    </location>
</feature>
<feature type="mutagenesis site" description="No phosphorylation." evidence="5 6">
    <original>S</original>
    <variation>A</variation>
    <variation>D</variation>
    <location>
        <position position="50"/>
    </location>
</feature>
<feature type="mutagenesis site" description="Substrate-trapping mutant." evidence="13">
    <original>D</original>
    <variation>A</variation>
    <location>
        <position position="181"/>
    </location>
</feature>
<feature type="mutagenesis site" description="Catalytically inactive mutant; abolishes sulfhydration." evidence="13">
    <original>C</original>
    <variation>S</variation>
    <location>
        <position position="215"/>
    </location>
</feature>
<feature type="helix" evidence="32">
    <location>
        <begin position="2"/>
        <end position="13"/>
    </location>
</feature>
<feature type="helix" evidence="32">
    <location>
        <begin position="16"/>
        <end position="26"/>
    </location>
</feature>
<feature type="turn" evidence="32">
    <location>
        <begin position="33"/>
        <end position="36"/>
    </location>
</feature>
<feature type="helix" evidence="32">
    <location>
        <begin position="38"/>
        <end position="43"/>
    </location>
</feature>
<feature type="strand" evidence="27">
    <location>
        <begin position="45"/>
        <end position="48"/>
    </location>
</feature>
<feature type="helix" evidence="32">
    <location>
        <begin position="53"/>
        <end position="55"/>
    </location>
</feature>
<feature type="strand" evidence="32">
    <location>
        <begin position="56"/>
        <end position="58"/>
    </location>
</feature>
<feature type="strand" evidence="32">
    <location>
        <begin position="61"/>
        <end position="63"/>
    </location>
</feature>
<feature type="strand" evidence="32">
    <location>
        <begin position="66"/>
        <end position="74"/>
    </location>
</feature>
<feature type="turn" evidence="32">
    <location>
        <begin position="75"/>
        <end position="78"/>
    </location>
</feature>
<feature type="strand" evidence="32">
    <location>
        <begin position="79"/>
        <end position="84"/>
    </location>
</feature>
<feature type="turn" evidence="32">
    <location>
        <begin position="89"/>
        <end position="91"/>
    </location>
</feature>
<feature type="helix" evidence="32">
    <location>
        <begin position="92"/>
        <end position="102"/>
    </location>
</feature>
<feature type="strand" evidence="32">
    <location>
        <begin position="106"/>
        <end position="109"/>
    </location>
</feature>
<feature type="strand" evidence="32">
    <location>
        <begin position="113"/>
        <end position="115"/>
    </location>
</feature>
<feature type="strand" evidence="25">
    <location>
        <begin position="118"/>
        <end position="121"/>
    </location>
</feature>
<feature type="strand" evidence="26">
    <location>
        <begin position="128"/>
        <end position="130"/>
    </location>
</feature>
<feature type="strand" evidence="32">
    <location>
        <begin position="133"/>
        <end position="135"/>
    </location>
</feature>
<feature type="turn" evidence="32">
    <location>
        <begin position="136"/>
        <end position="139"/>
    </location>
</feature>
<feature type="strand" evidence="32">
    <location>
        <begin position="140"/>
        <end position="149"/>
    </location>
</feature>
<feature type="strand" evidence="32">
    <location>
        <begin position="151"/>
        <end position="162"/>
    </location>
</feature>
<feature type="turn" evidence="32">
    <location>
        <begin position="163"/>
        <end position="165"/>
    </location>
</feature>
<feature type="strand" evidence="32">
    <location>
        <begin position="168"/>
        <end position="176"/>
    </location>
</feature>
<feature type="strand" evidence="32">
    <location>
        <begin position="181"/>
        <end position="183"/>
    </location>
</feature>
<feature type="strand" evidence="32">
    <location>
        <begin position="186"/>
        <end position="188"/>
    </location>
</feature>
<feature type="helix" evidence="32">
    <location>
        <begin position="189"/>
        <end position="200"/>
    </location>
</feature>
<feature type="turn" evidence="31">
    <location>
        <begin position="201"/>
        <end position="204"/>
    </location>
</feature>
<feature type="strand" evidence="32">
    <location>
        <begin position="211"/>
        <end position="220"/>
    </location>
</feature>
<feature type="helix" evidence="32">
    <location>
        <begin position="221"/>
        <end position="235"/>
    </location>
</feature>
<feature type="strand" evidence="32">
    <location>
        <begin position="238"/>
        <end position="240"/>
    </location>
</feature>
<feature type="helix" evidence="32">
    <location>
        <begin position="241"/>
        <end position="243"/>
    </location>
</feature>
<feature type="helix" evidence="32">
    <location>
        <begin position="246"/>
        <end position="253"/>
    </location>
</feature>
<feature type="turn" evidence="32">
    <location>
        <begin position="254"/>
        <end position="256"/>
    </location>
</feature>
<feature type="helix" evidence="32">
    <location>
        <begin position="264"/>
        <end position="279"/>
    </location>
</feature>
<feature type="turn" evidence="29">
    <location>
        <begin position="281"/>
        <end position="283"/>
    </location>
</feature>
<feature type="helix" evidence="33">
    <location>
        <begin position="285"/>
        <end position="287"/>
    </location>
</feature>
<feature type="helix" evidence="28">
    <location>
        <begin position="289"/>
        <end position="291"/>
    </location>
</feature>
<feature type="helix" evidence="24">
    <location>
        <begin position="292"/>
        <end position="295"/>
    </location>
</feature>
<feature type="turn" evidence="30">
    <location>
        <begin position="296"/>
        <end position="298"/>
    </location>
</feature>